<gene>
    <name type="primary">CDK2</name>
    <name type="synonym">CDKN2</name>
</gene>
<evidence type="ECO:0000250" key="1">
    <source>
        <dbReference type="UniProtKB" id="P97377"/>
    </source>
</evidence>
<evidence type="ECO:0000250" key="2">
    <source>
        <dbReference type="UniProtKB" id="Q63699"/>
    </source>
</evidence>
<evidence type="ECO:0000255" key="3">
    <source>
        <dbReference type="PROSITE-ProRule" id="PRU00159"/>
    </source>
</evidence>
<evidence type="ECO:0000269" key="4">
    <source>
    </source>
</evidence>
<evidence type="ECO:0000269" key="5">
    <source>
    </source>
</evidence>
<evidence type="ECO:0000269" key="6">
    <source>
    </source>
</evidence>
<evidence type="ECO:0000269" key="7">
    <source>
    </source>
</evidence>
<evidence type="ECO:0000269" key="8">
    <source>
    </source>
</evidence>
<evidence type="ECO:0000269" key="9">
    <source>
    </source>
</evidence>
<evidence type="ECO:0000269" key="10">
    <source>
    </source>
</evidence>
<evidence type="ECO:0000269" key="11">
    <source>
    </source>
</evidence>
<evidence type="ECO:0000269" key="12">
    <source>
    </source>
</evidence>
<evidence type="ECO:0000269" key="13">
    <source>
    </source>
</evidence>
<evidence type="ECO:0000269" key="14">
    <source>
    </source>
</evidence>
<evidence type="ECO:0000269" key="15">
    <source>
    </source>
</evidence>
<evidence type="ECO:0000269" key="16">
    <source>
    </source>
</evidence>
<evidence type="ECO:0000269" key="17">
    <source>
    </source>
</evidence>
<evidence type="ECO:0000269" key="18">
    <source>
    </source>
</evidence>
<evidence type="ECO:0000269" key="19">
    <source>
    </source>
</evidence>
<evidence type="ECO:0000269" key="20">
    <source>
    </source>
</evidence>
<evidence type="ECO:0000269" key="21">
    <source>
    </source>
</evidence>
<evidence type="ECO:0000269" key="22">
    <source>
    </source>
</evidence>
<evidence type="ECO:0000269" key="23">
    <source>
    </source>
</evidence>
<evidence type="ECO:0000269" key="24">
    <source>
    </source>
</evidence>
<evidence type="ECO:0000269" key="25">
    <source>
    </source>
</evidence>
<evidence type="ECO:0000269" key="26">
    <source>
    </source>
</evidence>
<evidence type="ECO:0000269" key="27">
    <source>
    </source>
</evidence>
<evidence type="ECO:0000269" key="28">
    <source>
    </source>
</evidence>
<evidence type="ECO:0000269" key="29">
    <source>
    </source>
</evidence>
<evidence type="ECO:0000269" key="30">
    <source>
    </source>
</evidence>
<evidence type="ECO:0000269" key="31">
    <source>
    </source>
</evidence>
<evidence type="ECO:0000269" key="32">
    <source>
    </source>
</evidence>
<evidence type="ECO:0000269" key="33">
    <source>
    </source>
</evidence>
<evidence type="ECO:0000269" key="34">
    <source>
    </source>
</evidence>
<evidence type="ECO:0000269" key="35">
    <source>
    </source>
</evidence>
<evidence type="ECO:0000269" key="36">
    <source>
    </source>
</evidence>
<evidence type="ECO:0000269" key="37">
    <source>
    </source>
</evidence>
<evidence type="ECO:0000269" key="38">
    <source>
    </source>
</evidence>
<evidence type="ECO:0000269" key="39">
    <source>
    </source>
</evidence>
<evidence type="ECO:0000269" key="40">
    <source>
    </source>
</evidence>
<evidence type="ECO:0000269" key="41">
    <source>
    </source>
</evidence>
<evidence type="ECO:0000269" key="42">
    <source>
    </source>
</evidence>
<evidence type="ECO:0000269" key="43">
    <source>
    </source>
</evidence>
<evidence type="ECO:0000269" key="44">
    <source>
    </source>
</evidence>
<evidence type="ECO:0000269" key="45">
    <source>
    </source>
</evidence>
<evidence type="ECO:0000269" key="46">
    <source>
    </source>
</evidence>
<evidence type="ECO:0000269" key="47">
    <source>
    </source>
</evidence>
<evidence type="ECO:0000269" key="48">
    <source>
    </source>
</evidence>
<evidence type="ECO:0000269" key="49">
    <source>
    </source>
</evidence>
<evidence type="ECO:0000269" key="50">
    <source>
    </source>
</evidence>
<evidence type="ECO:0000269" key="51">
    <source>
    </source>
</evidence>
<evidence type="ECO:0000269" key="52">
    <source>
    </source>
</evidence>
<evidence type="ECO:0000269" key="53">
    <source>
    </source>
</evidence>
<evidence type="ECO:0000269" key="54">
    <source>
    </source>
</evidence>
<evidence type="ECO:0000269" key="55">
    <source ref="6"/>
</evidence>
<evidence type="ECO:0000303" key="56">
    <source>
    </source>
</evidence>
<evidence type="ECO:0000303" key="57">
    <source>
    </source>
</evidence>
<evidence type="ECO:0000305" key="58"/>
<evidence type="ECO:0000305" key="59">
    <source>
    </source>
</evidence>
<evidence type="ECO:0007744" key="60">
    <source>
        <dbReference type="PDB" id="5UQ1"/>
    </source>
</evidence>
<evidence type="ECO:0007744" key="61">
    <source>
        <dbReference type="PDB" id="5UQ2"/>
    </source>
</evidence>
<evidence type="ECO:0007744" key="62">
    <source>
        <dbReference type="PDB" id="5UQ3"/>
    </source>
</evidence>
<evidence type="ECO:0007744" key="63">
    <source>
    </source>
</evidence>
<evidence type="ECO:0007744" key="64">
    <source>
    </source>
</evidence>
<evidence type="ECO:0007744" key="65">
    <source>
    </source>
</evidence>
<evidence type="ECO:0007744" key="66">
    <source>
    </source>
</evidence>
<evidence type="ECO:0007829" key="67">
    <source>
        <dbReference type="PDB" id="1GY3"/>
    </source>
</evidence>
<evidence type="ECO:0007829" key="68">
    <source>
        <dbReference type="PDB" id="1OKW"/>
    </source>
</evidence>
<evidence type="ECO:0007829" key="69">
    <source>
        <dbReference type="PDB" id="1W98"/>
    </source>
</evidence>
<evidence type="ECO:0007829" key="70">
    <source>
        <dbReference type="PDB" id="2CCH"/>
    </source>
</evidence>
<evidence type="ECO:0007829" key="71">
    <source>
        <dbReference type="PDB" id="3PXQ"/>
    </source>
</evidence>
<evidence type="ECO:0007829" key="72">
    <source>
        <dbReference type="PDB" id="4GCJ"/>
    </source>
</evidence>
<evidence type="ECO:0007829" key="73">
    <source>
        <dbReference type="PDB" id="6Q48"/>
    </source>
</evidence>
<evidence type="ECO:0007829" key="74">
    <source>
        <dbReference type="PDB" id="6Q4D"/>
    </source>
</evidence>
<evidence type="ECO:0007829" key="75">
    <source>
        <dbReference type="PDB" id="6Q4G"/>
    </source>
</evidence>
<evidence type="ECO:0007829" key="76">
    <source>
        <dbReference type="PDB" id="8ERD"/>
    </source>
</evidence>
<comment type="function">
    <text evidence="1 4 5 6 7 8 9 13 20 25 28 32 33 34 35 37 38 39 42 45 46 47 48 56 57">Serine/threonine-protein kinase involved in the control of the cell cycle; essential for meiosis, but dispensable for mitosis (PubMed:10499802, PubMed:10884347, PubMed:10995386, PubMed:10995387, PubMed:11051553, PubMed:11113184, PubMed:12944431, PubMed:15800615, PubMed:17495531, PubMed:19966300, PubMed:20935635, PubMed:21262353, PubMed:21596315, PubMed:28216226, PubMed:28666995). Phosphorylates CABLES1, CTNNB1, CDK2AP2, ERCC6, NBN, USP37, p53/TP53, NPM1, CDK7, RB1, BRCA2, MYC, NPAT, EZH2 (PubMed:10499802, PubMed:10995386, PubMed:10995387, PubMed:11051553, PubMed:11113184, PubMed:12944431, PubMed:15800615, PubMed:19966300, PubMed:20935635, PubMed:21262353, PubMed:21596315, PubMed:28216226). Triggers duplication of centrosomes and DNA (PubMed:11051553). Acts at the G1-S transition to promote the E2F transcriptional program and the initiation of DNA synthesis, and modulates G2 progression; controls the timing of entry into mitosis/meiosis by controlling the subsequent activation of cyclin B/CDK1 by phosphorylation, and coordinates the activation of cyclin B/CDK1 at the centrosome and in the nucleus (PubMed:18372919, PubMed:19238148, PubMed:19561645). Crucial role in orchestrating a fine balance between cellular proliferation, cell death, and DNA repair in embryonic stem cells (ESCs) (PubMed:18372919, PubMed:19238148, PubMed:19561645). Activity of CDK2 is maximal during S phase and G2; activated by interaction with cyclin E during the early stages of DNA synthesis to permit G1-S transition, and subsequently activated by cyclin A2 (cyclin A1 in germ cells) during the late stages of DNA replication to drive the transition from S phase to mitosis, the G2 phase (PubMed:18372919, PubMed:19238148, PubMed:19561645). EZH2 phosphorylation promotes H3K27me3 maintenance and epigenetic gene silencing (PubMed:20935635). Cyclin E/CDK2 prevents oxidative stress-mediated Ras-induced senescence by phosphorylating MYC (PubMed:19966300). Involved in G1-S phase DNA damage checkpoint that prevents cells with damaged DNA from initiating mitosis; regulates homologous recombination-dependent repair by phosphorylating BRCA2, this phosphorylation is low in S phase when recombination is active, but increases as cells progress towards mitosis (PubMed:15800615, PubMed:20195506, PubMed:21319273). In response to DNA damage, double-strand break repair by homologous recombination a reduction of CDK2-mediated BRCA2 phosphorylation (PubMed:15800615). Involved in regulation of telomere repair by mediating phosphorylation of NBN (PubMed:28216226). Phosphorylation of RB1 disturbs its interaction with E2F1 (PubMed:10499802). NPM1 phosphorylation by cyclin E/CDK2 promotes its dissociates from unduplicated centrosomes, thus initiating centrosome duplication (PubMed:11051553). Cyclin E/CDK2-mediated phosphorylation of NPAT at G1-S transition and until prophase stimulates the NPAT-mediated activation of histone gene transcription during S phase (PubMed:10995386, PubMed:10995387). Required for vitamin D-mediated growth inhibition by being itself inactivated (PubMed:20147522). Involved in the nitric oxide- (NO) mediated signaling in a nitrosylation/activation-dependent manner (PubMed:20079829). USP37 is activated by phosphorylation and thus triggers G1-S transition (PubMed:21596315). CTNNB1 phosphorylation regulates insulin internalization (PubMed:21262353). Phosphorylates FOXP3 and negatively regulates its transcriptional activity and protein stability (By similarity). Phosphorylates ERCC6 which is essential for its chromatin remodeling activity at DNA double-strand breaks (PubMed:29203878). Acts as a regulator of the phosphatidylinositol 3-kinase/protein kinase B signal transduction by mediating phosphorylation of the C-terminus of protein kinase B (PKB/AKT1 and PKB/AKT2), promoting its activation (PubMed:24670654).</text>
</comment>
<comment type="catalytic activity">
    <reaction evidence="15 45 46 47 53">
        <text>L-seryl-[protein] + ATP = O-phospho-L-seryl-[protein] + ADP + H(+)</text>
        <dbReference type="Rhea" id="RHEA:17989"/>
        <dbReference type="Rhea" id="RHEA-COMP:9863"/>
        <dbReference type="Rhea" id="RHEA-COMP:11604"/>
        <dbReference type="ChEBI" id="CHEBI:15378"/>
        <dbReference type="ChEBI" id="CHEBI:29999"/>
        <dbReference type="ChEBI" id="CHEBI:30616"/>
        <dbReference type="ChEBI" id="CHEBI:83421"/>
        <dbReference type="ChEBI" id="CHEBI:456216"/>
        <dbReference type="EC" id="2.7.11.22"/>
    </reaction>
</comment>
<comment type="catalytic activity">
    <reaction evidence="15 45 47 53">
        <text>L-threonyl-[protein] + ATP = O-phospho-L-threonyl-[protein] + ADP + H(+)</text>
        <dbReference type="Rhea" id="RHEA:46608"/>
        <dbReference type="Rhea" id="RHEA-COMP:11060"/>
        <dbReference type="Rhea" id="RHEA-COMP:11605"/>
        <dbReference type="ChEBI" id="CHEBI:15378"/>
        <dbReference type="ChEBI" id="CHEBI:30013"/>
        <dbReference type="ChEBI" id="CHEBI:30616"/>
        <dbReference type="ChEBI" id="CHEBI:61977"/>
        <dbReference type="ChEBI" id="CHEBI:456216"/>
        <dbReference type="EC" id="2.7.11.22"/>
    </reaction>
</comment>
<comment type="cofactor">
    <cofactor evidence="41">
        <name>Mg(2+)</name>
        <dbReference type="ChEBI" id="CHEBI:18420"/>
    </cofactor>
    <text evidence="41">Binds 2 Mg(2+) ions.</text>
</comment>
<comment type="activity regulation">
    <text evidence="15 34 47 53 54">Phosphorylation at Thr-14 or Tyr-15 inactivates the enzyme, while phosphorylation at Thr-160 activates it (PubMed:1396589). Inhibited by 1,25-dihydroxyvitamin D(3) (1,25-(OH)(2)D(3)), AG-024322, N-(4-Piperidinyl)-4-(2,6-dichlorobenzoylamino)-1H-pyrazole-3-carboxamide (AT7519), R547 (Ro-4584820), purine, pyrimidine and pyridine derivatives, 2-aminopyrimidines, paullones, thiazo derivatives, macrocyclic quinoxalin-2-one, pyrazolo[1,5-a]-1,3,5-triazine, pyrazolo[1,5-a]pyrimidine, 2-(1-ethyl-2-hydroxyethylamino)-6-benzylamino-9-isopropylpurine (roscovitine, seliciclib and CYC202), SNS-032 (BMS-387032), triazolo[1,5-a]pyrimidines, staurosporine and olomoucine. Stimulated by MYC. Inactivated by CDKN1A (p21).</text>
</comment>
<comment type="subunit">
    <text evidence="1 2 4 5 10 11 12 14 17 18 19 21 22 24 25 26 27 29 30 31 38 40 41 43 44 45 47 49 50 51 52 54">Found in a complex with CABLES1, CCNA1 and CCNE1. Interacts with CABLES1 (By similarity). Interacts with UHRF2. Part of a complex consisting of UHRF2, CDK2 and CCNE1. Interacts with the Speedy/Ringo proteins SPDYA and SPDYC (PubMed:15611625). Interaction with SPDYA promotes kinase activation via a conformation change that alleviates obstruction of the substrate-binding cleft by the T-loop (PubMed:28666995). Found in a complex with both SPDYA and CDKN1B/KIP1 (PubMed:12972555, PubMed:28666995). Binds to RB1 and CDK7. Binding to CDKN1A (p21) leads to CDK2/cyclin E inactivation at the G1-S phase DNA damage checkpoint, thereby arresting cells at the G1-S transition during DNA repair. Associated with PTPN6 and beta-catenin/CTNNB1. Interacts with CACUL1. May interact with CEP63. Interacts with ANKRD17. Interacts with CEBPA (when phosphorylated) (PubMed:15107404). Forms a ternary complex with CCNA2 and CDKN1B; CDKN1B inhibits the kinase activity of CDK2 through conformational rearrangements (PubMed:24670654, PubMed:8684460). Interacts with cyclins A, B1, B3, D, or E (PubMed:10499802, PubMed:10884347, PubMed:12185076, PubMed:23781148). Interacts with CDK2AP2 (PubMed:23781148).</text>
</comment>
<comment type="interaction">
    <interactant intactId="EBI-375096">
        <id>P24941</id>
    </interactant>
    <interactant intactId="EBI-457097">
        <id>P20248</id>
        <label>CCNA2</label>
    </interactant>
    <organismsDiffer>false</organismsDiffer>
    <experiments>33</experiments>
</comment>
<comment type="interaction">
    <interactant intactId="EBI-375096">
        <id>P24941</id>
    </interactant>
    <interactant intactId="EBI-375024">
        <id>O95067</id>
        <label>CCNB2</label>
    </interactant>
    <organismsDiffer>false</organismsDiffer>
    <experiments>6</experiments>
</comment>
<comment type="interaction">
    <interactant intactId="EBI-375096">
        <id>P24941</id>
    </interactant>
    <interactant intactId="EBI-375001">
        <id>P24385</id>
        <label>CCND1</label>
    </interactant>
    <organismsDiffer>false</organismsDiffer>
    <experiments>8</experiments>
</comment>
<comment type="interaction">
    <interactant intactId="EBI-375096">
        <id>P24941</id>
    </interactant>
    <interactant intactId="EBI-748789">
        <id>P30279</id>
        <label>CCND2</label>
    </interactant>
    <organismsDiffer>false</organismsDiffer>
    <experiments>4</experiments>
</comment>
<comment type="interaction">
    <interactant intactId="EBI-375096">
        <id>P24941</id>
    </interactant>
    <interactant intactId="EBI-519526">
        <id>P24864</id>
        <label>CCNE1</label>
    </interactant>
    <organismsDiffer>false</organismsDiffer>
    <experiments>24</experiments>
</comment>
<comment type="interaction">
    <interactant intactId="EBI-375096">
        <id>P24941</id>
    </interactant>
    <interactant intactId="EBI-375033">
        <id>O96020</id>
        <label>CCNE2</label>
    </interactant>
    <organismsDiffer>false</organismsDiffer>
    <experiments>15</experiments>
</comment>
<comment type="interaction">
    <interactant intactId="EBI-375096">
        <id>P24941</id>
    </interactant>
    <interactant intactId="EBI-741406">
        <id>P51946</id>
        <label>CCNH</label>
    </interactant>
    <organismsDiffer>false</organismsDiffer>
    <experiments>6</experiments>
</comment>
<comment type="interaction">
    <interactant intactId="EBI-375096">
        <id>P24941</id>
    </interactant>
    <interactant intactId="EBI-1245958">
        <id>P50613</id>
        <label>CDK7</label>
    </interactant>
    <organismsDiffer>false</organismsDiffer>
    <experiments>3</experiments>
</comment>
<comment type="interaction">
    <interactant intactId="EBI-375096">
        <id>P24941</id>
    </interactant>
    <interactant intactId="EBI-375077">
        <id>P38936</id>
        <label>CDKN1A</label>
    </interactant>
    <organismsDiffer>false</organismsDiffer>
    <experiments>31</experiments>
</comment>
<comment type="interaction">
    <interactant intactId="EBI-375096">
        <id>P24941</id>
    </interactant>
    <interactant intactId="EBI-519280">
        <id>P46527</id>
        <label>CDKN1B</label>
    </interactant>
    <organismsDiffer>false</organismsDiffer>
    <experiments>31</experiments>
</comment>
<comment type="interaction">
    <interactant intactId="EBI-375096">
        <id>P24941</id>
    </interactant>
    <interactant intactId="EBI-1031527">
        <id>Q16667</id>
        <label>CDKN3</label>
    </interactant>
    <organismsDiffer>false</organismsDiffer>
    <experiments>9</experiments>
</comment>
<comment type="interaction">
    <interactant intactId="EBI-375096">
        <id>P24941</id>
    </interactant>
    <interactant intactId="EBI-456371">
        <id>P61024</id>
        <label>CKS1B</label>
    </interactant>
    <organismsDiffer>false</organismsDiffer>
    <experiments>27</experiments>
</comment>
<comment type="interaction">
    <interactant intactId="EBI-375096">
        <id>P24941</id>
    </interactant>
    <interactant intactId="EBI-447295">
        <id>Q09472</id>
        <label>EP300</label>
    </interactant>
    <organismsDiffer>false</organismsDiffer>
    <experiments>7</experiments>
</comment>
<comment type="interaction">
    <interactant intactId="EBI-375096">
        <id>P24941</id>
    </interactant>
    <interactant intactId="EBI-6502391">
        <id>Q969H0-4</id>
        <label>FBXW7</label>
    </interactant>
    <organismsDiffer>false</organismsDiffer>
    <experiments>2</experiments>
</comment>
<comment type="interaction">
    <interactant intactId="EBI-375096">
        <id>P24941</id>
    </interactant>
    <interactant intactId="EBI-348399">
        <id>P22607</id>
        <label>FGFR3</label>
    </interactant>
    <organismsDiffer>false</organismsDiffer>
    <experiments>3</experiments>
</comment>
<comment type="interaction">
    <interactant intactId="EBI-375096">
        <id>P24941</id>
    </interactant>
    <interactant intactId="EBI-8285963">
        <id>Q14957</id>
        <label>GRIN2C</label>
    </interactant>
    <organismsDiffer>false</organismsDiffer>
    <experiments>3</experiments>
</comment>
<comment type="interaction">
    <interactant intactId="EBI-375096">
        <id>P24941</id>
    </interactant>
    <interactant intactId="EBI-351506">
        <id>P06396</id>
        <label>GSN</label>
    </interactant>
    <organismsDiffer>false</organismsDiffer>
    <experiments>3</experiments>
</comment>
<comment type="interaction">
    <interactant intactId="EBI-375096">
        <id>P24941</id>
    </interactant>
    <interactant intactId="EBI-350145">
        <id>P01112</id>
        <label>HRAS</label>
    </interactant>
    <organismsDiffer>false</organismsDiffer>
    <experiments>3</experiments>
</comment>
<comment type="interaction">
    <interactant intactId="EBI-375096">
        <id>P24941</id>
    </interactant>
    <interactant intactId="EBI-81279">
        <id>Q9Y6K9</id>
        <label>IKBKG</label>
    </interactant>
    <organismsDiffer>false</organismsDiffer>
    <experiments>4</experiments>
</comment>
<comment type="interaction">
    <interactant intactId="EBI-375096">
        <id>P24941</id>
    </interactant>
    <interactant intactId="EBI-444209">
        <id>O95835</id>
        <label>LATS1</label>
    </interactant>
    <organismsDiffer>false</organismsDiffer>
    <experiments>4</experiments>
</comment>
<comment type="interaction">
    <interactant intactId="EBI-375096">
        <id>P24941</id>
    </interactant>
    <interactant intactId="EBI-1383794">
        <id>Q8TD08</id>
        <label>MAPK15</label>
    </interactant>
    <organismsDiffer>false</organismsDiffer>
    <experiments>6</experiments>
</comment>
<comment type="interaction">
    <interactant intactId="EBI-375096">
        <id>P24941</id>
    </interactant>
    <interactant intactId="EBI-491274">
        <id>P06400</id>
        <label>RB1</label>
    </interactant>
    <organismsDiffer>false</organismsDiffer>
    <experiments>3</experiments>
</comment>
<comment type="interaction">
    <interactant intactId="EBI-375096">
        <id>P24941</id>
    </interactant>
    <interactant intactId="EBI-308519">
        <id>Q9BY12</id>
        <label>SCAPER</label>
    </interactant>
    <organismsDiffer>false</organismsDiffer>
    <experiments>3</experiments>
</comment>
<comment type="interaction">
    <interactant intactId="EBI-375096">
        <id>P24941</id>
    </interactant>
    <interactant intactId="EBI-2513111">
        <id>Q9UQR0</id>
        <label>SCML2</label>
    </interactant>
    <organismsDiffer>false</organismsDiffer>
    <experiments>3</experiments>
</comment>
<comment type="interaction">
    <interactant intactId="EBI-375096">
        <id>P24941</id>
    </interactant>
    <interactant intactId="EBI-16087037">
        <id>Q9UQR0-1</id>
        <label>SCML2</label>
    </interactant>
    <organismsDiffer>false</organismsDiffer>
    <experiments>7</experiments>
</comment>
<comment type="interaction">
    <interactant intactId="EBI-375096">
        <id>P24941</id>
    </interactant>
    <interactant intactId="EBI-2681162">
        <id>Q9UBI4</id>
        <label>STOML1</label>
    </interactant>
    <organismsDiffer>false</organismsDiffer>
    <experiments>2</experiments>
</comment>
<comment type="interaction">
    <interactant intactId="EBI-375096">
        <id>P24941</id>
    </interactant>
    <interactant intactId="EBI-625304">
        <id>Q96PU4</id>
        <label>UHRF2</label>
    </interactant>
    <organismsDiffer>false</organismsDiffer>
    <experiments>5</experiments>
</comment>
<comment type="interaction">
    <interactant intactId="EBI-375096">
        <id>P24941</id>
    </interactant>
    <interactant intactId="EBI-15688654">
        <id>P30274</id>
        <label>CCNA2</label>
    </interactant>
    <organismsDiffer>true</organismsDiffer>
    <experiments>2</experiments>
</comment>
<comment type="interaction">
    <interactant intactId="EBI-375096">
        <id>P24941</id>
    </interactant>
    <interactant intactId="EBI-846980">
        <id>P51943</id>
        <label>Ccna2</label>
    </interactant>
    <organismsDiffer>true</organismsDiffer>
    <experiments>2</experiments>
</comment>
<comment type="interaction">
    <interactant intactId="EBI-375096">
        <id>P24941</id>
    </interactant>
    <interactant intactId="EBI-866453">
        <id>P03129</id>
        <label>E7</label>
    </interactant>
    <organismsDiffer>true</organismsDiffer>
    <experiments>2</experiments>
</comment>
<comment type="interaction">
    <interactant intactId="EBI-375096">
        <id>P24941</id>
    </interactant>
    <interactant intactId="EBI-8064290">
        <id>Q08619</id>
        <label>Ifi205b</label>
    </interactant>
    <organismsDiffer>true</organismsDiffer>
    <experiments>2</experiments>
</comment>
<comment type="subcellular location">
    <subcellularLocation>
        <location>Cytoplasm</location>
        <location>Cytoskeleton</location>
        <location>Microtubule organizing center</location>
        <location>Centrosome</location>
    </subcellularLocation>
    <subcellularLocation>
        <location>Nucleus</location>
        <location>Cajal body</location>
    </subcellularLocation>
    <subcellularLocation>
        <location>Cytoplasm</location>
    </subcellularLocation>
    <subcellularLocation>
        <location>Endosome</location>
    </subcellularLocation>
    <text>Localized at the centrosomes in late G2 phase after separation of the centrosomes but before the start of prophase. Nuclear-cytoplasmic trafficking is mediated during the inhibition by 1,25-(OH)(2)D(3).</text>
</comment>
<comment type="alternative products">
    <event type="alternative splicing"/>
    <isoform>
        <id>P24941-1</id>
        <name>1</name>
        <sequence type="displayed"/>
    </isoform>
    <isoform>
        <id>P24941-2</id>
        <name>2</name>
        <name>CDK2deltaT</name>
        <sequence type="described" ref="VSP_041998"/>
    </isoform>
</comment>
<comment type="induction">
    <text>Induced transiently by TGFB1 at an early phase of TGFB1-mediated apoptosis.</text>
</comment>
<comment type="PTM">
    <text evidence="9 15 16 21 22 24 26 34 36 41 44 59">Phosphorylated at Thr-160 by CDK7 in a CAK complex (PubMed:28666995). Phosphorylation at Thr-160 promotes kinase activity, whereas phosphorylation at Tyr-15 by WEE1 reduces slightly kinase activity. Phosphorylated on Thr-14 and Tyr-15 during S and G2 phases before being dephosphorylated by CDC25A.</text>
</comment>
<comment type="PTM">
    <text evidence="33">Nitrosylated after treatment with nitric oxide (DETA-NO).</text>
</comment>
<comment type="similarity">
    <text evidence="58">Belongs to the protein kinase superfamily. CMGC Ser/Thr protein kinase family. CDC2/CDKX subfamily.</text>
</comment>
<proteinExistence type="evidence at protein level"/>
<sequence length="298" mass="33930">MENFQKVEKIGEGTYGVVYKARNKLTGEVVALKKIRLDTETEGVPSTAIREISLLKELNHPNIVKLLDVIHTENKLYLVFEFLHQDLKKFMDASALTGIPLPLIKSYLFQLLQGLAFCHSHRVLHRDLKPQNLLINTEGAIKLADFGLARAFGVPVRTYTHEVVTLWYRAPEILLGCKYYSTAVDIWSLGCIFAEMVTRRALFPGDSEIDQLFRIFRTLGTPDEVVWPGVTSMPDYKPSFPKWARQDFSKVVPPLDEDGRSLLSQMLHYDPNKRISAKAALAHPFFQDVTKPVPHLRL</sequence>
<reference key="1">
    <citation type="journal article" date="1991" name="EMBO J.">
        <title>A new human p34 protein kinase, CDK2, identified by complementation of a cdc28 mutation in Saccharomyces cerevisiae, is a homolog of Xenopus Eg1.</title>
        <authorList>
            <person name="Elledge S.J."/>
            <person name="Spottswood M.R."/>
        </authorList>
    </citation>
    <scope>NUCLEOTIDE SEQUENCE [MRNA] (ISOFORM 1)</scope>
</reference>
<reference key="2">
    <citation type="journal article" date="1991" name="Nature">
        <title>Isolation of the human cdk2 gene that encodes the cyclin A- and adenovirus E1A-associated p33 kinase.</title>
        <authorList>
            <person name="Tsai L.-H."/>
            <person name="Harlow E."/>
            <person name="Meyerson M."/>
        </authorList>
    </citation>
    <scope>NUCLEOTIDE SEQUENCE [MRNA] (ISOFORM 1)</scope>
</reference>
<reference key="3">
    <citation type="journal article" date="1991" name="Proc. Natl. Acad. Sci. U.S.A.">
        <title>Cloning of a human cDNA encoding a CDC2-related kinase by complementation of a budding yeast cdc28 mutation.</title>
        <authorList>
            <person name="Ninomiya-Tsuji J."/>
            <person name="Nomoto S."/>
            <person name="Yasuda H."/>
            <person name="Reed S.I."/>
            <person name="Matsumoto K."/>
        </authorList>
    </citation>
    <scope>NUCLEOTIDE SEQUENCE [MRNA] (ISOFORM 1)</scope>
</reference>
<reference key="4">
    <citation type="submission" date="1998-03" db="EMBL/GenBank/DDBJ databases">
        <title>Sequence of deletion type cdk2 variant in human breast cancer.</title>
        <authorList>
            <person name="Nishikawa T."/>
            <person name="Ohta T."/>
            <person name="Fukuda M."/>
            <person name="Ogata H."/>
            <person name="Okamoto K."/>
            <person name="Isohashi F."/>
            <person name="Arima K."/>
            <person name="Yamaguchi S."/>
        </authorList>
    </citation>
    <scope>NUCLEOTIDE SEQUENCE (ISOFORM 2)</scope>
</reference>
<reference key="5">
    <citation type="submission" date="2003-05" db="EMBL/GenBank/DDBJ databases">
        <title>Cloning of human full-length CDSs in BD Creator(TM) system donor vector.</title>
        <authorList>
            <person name="Kalnine N."/>
            <person name="Chen X."/>
            <person name="Rolfs A."/>
            <person name="Halleck A."/>
            <person name="Hines L."/>
            <person name="Eisenstein S."/>
            <person name="Koundinya M."/>
            <person name="Raphael J."/>
            <person name="Moreira D."/>
            <person name="Kelley T."/>
            <person name="LaBaer J."/>
            <person name="Lin Y."/>
            <person name="Phelan M."/>
            <person name="Farmer A."/>
        </authorList>
    </citation>
    <scope>NUCLEOTIDE SEQUENCE [LARGE SCALE MRNA] (ISOFORM 1)</scope>
</reference>
<reference key="6">
    <citation type="submission" date="2002-05" db="EMBL/GenBank/DDBJ databases">
        <authorList>
            <consortium name="NIEHS SNPs program"/>
        </authorList>
    </citation>
    <scope>NUCLEOTIDE SEQUENCE [GENOMIC DNA]</scope>
    <scope>VARIANT SER-290</scope>
</reference>
<reference key="7">
    <citation type="journal article" date="2004" name="Nat. Genet.">
        <title>Complete sequencing and characterization of 21,243 full-length human cDNAs.</title>
        <authorList>
            <person name="Ota T."/>
            <person name="Suzuki Y."/>
            <person name="Nishikawa T."/>
            <person name="Otsuki T."/>
            <person name="Sugiyama T."/>
            <person name="Irie R."/>
            <person name="Wakamatsu A."/>
            <person name="Hayashi K."/>
            <person name="Sato H."/>
            <person name="Nagai K."/>
            <person name="Kimura K."/>
            <person name="Makita H."/>
            <person name="Sekine M."/>
            <person name="Obayashi M."/>
            <person name="Nishi T."/>
            <person name="Shibahara T."/>
            <person name="Tanaka T."/>
            <person name="Ishii S."/>
            <person name="Yamamoto J."/>
            <person name="Saito K."/>
            <person name="Kawai Y."/>
            <person name="Isono Y."/>
            <person name="Nakamura Y."/>
            <person name="Nagahari K."/>
            <person name="Murakami K."/>
            <person name="Yasuda T."/>
            <person name="Iwayanagi T."/>
            <person name="Wagatsuma M."/>
            <person name="Shiratori A."/>
            <person name="Sudo H."/>
            <person name="Hosoiri T."/>
            <person name="Kaku Y."/>
            <person name="Kodaira H."/>
            <person name="Kondo H."/>
            <person name="Sugawara M."/>
            <person name="Takahashi M."/>
            <person name="Kanda K."/>
            <person name="Yokoi T."/>
            <person name="Furuya T."/>
            <person name="Kikkawa E."/>
            <person name="Omura Y."/>
            <person name="Abe K."/>
            <person name="Kamihara K."/>
            <person name="Katsuta N."/>
            <person name="Sato K."/>
            <person name="Tanikawa M."/>
            <person name="Yamazaki M."/>
            <person name="Ninomiya K."/>
            <person name="Ishibashi T."/>
            <person name="Yamashita H."/>
            <person name="Murakawa K."/>
            <person name="Fujimori K."/>
            <person name="Tanai H."/>
            <person name="Kimata M."/>
            <person name="Watanabe M."/>
            <person name="Hiraoka S."/>
            <person name="Chiba Y."/>
            <person name="Ishida S."/>
            <person name="Ono Y."/>
            <person name="Takiguchi S."/>
            <person name="Watanabe S."/>
            <person name="Yosida M."/>
            <person name="Hotuta T."/>
            <person name="Kusano J."/>
            <person name="Kanehori K."/>
            <person name="Takahashi-Fujii A."/>
            <person name="Hara H."/>
            <person name="Tanase T.-O."/>
            <person name="Nomura Y."/>
            <person name="Togiya S."/>
            <person name="Komai F."/>
            <person name="Hara R."/>
            <person name="Takeuchi K."/>
            <person name="Arita M."/>
            <person name="Imose N."/>
            <person name="Musashino K."/>
            <person name="Yuuki H."/>
            <person name="Oshima A."/>
            <person name="Sasaki N."/>
            <person name="Aotsuka S."/>
            <person name="Yoshikawa Y."/>
            <person name="Matsunawa H."/>
            <person name="Ichihara T."/>
            <person name="Shiohata N."/>
            <person name="Sano S."/>
            <person name="Moriya S."/>
            <person name="Momiyama H."/>
            <person name="Satoh N."/>
            <person name="Takami S."/>
            <person name="Terashima Y."/>
            <person name="Suzuki O."/>
            <person name="Nakagawa S."/>
            <person name="Senoh A."/>
            <person name="Mizoguchi H."/>
            <person name="Goto Y."/>
            <person name="Shimizu F."/>
            <person name="Wakebe H."/>
            <person name="Hishigaki H."/>
            <person name="Watanabe T."/>
            <person name="Sugiyama A."/>
            <person name="Takemoto M."/>
            <person name="Kawakami B."/>
            <person name="Yamazaki M."/>
            <person name="Watanabe K."/>
            <person name="Kumagai A."/>
            <person name="Itakura S."/>
            <person name="Fukuzumi Y."/>
            <person name="Fujimori Y."/>
            <person name="Komiyama M."/>
            <person name="Tashiro H."/>
            <person name="Tanigami A."/>
            <person name="Fujiwara T."/>
            <person name="Ono T."/>
            <person name="Yamada K."/>
            <person name="Fujii Y."/>
            <person name="Ozaki K."/>
            <person name="Hirao M."/>
            <person name="Ohmori Y."/>
            <person name="Kawabata A."/>
            <person name="Hikiji T."/>
            <person name="Kobatake N."/>
            <person name="Inagaki H."/>
            <person name="Ikema Y."/>
            <person name="Okamoto S."/>
            <person name="Okitani R."/>
            <person name="Kawakami T."/>
            <person name="Noguchi S."/>
            <person name="Itoh T."/>
            <person name="Shigeta K."/>
            <person name="Senba T."/>
            <person name="Matsumura K."/>
            <person name="Nakajima Y."/>
            <person name="Mizuno T."/>
            <person name="Morinaga M."/>
            <person name="Sasaki M."/>
            <person name="Togashi T."/>
            <person name="Oyama M."/>
            <person name="Hata H."/>
            <person name="Watanabe M."/>
            <person name="Komatsu T."/>
            <person name="Mizushima-Sugano J."/>
            <person name="Satoh T."/>
            <person name="Shirai Y."/>
            <person name="Takahashi Y."/>
            <person name="Nakagawa K."/>
            <person name="Okumura K."/>
            <person name="Nagase T."/>
            <person name="Nomura N."/>
            <person name="Kikuchi H."/>
            <person name="Masuho Y."/>
            <person name="Yamashita R."/>
            <person name="Nakai K."/>
            <person name="Yada T."/>
            <person name="Nakamura Y."/>
            <person name="Ohara O."/>
            <person name="Isogai T."/>
            <person name="Sugano S."/>
        </authorList>
    </citation>
    <scope>NUCLEOTIDE SEQUENCE [LARGE SCALE MRNA] (ISOFORM 1)</scope>
</reference>
<reference key="8">
    <citation type="journal article" date="2006" name="Nature">
        <title>The finished DNA sequence of human chromosome 12.</title>
        <authorList>
            <person name="Scherer S.E."/>
            <person name="Muzny D.M."/>
            <person name="Buhay C.J."/>
            <person name="Chen R."/>
            <person name="Cree A."/>
            <person name="Ding Y."/>
            <person name="Dugan-Rocha S."/>
            <person name="Gill R."/>
            <person name="Gunaratne P."/>
            <person name="Harris R.A."/>
            <person name="Hawes A.C."/>
            <person name="Hernandez J."/>
            <person name="Hodgson A.V."/>
            <person name="Hume J."/>
            <person name="Jackson A."/>
            <person name="Khan Z.M."/>
            <person name="Kovar-Smith C."/>
            <person name="Lewis L.R."/>
            <person name="Lozado R.J."/>
            <person name="Metzker M.L."/>
            <person name="Milosavljevic A."/>
            <person name="Miner G.R."/>
            <person name="Montgomery K.T."/>
            <person name="Morgan M.B."/>
            <person name="Nazareth L.V."/>
            <person name="Scott G."/>
            <person name="Sodergren E."/>
            <person name="Song X.-Z."/>
            <person name="Steffen D."/>
            <person name="Lovering R.C."/>
            <person name="Wheeler D.A."/>
            <person name="Worley K.C."/>
            <person name="Yuan Y."/>
            <person name="Zhang Z."/>
            <person name="Adams C.Q."/>
            <person name="Ansari-Lari M.A."/>
            <person name="Ayele M."/>
            <person name="Brown M.J."/>
            <person name="Chen G."/>
            <person name="Chen Z."/>
            <person name="Clerc-Blankenburg K.P."/>
            <person name="Davis C."/>
            <person name="Delgado O."/>
            <person name="Dinh H.H."/>
            <person name="Draper H."/>
            <person name="Gonzalez-Garay M.L."/>
            <person name="Havlak P."/>
            <person name="Jackson L.R."/>
            <person name="Jacob L.S."/>
            <person name="Kelly S.H."/>
            <person name="Li L."/>
            <person name="Li Z."/>
            <person name="Liu J."/>
            <person name="Liu W."/>
            <person name="Lu J."/>
            <person name="Maheshwari M."/>
            <person name="Nguyen B.-V."/>
            <person name="Okwuonu G.O."/>
            <person name="Pasternak S."/>
            <person name="Perez L.M."/>
            <person name="Plopper F.J.H."/>
            <person name="Santibanez J."/>
            <person name="Shen H."/>
            <person name="Tabor P.E."/>
            <person name="Verduzco D."/>
            <person name="Waldron L."/>
            <person name="Wang Q."/>
            <person name="Williams G.A."/>
            <person name="Zhang J."/>
            <person name="Zhou J."/>
            <person name="Allen C.C."/>
            <person name="Amin A.G."/>
            <person name="Anyalebechi V."/>
            <person name="Bailey M."/>
            <person name="Barbaria J.A."/>
            <person name="Bimage K.E."/>
            <person name="Bryant N.P."/>
            <person name="Burch P.E."/>
            <person name="Burkett C.E."/>
            <person name="Burrell K.L."/>
            <person name="Calderon E."/>
            <person name="Cardenas V."/>
            <person name="Carter K."/>
            <person name="Casias K."/>
            <person name="Cavazos I."/>
            <person name="Cavazos S.R."/>
            <person name="Ceasar H."/>
            <person name="Chacko J."/>
            <person name="Chan S.N."/>
            <person name="Chavez D."/>
            <person name="Christopoulos C."/>
            <person name="Chu J."/>
            <person name="Cockrell R."/>
            <person name="Cox C.D."/>
            <person name="Dang M."/>
            <person name="Dathorne S.R."/>
            <person name="David R."/>
            <person name="Davis C.M."/>
            <person name="Davy-Carroll L."/>
            <person name="Deshazo D.R."/>
            <person name="Donlin J.E."/>
            <person name="D'Souza L."/>
            <person name="Eaves K.A."/>
            <person name="Egan A."/>
            <person name="Emery-Cohen A.J."/>
            <person name="Escotto M."/>
            <person name="Flagg N."/>
            <person name="Forbes L.D."/>
            <person name="Gabisi A.M."/>
            <person name="Garza M."/>
            <person name="Hamilton C."/>
            <person name="Henderson N."/>
            <person name="Hernandez O."/>
            <person name="Hines S."/>
            <person name="Hogues M.E."/>
            <person name="Huang M."/>
            <person name="Idlebird D.G."/>
            <person name="Johnson R."/>
            <person name="Jolivet A."/>
            <person name="Jones S."/>
            <person name="Kagan R."/>
            <person name="King L.M."/>
            <person name="Leal B."/>
            <person name="Lebow H."/>
            <person name="Lee S."/>
            <person name="LeVan J.M."/>
            <person name="Lewis L.C."/>
            <person name="London P."/>
            <person name="Lorensuhewa L.M."/>
            <person name="Loulseged H."/>
            <person name="Lovett D.A."/>
            <person name="Lucier A."/>
            <person name="Lucier R.L."/>
            <person name="Ma J."/>
            <person name="Madu R.C."/>
            <person name="Mapua P."/>
            <person name="Martindale A.D."/>
            <person name="Martinez E."/>
            <person name="Massey E."/>
            <person name="Mawhiney S."/>
            <person name="Meador M.G."/>
            <person name="Mendez S."/>
            <person name="Mercado C."/>
            <person name="Mercado I.C."/>
            <person name="Merritt C.E."/>
            <person name="Miner Z.L."/>
            <person name="Minja E."/>
            <person name="Mitchell T."/>
            <person name="Mohabbat F."/>
            <person name="Mohabbat K."/>
            <person name="Montgomery B."/>
            <person name="Moore N."/>
            <person name="Morris S."/>
            <person name="Munidasa M."/>
            <person name="Ngo R.N."/>
            <person name="Nguyen N.B."/>
            <person name="Nickerson E."/>
            <person name="Nwaokelemeh O.O."/>
            <person name="Nwokenkwo S."/>
            <person name="Obregon M."/>
            <person name="Oguh M."/>
            <person name="Oragunye N."/>
            <person name="Oviedo R.J."/>
            <person name="Parish B.J."/>
            <person name="Parker D.N."/>
            <person name="Parrish J."/>
            <person name="Parks K.L."/>
            <person name="Paul H.A."/>
            <person name="Payton B.A."/>
            <person name="Perez A."/>
            <person name="Perrin W."/>
            <person name="Pickens A."/>
            <person name="Primus E.L."/>
            <person name="Pu L.-L."/>
            <person name="Puazo M."/>
            <person name="Quiles M.M."/>
            <person name="Quiroz J.B."/>
            <person name="Rabata D."/>
            <person name="Reeves K."/>
            <person name="Ruiz S.J."/>
            <person name="Shao H."/>
            <person name="Sisson I."/>
            <person name="Sonaike T."/>
            <person name="Sorelle R.P."/>
            <person name="Sutton A.E."/>
            <person name="Svatek A.F."/>
            <person name="Svetz L.A."/>
            <person name="Tamerisa K.S."/>
            <person name="Taylor T.R."/>
            <person name="Teague B."/>
            <person name="Thomas N."/>
            <person name="Thorn R.D."/>
            <person name="Trejos Z.Y."/>
            <person name="Trevino B.K."/>
            <person name="Ukegbu O.N."/>
            <person name="Urban J.B."/>
            <person name="Vasquez L.I."/>
            <person name="Vera V.A."/>
            <person name="Villasana D.M."/>
            <person name="Wang L."/>
            <person name="Ward-Moore S."/>
            <person name="Warren J.T."/>
            <person name="Wei X."/>
            <person name="White F."/>
            <person name="Williamson A.L."/>
            <person name="Wleczyk R."/>
            <person name="Wooden H.S."/>
            <person name="Wooden S.H."/>
            <person name="Yen J."/>
            <person name="Yoon L."/>
            <person name="Yoon V."/>
            <person name="Zorrilla S.E."/>
            <person name="Nelson D."/>
            <person name="Kucherlapati R."/>
            <person name="Weinstock G."/>
            <person name="Gibbs R.A."/>
        </authorList>
    </citation>
    <scope>NUCLEOTIDE SEQUENCE [LARGE SCALE GENOMIC DNA]</scope>
</reference>
<reference key="9">
    <citation type="submission" date="2005-07" db="EMBL/GenBank/DDBJ databases">
        <authorList>
            <person name="Mural R.J."/>
            <person name="Istrail S."/>
            <person name="Sutton G.G."/>
            <person name="Florea L."/>
            <person name="Halpern A.L."/>
            <person name="Mobarry C.M."/>
            <person name="Lippert R."/>
            <person name="Walenz B."/>
            <person name="Shatkay H."/>
            <person name="Dew I."/>
            <person name="Miller J.R."/>
            <person name="Flanigan M.J."/>
            <person name="Edwards N.J."/>
            <person name="Bolanos R."/>
            <person name="Fasulo D."/>
            <person name="Halldorsson B.V."/>
            <person name="Hannenhalli S."/>
            <person name="Turner R."/>
            <person name="Yooseph S."/>
            <person name="Lu F."/>
            <person name="Nusskern D.R."/>
            <person name="Shue B.C."/>
            <person name="Zheng X.H."/>
            <person name="Zhong F."/>
            <person name="Delcher A.L."/>
            <person name="Huson D.H."/>
            <person name="Kravitz S.A."/>
            <person name="Mouchard L."/>
            <person name="Reinert K."/>
            <person name="Remington K.A."/>
            <person name="Clark A.G."/>
            <person name="Waterman M.S."/>
            <person name="Eichler E.E."/>
            <person name="Adams M.D."/>
            <person name="Hunkapiller M.W."/>
            <person name="Myers E.W."/>
            <person name="Venter J.C."/>
        </authorList>
    </citation>
    <scope>NUCLEOTIDE SEQUENCE [LARGE SCALE GENOMIC DNA]</scope>
</reference>
<reference key="10">
    <citation type="journal article" date="2004" name="Genome Res.">
        <title>The status, quality, and expansion of the NIH full-length cDNA project: the Mammalian Gene Collection (MGC).</title>
        <authorList>
            <consortium name="The MGC Project Team"/>
        </authorList>
    </citation>
    <scope>NUCLEOTIDE SEQUENCE [LARGE SCALE MRNA] (ISOFORM 1)</scope>
    <source>
        <tissue>Placenta</tissue>
    </source>
</reference>
<reference key="11">
    <citation type="journal article" date="1992" name="EMBO J.">
        <title>Cell cycle regulation of CDK2 activity by phosphorylation of Thr160 and Tyr15.</title>
        <authorList>
            <person name="Gu Y."/>
            <person name="Rosenblatt J."/>
            <person name="O'Morgan D.O."/>
        </authorList>
    </citation>
    <scope>CATALYTIC ACTIVITY</scope>
    <scope>ACTIVITY REGULATION</scope>
    <scope>PHOSPHORYLATION AT THR-14; TYR-15 AND THR-160</scope>
    <scope>MUTAGENESIS OF THR-14; TYR-15 AND THR-160</scope>
</reference>
<reference key="12">
    <citation type="journal article" date="1997" name="Eur. J. Biochem.">
        <title>Biochemical and cellular effects of roscovitine, a potent and selective inhibitor of the cyclin-dependent kinases cdc2, cdk2 and cdk5.</title>
        <authorList>
            <person name="Meijer L."/>
            <person name="Borgne A."/>
            <person name="Mulner O."/>
            <person name="Chong J.P.J."/>
            <person name="Blow J.J."/>
            <person name="Inagaki N."/>
            <person name="Inagaki M."/>
            <person name="Delcros J.-G."/>
            <person name="Moulinoux J.-P."/>
        </authorList>
    </citation>
    <scope>CATALYTIC ACTIVITY</scope>
    <scope>ACTIVITY REGULATION BY ROSCOVITINE AND OLOMOUCINE</scope>
</reference>
<reference key="13">
    <citation type="journal article" date="1999" name="Cell">
        <title>Cdk phosphorylation triggers sequential intramolecular interactions that progressively block Rb functions as cells move through G1.</title>
        <authorList>
            <person name="Harbour J.W."/>
            <person name="Luo R.X."/>
            <person name="Dei Santi A."/>
            <person name="Postigo A.A."/>
            <person name="Dean D.C."/>
        </authorList>
    </citation>
    <scope>FUNCTION AS RB1 KINASE</scope>
    <scope>INTERACTION WITH CYCLIN E</scope>
</reference>
<reference key="14">
    <citation type="journal article" date="2000" name="Cell">
        <title>Nucleophosmin/B23 is a target of CDK2/cyclin E in centrosome duplication.</title>
        <authorList>
            <person name="Okuda M."/>
            <person name="Horn H.F."/>
            <person name="Tarapore P."/>
            <person name="Tokuyama Y."/>
            <person name="Smulian A.G."/>
            <person name="Chan P.K."/>
            <person name="Knudsen E.S."/>
            <person name="Hofmann I.A."/>
            <person name="Snyder J.D."/>
            <person name="Bove K.E."/>
            <person name="Fukasawa K."/>
        </authorList>
    </citation>
    <scope>FUNCTION AS NPM1 KINASE</scope>
</reference>
<reference key="15">
    <citation type="journal article" date="2000" name="Genes Dev.">
        <title>NPAT links cyclin E-Cdk2 to the regulation of replication-dependent histone gene transcription.</title>
        <authorList>
            <person name="Zhao J."/>
            <person name="Kennedy B.K."/>
            <person name="Lawrence B.D."/>
            <person name="Barbie D.A."/>
            <person name="Matera A.G."/>
            <person name="Fletcher J.A."/>
            <person name="Harlow E."/>
        </authorList>
    </citation>
    <scope>FUNCTION AS NPAT KINASE</scope>
</reference>
<reference key="16">
    <citation type="journal article" date="2000" name="Genes Dev.">
        <title>Cell cycle-regulated phosphorylation of p220(NPAT) by cyclin E/Cdk2 in Cajal bodies promotes histone gene transcription.</title>
        <authorList>
            <person name="Ma T."/>
            <person name="Van Tine B.A."/>
            <person name="Wei Y."/>
            <person name="Garrett M.D."/>
            <person name="Nelson D."/>
            <person name="Adams P.D."/>
            <person name="Wang J."/>
            <person name="Qin J."/>
            <person name="Chow L.T."/>
            <person name="Harper J.W."/>
        </authorList>
    </citation>
    <scope>FUNCTION AS NPAT KINASE</scope>
    <scope>SUBCELLULAR LOCATION</scope>
</reference>
<reference key="17">
    <citation type="journal article" date="2000" name="J. Mol. Biol.">
        <title>The C-terminal regulatory domain of p53 contains a functional docking site for cyclin A.</title>
        <authorList>
            <person name="Luciani M.G."/>
            <person name="Hutchins J.R.A."/>
            <person name="Zheleva D."/>
            <person name="Hupp T.R."/>
        </authorList>
    </citation>
    <scope>FUNCTION AS P53/TP53 KINASE</scope>
    <scope>INTERACTION WITH CYCLIN A AND CYCLIN B1</scope>
</reference>
<reference key="18">
    <citation type="journal article" date="2001" name="Mol. Cell. Biol.">
        <title>Reciprocal activation by cyclin-dependent kinases 2 and 7 is directed by substrate specificity determinants outside the T loop.</title>
        <authorList>
            <person name="Garrett S."/>
            <person name="Barton W.A."/>
            <person name="Knights R."/>
            <person name="Jin P."/>
            <person name="Morgan D.O."/>
            <person name="Fisher R.P."/>
        </authorList>
    </citation>
    <scope>FUNCTION AS CDK7 KINASE</scope>
    <scope>PHOSPHORYLATION BY CDK7</scope>
</reference>
<reference key="19">
    <citation type="journal article" date="2002" name="J. Biol. Chem.">
        <title>Characterization and expression of mammalian cyclin b3, a prepachytene meiotic cyclin.</title>
        <authorList>
            <person name="Nguyen T.B."/>
            <person name="Manova K."/>
            <person name="Capodieci P."/>
            <person name="Lindon C."/>
            <person name="Bottega S."/>
            <person name="Wang X.-Y."/>
            <person name="Refik-Rogers J."/>
            <person name="Pines J."/>
            <person name="Wolgemuth D.J."/>
            <person name="Koff A."/>
        </authorList>
    </citation>
    <scope>INTERACTION WITH CCNB3</scope>
</reference>
<reference key="20">
    <citation type="journal article" date="2002" name="J. Cell Biol.">
        <title>Human Speedy: a novel cell cycle regulator that enhances proliferation through activation of Cdk2.</title>
        <authorList>
            <person name="Porter L.A."/>
            <person name="Dellinger R.W."/>
            <person name="Tynan J.A."/>
            <person name="Barnes E.A."/>
            <person name="Kong M."/>
            <person name="Lenormand J.-L."/>
            <person name="Donoghue D.J."/>
        </authorList>
    </citation>
    <scope>INTERACTION WITH SPDYA</scope>
</reference>
<reference key="21">
    <citation type="journal article" date="2003" name="Cancer Res.">
        <title>Human Spy1 promotes survival of mammalian cells following DNA damage.</title>
        <authorList>
            <person name="Barnes E.A."/>
            <person name="Porter L.A."/>
            <person name="Lenormand J.-L."/>
            <person name="Dellinger R.W."/>
            <person name="Donoghue D.J."/>
        </authorList>
    </citation>
    <scope>INTERACTION WITH SPDYA</scope>
</reference>
<reference key="22">
    <citation type="journal article" date="2003" name="Development">
        <title>DOC1R: a MAP kinase substrate that control microtubule organization of metaphase II mouse oocytes.</title>
        <authorList>
            <person name="Terret M.E."/>
            <person name="Lefebvre C."/>
            <person name="Djiane A."/>
            <person name="Rassinier P."/>
            <person name="Moreau J."/>
            <person name="Maro B."/>
            <person name="Verlhac M.H."/>
        </authorList>
    </citation>
    <scope>FUNCTION</scope>
</reference>
<reference key="23">
    <citation type="journal article" date="2003" name="Mol. Biol. Cell">
        <title>Spy1 interacts with p27Kip1 to allow G1/S progression.</title>
        <authorList>
            <person name="Porter L.A."/>
            <person name="Kong-Beltran M."/>
            <person name="Donoghue D.J."/>
        </authorList>
    </citation>
    <scope>INTERACTION WITH SPDYA</scope>
    <scope>IDENTIFICATION IN A COMPLEX WITH CDKN1B AND SPDYA</scope>
</reference>
<reference key="24">
    <citation type="journal article" date="2004" name="Biochem. Biophys. Res. Commun.">
        <title>NIRF induces G1 arrest and associates with Cdk2.</title>
        <authorList>
            <person name="Li Y."/>
            <person name="Mori T."/>
            <person name="Hata H."/>
            <person name="Homma Y."/>
            <person name="Kochi H."/>
        </authorList>
    </citation>
    <scope>INTERACTION WITH UHRF2</scope>
    <scope>IDENTIFICATION IN A COMPLEX WITH UHRF2 AND CCNE1</scope>
</reference>
<reference key="25">
    <citation type="journal article" date="2004" name="Genes Dev.">
        <title>Liver tumors escape negative control of proliferation via PI3K/Akt-mediated block of C/EBP alpha growth inhibitory activity.</title>
        <authorList>
            <person name="Wang G.L."/>
            <person name="Iakova P."/>
            <person name="Wilde M."/>
            <person name="Awad S."/>
            <person name="Timchenko N.A."/>
        </authorList>
    </citation>
    <scope>INTERACTION WITH CEBPA</scope>
</reference>
<reference key="26">
    <citation type="journal article" date="2004" name="J. Biol. Chem.">
        <title>p42, a novel cyclin-dependent kinase-activating kinase in mammalian cells.</title>
        <authorList>
            <person name="Liu Y."/>
            <person name="Wu C."/>
            <person name="Galaktionov K."/>
        </authorList>
    </citation>
    <scope>PHOSPHORYLATION AT THR-160</scope>
</reference>
<reference key="27">
    <citation type="journal article" date="2005" name="Cell Cycle">
        <title>Identification and comparative analysis of multiple mammalian Speedy/Ringo proteins.</title>
        <authorList>
            <person name="Cheng A."/>
            <person name="Xiong W."/>
            <person name="Ferrell J.E. Jr."/>
            <person name="Solomon M.J."/>
        </authorList>
    </citation>
    <scope>INTERACTION WITH SPDYA AND SPDYC</scope>
</reference>
<reference key="28">
    <citation type="journal article" date="2005" name="Nature">
        <title>CDK-dependent phosphorylation of BRCA2 as a regulatory mechanism for recombinational repair.</title>
        <authorList>
            <person name="Esashi F."/>
            <person name="Christ N."/>
            <person name="Gannon J."/>
            <person name="Liu Y."/>
            <person name="Hunt T."/>
            <person name="Jasin M."/>
            <person name="West S.C."/>
        </authorList>
    </citation>
    <scope>FUNCTION AS BRCA2 KINASE</scope>
</reference>
<reference key="29">
    <citation type="journal article" date="2007" name="Proteins">
        <title>Recognition of Cdk2 by Cdk7.</title>
        <authorList>
            <person name="Lolli G."/>
            <person name="Johnson L.N."/>
        </authorList>
    </citation>
    <scope>PHOSPHORYLATION BY CAK</scope>
    <scope>MUTAGENESIS OF LYS-9; 88-LYS-LYS-89 AND LEU-166</scope>
    <scope>INTERACTION WITH CDK7</scope>
</reference>
<reference key="30">
    <citation type="journal article" date="2008" name="Mol. Cell">
        <title>Kinase-selective enrichment enables quantitative phosphoproteomics of the kinome across the cell cycle.</title>
        <authorList>
            <person name="Daub H."/>
            <person name="Olsen J.V."/>
            <person name="Bairlein M."/>
            <person name="Gnad F."/>
            <person name="Oppermann F.S."/>
            <person name="Korner R."/>
            <person name="Greff Z."/>
            <person name="Keri G."/>
            <person name="Stemmann O."/>
            <person name="Mann M."/>
        </authorList>
    </citation>
    <scope>IDENTIFICATION BY MASS SPECTROMETRY [LARGE SCALE ANALYSIS]</scope>
    <source>
        <tissue>Cervix carcinoma</tissue>
    </source>
</reference>
<reference key="31">
    <citation type="journal article" date="2008" name="Oncogene">
        <title>Cyclin A/cdk2 coordinates centrosomal and nuclear mitotic events.</title>
        <authorList>
            <person name="De Boer L."/>
            <person name="Oakes V."/>
            <person name="Beamish H."/>
            <person name="Giles N."/>
            <person name="Stevens F."/>
            <person name="Somodevilla-Torres M."/>
            <person name="Desouza C."/>
            <person name="Gabrielli B."/>
        </authorList>
    </citation>
    <scope>FUNCTION IN MITOSE REGULATION</scope>
    <scope>SUBCELLULAR LOCATION</scope>
</reference>
<reference key="32">
    <citation type="journal article" date="2009" name="Cell Cycle">
        <title>Identification and characterization of CAC1 as a novel CDK2-associated cullin.</title>
        <authorList>
            <person name="Kong Y."/>
            <person name="Nan K."/>
            <person name="Yin Y."/>
        </authorList>
    </citation>
    <scope>INTERACTION WITH CACUL1</scope>
</reference>
<reference key="33">
    <citation type="journal article" date="2009" name="Mol. Cell. Proteomics">
        <title>Large-scale proteomics analysis of the human kinome.</title>
        <authorList>
            <person name="Oppermann F.S."/>
            <person name="Gnad F."/>
            <person name="Olsen J.V."/>
            <person name="Hornberger R."/>
            <person name="Greff Z."/>
            <person name="Keri G."/>
            <person name="Mann M."/>
            <person name="Daub H."/>
        </authorList>
    </citation>
    <scope>PHOSPHORYLATION [LARGE SCALE ANALYSIS] AT TYR-19</scope>
    <scope>IDENTIFICATION BY MASS SPECTROMETRY [LARGE SCALE ANALYSIS]</scope>
</reference>
<reference key="34">
    <citation type="journal article" date="2009" name="Sci. Signal.">
        <title>Quantitative phosphoproteomic analysis of T cell receptor signaling reveals system-wide modulation of protein-protein interactions.</title>
        <authorList>
            <person name="Mayya V."/>
            <person name="Lundgren D.H."/>
            <person name="Hwang S.-I."/>
            <person name="Rezaul K."/>
            <person name="Wu L."/>
            <person name="Eng J.K."/>
            <person name="Rodionov V."/>
            <person name="Han D.K."/>
        </authorList>
    </citation>
    <scope>PHOSPHORYLATION [LARGE SCALE ANALYSIS] AT TYR-15</scope>
    <scope>IDENTIFICATION BY MASS SPECTROMETRY [LARGE SCALE ANALYSIS]</scope>
    <source>
        <tissue>Leukemic T-cell</tissue>
    </source>
</reference>
<reference key="35">
    <citation type="journal article" date="2009" name="Science">
        <title>Lysine acetylation targets protein complexes and co-regulates major cellular functions.</title>
        <authorList>
            <person name="Choudhary C."/>
            <person name="Kumar C."/>
            <person name="Gnad F."/>
            <person name="Nielsen M.L."/>
            <person name="Rehman M."/>
            <person name="Walther T.C."/>
            <person name="Olsen J.V."/>
            <person name="Mann M."/>
        </authorList>
    </citation>
    <scope>ACETYLATION [LARGE SCALE ANALYSIS] AT LYS-6</scope>
    <scope>IDENTIFICATION BY MASS SPECTROMETRY [LARGE SCALE ANALYSIS]</scope>
</reference>
<reference key="36">
    <citation type="journal article" date="2010" name="Endocrinology">
        <title>Nuclear targeting of cyclin-dependent kinase 2 reveals essential roles of cyclin-dependent kinase 2 localization and cyclin E in vitamin D-mediated growth inhibition.</title>
        <authorList>
            <person name="Flores O."/>
            <person name="Wang Z."/>
            <person name="Knudsen K.E."/>
            <person name="Burnstein K.L."/>
        </authorList>
    </citation>
    <scope>FUNCTION IN VITAMIN D-MEDIATED GROWTH INHIBITION</scope>
    <scope>SUBCELLULAR LOCATION</scope>
    <scope>ACTIVITY REGULATION</scope>
    <scope>PHOSPHORYLATION AT THR-160</scope>
</reference>
<reference key="37">
    <citation type="journal article" date="2010" name="Free Radic. Biol. Med.">
        <title>Cdk2 nitrosylation and loss of mitochondrial potential mediate NO-dependent biphasic effect on HL-60 cell cycle.</title>
        <authorList>
            <person name="Kumar S."/>
            <person name="Barthwal M.K."/>
            <person name="Dikshit M."/>
        </authorList>
    </citation>
    <scope>FUNCTION</scope>
    <scope>S-NITROSYLATION</scope>
</reference>
<reference key="38">
    <citation type="journal article" date="2010" name="J. Biol. Chem.">
        <title>Cdc25 phosphatases are required for timely assembly of CDK1-cyclin B at the G2/M transition.</title>
        <authorList>
            <person name="Timofeev O."/>
            <person name="Cizmecioglu O."/>
            <person name="Settele F."/>
            <person name="Kempf T."/>
            <person name="Hoffmann I."/>
        </authorList>
    </citation>
    <scope>PHOSPHORYLATION AT THR-160 BY CAK</scope>
    <scope>DEPHOSPHORYLATION BY CDC25A</scope>
</reference>
<reference key="39">
    <citation type="journal article" date="2010" name="Nat. Cell Biol.">
        <title>Cyclin-dependent kinases regulate epigenetic gene silencing through phosphorylation of EZH2.</title>
        <authorList>
            <person name="Chen S."/>
            <person name="Bohrer L.R."/>
            <person name="Rai A.N."/>
            <person name="Pan Y."/>
            <person name="Gan L."/>
            <person name="Zhou X."/>
            <person name="Bagchi A."/>
            <person name="Simon J.A."/>
            <person name="Huang H."/>
        </authorList>
    </citation>
    <scope>FUNCTION AS EZH2 KINASE</scope>
</reference>
<reference key="40">
    <citation type="journal article" date="2010" name="PLoS Genet.">
        <title>Cdk2 is required for p53-independent G2/M checkpoint control.</title>
        <authorList>
            <person name="Chung J.H."/>
            <person name="Bunz F."/>
        </authorList>
    </citation>
    <scope>FUNCTION IN DNA DAMAGE CHECKPOINT</scope>
</reference>
<reference key="41">
    <citation type="journal article" date="2010" name="Proc. Natl. Acad. Sci. U.S.A.">
        <title>Phosphorylation by Cdk2 is required for Myc to repress Ras-induced senescence in cotransformation.</title>
        <authorList>
            <person name="Hydbring P."/>
            <person name="Bahram F."/>
            <person name="Su Y."/>
            <person name="Tronnersjoe S."/>
            <person name="Hoegstrand K."/>
            <person name="von der Lehr N."/>
            <person name="Sharifi H.R."/>
            <person name="Lilischkis R."/>
            <person name="Hein N."/>
            <person name="Wu S."/>
            <person name="Vervoorts J."/>
            <person name="Henriksson M."/>
            <person name="Grandien A."/>
            <person name="Luescher B."/>
            <person name="Larsson L.-G."/>
        </authorList>
    </citation>
    <scope>FUNCTION AS MYC KINASE</scope>
</reference>
<reference key="42">
    <citation type="journal article" date="2011" name="BMC Syst. Biol.">
        <title>Initial characterization of the human central proteome.</title>
        <authorList>
            <person name="Burkard T.R."/>
            <person name="Planyavsky M."/>
            <person name="Kaupe I."/>
            <person name="Breitwieser F.P."/>
            <person name="Buerckstuemmer T."/>
            <person name="Bennett K.L."/>
            <person name="Superti-Furga G."/>
            <person name="Colinge J."/>
        </authorList>
    </citation>
    <scope>IDENTIFICATION BY MASS SPECTROMETRY [LARGE SCALE ANALYSIS]</scope>
</reference>
<reference key="43">
    <citation type="journal article" date="2011" name="Cancer Res.">
        <title>Cep63 recruits Cdk1 to the centrosome: implications for regulation of mitotic entry, centrosome amplification, and genome maintenance.</title>
        <authorList>
            <person name="Loffler H."/>
            <person name="Fechter A."/>
            <person name="Matuszewska M."/>
            <person name="Saffrich R."/>
            <person name="Mistrik M."/>
            <person name="Marhold J."/>
            <person name="Hornung C."/>
            <person name="Westermann F."/>
            <person name="Bartek J."/>
            <person name="Kramer A."/>
        </authorList>
    </citation>
    <scope>INTERACTION WITH CEP63</scope>
</reference>
<reference key="44">
    <citation type="journal article" date="2011" name="Cell. Signal.">
        <title>Compartmentalized CDK2 is connected with SHP-1 and beta-catenin and regulates insulin internalization.</title>
        <authorList>
            <person name="Fiset A."/>
            <person name="Xu E."/>
            <person name="Bergeron S."/>
            <person name="Marette A."/>
            <person name="Pelletier G."/>
            <person name="Siminovitch K.A."/>
            <person name="Olivier M."/>
            <person name="Beauchemin N."/>
            <person name="Faure R.L."/>
        </authorList>
    </citation>
    <scope>FUNCTION AS CTNNB1 KINASE</scope>
    <scope>SUBCELLULAR LOCATION</scope>
    <scope>INTERACTION WITH PTPN6 AND CTNNB1</scope>
</reference>
<reference key="45">
    <citation type="journal article" date="2011" name="Bioorg. Med. Chem. Lett.">
        <title>Discovery of a novel class of 2-aminopyrimidines as CDK1 and CDK2 inhibitors.</title>
        <authorList>
            <person name="Lee J."/>
            <person name="Kim K.H."/>
            <person name="Jeong S."/>
        </authorList>
    </citation>
    <scope>INHIBITORS</scope>
</reference>
<reference key="46">
    <citation type="journal article" date="2011" name="Mol. Cell">
        <title>Deubiquitinase USP37 is activated by CDK2 to antagonize APC(CDH1) and promote S phase entry.</title>
        <authorList>
            <person name="Huang X."/>
            <person name="Summers M.K."/>
            <person name="Pham V."/>
            <person name="Lill J.R."/>
            <person name="Liu J."/>
            <person name="Lee G."/>
            <person name="Kirkpatrick D.S."/>
            <person name="Jackson P.K."/>
            <person name="Fang G."/>
            <person name="Dixit V.M."/>
        </authorList>
    </citation>
    <scope>FUNCTION AS USP37 KINASE</scope>
</reference>
<reference key="47">
    <citation type="journal article" date="2011" name="Stem Cells">
        <title>An important role for CDK2 in G1 to S checkpoint activation and DNA damage response in human embryonic stem cells.</title>
        <authorList>
            <person name="Neganova I."/>
            <person name="Vilella F."/>
            <person name="Atkinson S.P."/>
            <person name="Lloret M."/>
            <person name="Passos J.F."/>
            <person name="von Zglinicki T."/>
            <person name="O'Connor J.-E."/>
            <person name="Burks D."/>
            <person name="Jones R."/>
            <person name="Armstrong L."/>
            <person name="Lako M."/>
        </authorList>
    </citation>
    <scope>FUNCTION IN CELL CYCLE REGULATION</scope>
</reference>
<reference key="48">
    <citation type="journal article" date="2009" name="Cell Div.">
        <title>A dual role of Cdk2 in DNA damage response.</title>
        <authorList>
            <person name="Satyanarayana A."/>
            <person name="Kaldis P."/>
        </authorList>
    </citation>
    <scope>REVIEW ON DNA REPAIR</scope>
    <scope>INTERACTION WITH CDKN1A/P21</scope>
</reference>
<reference key="49">
    <citation type="journal article" date="2009" name="Nat. Rev. Cancer">
        <title>Cell cycle, CDKs and cancer: a changing paradigm.</title>
        <authorList>
            <person name="Malumbres M."/>
            <person name="Barbacid M."/>
        </authorList>
    </citation>
    <scope>REVIEW ON CELL CYCLE CONTROL</scope>
    <scope>INHIBITORS</scope>
    <scope>GENE FAMILY</scope>
</reference>
<reference key="50">
    <citation type="journal article" date="2009" name="Oncogene">
        <title>Mammalian cell-cycle regulation: several Cdks, numerous cyclins and diverse compensatory mechanisms.</title>
        <authorList>
            <person name="Satyanarayana A."/>
            <person name="Kaldis P."/>
        </authorList>
    </citation>
    <scope>REVIEW</scope>
    <scope>GENE FAMILY</scope>
</reference>
<reference key="51">
    <citation type="journal article" date="2010" name="Cancer Res.">
        <title>Tipping the balance: Cdk2 enables Myc to suppress senescence.</title>
        <authorList>
            <person name="Hydbring P."/>
            <person name="Larsson L.-G."/>
        </authorList>
    </citation>
    <scope>REVIEW ON SENESCENCE</scope>
</reference>
<reference key="52">
    <citation type="journal article" date="2011" name="Curr. Med. Chem.">
        <title>Cyclin dependent kinase 1 inhibitors: a review of recent progress.</title>
        <authorList>
            <person name="Wang Q."/>
            <person name="Su L."/>
            <person name="Liu N."/>
            <person name="Zhang L."/>
            <person name="Xu W."/>
            <person name="Fang H."/>
        </authorList>
    </citation>
    <scope>REVIEW ON INHIBITORS</scope>
</reference>
<reference key="53">
    <citation type="journal article" date="2012" name="Proc. Natl. Acad. Sci. U.S.A.">
        <title>N-terminal acetylome analyses and functional insights of the N-terminal acetyltransferase NatB.</title>
        <authorList>
            <person name="Van Damme P."/>
            <person name="Lasa M."/>
            <person name="Polevoda B."/>
            <person name="Gazquez C."/>
            <person name="Elosegui-Artola A."/>
            <person name="Kim D.S."/>
            <person name="De Juan-Pardo E."/>
            <person name="Demeyer K."/>
            <person name="Hole K."/>
            <person name="Larrea E."/>
            <person name="Timmerman E."/>
            <person name="Prieto J."/>
            <person name="Arnesen T."/>
            <person name="Sherman F."/>
            <person name="Gevaert K."/>
            <person name="Aldabe R."/>
        </authorList>
    </citation>
    <scope>ACETYLATION [LARGE SCALE ANALYSIS] AT MET-1</scope>
    <scope>IDENTIFICATION BY MASS SPECTROMETRY [LARGE SCALE ANALYSIS]</scope>
</reference>
<reference key="54">
    <citation type="journal article" date="2013" name="Int. J. Biol. Sci.">
        <title>Overexpression of DOC-1R inhibits cell cycle G1/S transition by repressing CDK2 expression and activation.</title>
        <authorList>
            <person name="Liu Q."/>
            <person name="Liu X."/>
            <person name="Gao J."/>
            <person name="Shi X."/>
            <person name="Hu X."/>
            <person name="Wang S."/>
            <person name="Luo Y."/>
        </authorList>
    </citation>
    <scope>INTERACTION WITH CYCLIN E; CYCLIN A AND CDK2AP2</scope>
    <scope>PHOSPHORYLATION</scope>
</reference>
<reference key="55">
    <citation type="journal article" date="2014" name="Nature">
        <title>Cell-cycle-regulated activation of Akt kinase by phosphorylation at its carboxyl terminus.</title>
        <authorList>
            <person name="Liu P."/>
            <person name="Begley M."/>
            <person name="Michowski W."/>
            <person name="Inuzuka H."/>
            <person name="Ginzberg M."/>
            <person name="Gao D."/>
            <person name="Tsou P."/>
            <person name="Gan W."/>
            <person name="Papa A."/>
            <person name="Kim B.M."/>
            <person name="Wan L."/>
            <person name="Singh A."/>
            <person name="Zhai B."/>
            <person name="Yuan M."/>
            <person name="Wang Z."/>
            <person name="Gygi S.P."/>
            <person name="Lee T.H."/>
            <person name="Lu K.P."/>
            <person name="Toker A."/>
            <person name="Pandolfi P.P."/>
            <person name="Asara J.M."/>
            <person name="Kirschner M.W."/>
            <person name="Sicinski P."/>
            <person name="Cantley L."/>
            <person name="Wei W."/>
        </authorList>
    </citation>
    <scope>FUNCTION</scope>
    <scope>CATALYTIC ACTIVITY</scope>
    <scope>INTERACTION WITH CCNA2</scope>
</reference>
<reference key="56">
    <citation type="journal article" date="2017" name="Mol. Cell">
        <title>NBS1 phosphorylation status dictates repair choice of dysfunctional telomeres.</title>
        <authorList>
            <person name="Rai R."/>
            <person name="Hu C."/>
            <person name="Broton C."/>
            <person name="Chen Y."/>
            <person name="Lei M."/>
            <person name="Chang S."/>
        </authorList>
    </citation>
    <scope>FUNCTION</scope>
    <scope>CATALYTIC ACTIVITY</scope>
</reference>
<reference key="57">
    <citation type="journal article" date="2017" name="Nat. Commun.">
        <title>ATM and CDK2 control chromatin remodeler CSB to inhibit RIF1 in DSB repair pathway choice.</title>
        <authorList>
            <person name="Batenburg N.L."/>
            <person name="Walker J.R."/>
            <person name="Noordermeer S.M."/>
            <person name="Moatti N."/>
            <person name="Durocher D."/>
            <person name="Zhu X.D."/>
        </authorList>
    </citation>
    <scope>FUNCTION</scope>
</reference>
<reference key="58">
    <citation type="journal article" date="1993" name="Nature">
        <title>Crystal structure of cyclin-dependent kinase 2.</title>
        <authorList>
            <person name="de Bondt H.L."/>
            <person name="Rosenblatt J."/>
            <person name="Jancarik J."/>
            <person name="Jones H.D."/>
            <person name="Morgan D.O."/>
            <person name="Kim S.-H."/>
        </authorList>
    </citation>
    <scope>X-RAY CRYSTALLOGRAPHY (2.4 ANGSTROMS)</scope>
</reference>
<reference key="59">
    <citation type="journal article" date="1995" name="Nature">
        <title>Mechanism of CDK activation revealed by the structure of a cyclinA-CDK2 complex.</title>
        <authorList>
            <person name="Jeffrey P.D."/>
            <person name="Russo A.A."/>
            <person name="Polyak K."/>
            <person name="Gibbs E."/>
            <person name="Hurwitz J."/>
            <person name="Massague J."/>
            <person name="Pavletich N.P."/>
        </authorList>
    </citation>
    <scope>X-RAY CRYSTALLOGRAPHY (2.3 ANGSTROMS) IN COMPLEX WITH CYCLIN A</scope>
</reference>
<reference key="60">
    <citation type="journal article" date="1996" name="Cell">
        <title>Crystal structure and mutational analysis of the human CDK2 kinase complex with cell cycle-regulatory protein CksHs1.</title>
        <authorList>
            <person name="Bourne Y."/>
            <person name="Watson M.H."/>
            <person name="Hickey M.J."/>
            <person name="Holmes W."/>
            <person name="Rocque W."/>
            <person name="Reed S.I."/>
            <person name="Tainer J.A."/>
        </authorList>
    </citation>
    <scope>X-RAY CRYSTALLOGRAPHY (2.6 ANGSTROMS) IN COMPLEX WITG CKS1</scope>
</reference>
<reference key="61">
    <citation type="journal article" date="1996" name="J. Med. Chem.">
        <title>High-resolution crystal structures of human cyclin-dependent kinase 2 with and without ATP: bound waters and natural ligand as guides for inhibitor design.</title>
        <authorList>
            <person name="Schulze-Gahmen U."/>
            <person name="de Bondt H.L."/>
            <person name="Kim S.-H."/>
        </authorList>
    </citation>
    <scope>X-RAY CRYSTALLOGRAPHY (1.9 ANGSTROMS)</scope>
</reference>
<reference key="62">
    <citation type="journal article" date="1996" name="Nature">
        <title>Crystal structure of the p27Kip1 cyclin-dependent-kinase inhibitor bound to the cyclin A-Cdk2 complex.</title>
        <authorList>
            <person name="Russo A.A."/>
            <person name="Jeffrey P.D."/>
            <person name="Patten A.K."/>
            <person name="Massague J."/>
            <person name="Pavletich N.P."/>
        </authorList>
    </citation>
    <scope>X-RAY CRYSTALLOGRAPHY (2.3 ANGSTROMS) IN COMPLEX WITH CCNA2 AND CDKN1B</scope>
</reference>
<reference key="63">
    <citation type="journal article" date="1996" name="Nat. Struct. Biol.">
        <title>Structural basis of cyclin-dependent kinase activation by phosphorylation.</title>
        <authorList>
            <person name="Russo A.A."/>
            <person name="Jeffrey P.D."/>
            <person name="Pavletich N.P."/>
        </authorList>
    </citation>
    <scope>X-RAY CRYSTALLOGRAPHY (2.6 ANGSTROMS) IN COMPLEX WITH CG2A</scope>
</reference>
<reference key="64">
    <citation type="journal article" date="1996" name="Proc. Natl. Acad. Sci. U.S.A.">
        <title>Structural basis for specificity and potency of a flavonoid inhibitor of human CDK2, a cell cycle kinase.</title>
        <authorList>
            <person name="de Azevedo W.F. Jr."/>
            <person name="Mueller-Dieckmann H.-J."/>
            <person name="Schulze-Gahmen U."/>
            <person name="Worland P.J."/>
            <person name="Sausville E."/>
            <person name="Kim S.-H."/>
        </authorList>
    </citation>
    <scope>X-RAY CRYSTALLOGRAPHY (2.33 ANGSTROMS) IN COMPLEX WITH L868276</scope>
</reference>
<reference key="65">
    <citation type="journal article" date="1997" name="Nat. Struct. Biol.">
        <title>Protein kinase inhibition by staurosporine revealed in details of the molecular interaction with CDK2.</title>
        <authorList>
            <person name="Lawrie A.M."/>
            <person name="Noble M.E.M."/>
            <person name="Tunnah P."/>
            <person name="Brown N.R."/>
            <person name="Johnson L.N."/>
            <person name="Endicott J.A."/>
        </authorList>
    </citation>
    <scope>X-RAY CRYSTALLOGRAPHY (2.0 ANGSTROMS) IN COMPLEX WITH STAUROSPORINE</scope>
    <scope>ACTIVITY REGULATION</scope>
</reference>
<reference key="66">
    <citation type="journal article" date="1998" name="Science">
        <title>Exploiting chemical libraries, structure, and genomics in the search for kinase inhibitors.</title>
        <authorList>
            <person name="Gray N.S."/>
            <person name="Wodicka L."/>
            <person name="Thunnissen A.-M.W.H."/>
            <person name="Norman T.C."/>
            <person name="Kwon S."/>
            <person name="Espinoza F.H."/>
            <person name="Morgan D.O."/>
            <person name="Barnes G."/>
            <person name="Leclerc S."/>
            <person name="Meijer L."/>
            <person name="Kim S.H."/>
            <person name="Lockhart D.J."/>
            <person name="Schultz P.G."/>
        </authorList>
    </citation>
    <scope>X-RAY CRYSTALLOGRAPHY (2.05 ANGSTROMS)</scope>
</reference>
<reference key="67">
    <citation type="journal article" date="2006" name="Bioorg. Med. Chem. Lett.">
        <title>Triazolo[1,5-a]pyrimidines as novel CDK2 inhibitors: protein structure-guided design and SAR.</title>
        <authorList>
            <person name="Richardson C.M."/>
            <person name="Williamson D.S."/>
            <person name="Parratt M.J."/>
            <person name="Borgognoni J."/>
            <person name="Cansfield A.D."/>
            <person name="Dokurno P."/>
            <person name="Francis G.L."/>
            <person name="Howes R."/>
            <person name="Moore J.D."/>
            <person name="Murray J.B."/>
            <person name="Robertson A."/>
            <person name="Surgenor A.E."/>
            <person name="Torrance C.J."/>
        </authorList>
    </citation>
    <scope>X-RAY CRYSTALLOGRAPHY (1.80 ANGSTROMS) IN COMPLEX WITH INHIBITORS</scope>
    <scope>PHOSPHORYLATION AT THR-160</scope>
</reference>
<reference key="68">
    <citation type="journal article" date="2007" name="Bioorg. Med. Chem. Lett.">
        <title>Discovery of a potent CDK2 inhibitor with a novel binding mode, using virtual screening and initial, structure-guided lead scoping.</title>
        <authorList>
            <person name="Richardson C.M."/>
            <person name="Nunns C.L."/>
            <person name="Williamson D.S."/>
            <person name="Parratt M.J."/>
            <person name="Dokurno P."/>
            <person name="Howes R."/>
            <person name="Borgognoni J."/>
            <person name="Drysdale M.J."/>
            <person name="Finch H."/>
            <person name="Hubbard R.E."/>
            <person name="Jackson P.S."/>
            <person name="Kierstan P."/>
            <person name="Lentzen G."/>
            <person name="Moore J.D."/>
            <person name="Murray J.B."/>
            <person name="Simmonite H."/>
            <person name="Surgenor A.E."/>
            <person name="Torrance C.J."/>
        </authorList>
    </citation>
    <scope>X-RAY CRYSTALLOGRAPHY (2.20 ANGSTROMS) IN COMPLEX WITH INHIBITORS</scope>
    <scope>PHOSPHORYLATION AT THR-160</scope>
</reference>
<reference key="69">
    <citation type="journal article" date="2007" name="Cell Cycle">
        <title>Cyclin B and cyclin A confer different substrate recognition properties on CDK2.</title>
        <authorList>
            <person name="Brown N.R."/>
            <person name="Lowe E.D."/>
            <person name="Petri E."/>
            <person name="Skamnaki V."/>
            <person name="Antrobus R."/>
            <person name="Johnson L.N."/>
        </authorList>
    </citation>
    <scope>X-RAY CRYSTALLOGRAPHY (2.9 ANGSTROMS) OF 1-288 IN COMPLEX WITH CCNB1</scope>
    <scope>FUNCTION</scope>
</reference>
<reference key="70">
    <citation type="journal article" date="2007" name="J. Biol. Chem.">
        <title>How tyrosine 15 phosphorylation inhibits the activity of cyclin-dependent kinase 2-cyclin A.</title>
        <authorList>
            <person name="Welburn J.P.I."/>
            <person name="Tucker J.A."/>
            <person name="Johnson T."/>
            <person name="Lindert L."/>
            <person name="Morgan M."/>
            <person name="Willis A."/>
            <person name="Noble M.E.M."/>
            <person name="Endicott J.A."/>
        </authorList>
    </citation>
    <scope>X-RAY CRYSTALLOGRAPHY (2.30 ANGSTROMS) IN COMPLEX WITH ATP</scope>
    <scope>PHOSPHORYLATION AT THR-14; TYR-15 AND THR-160</scope>
</reference>
<reference key="71">
    <citation type="journal article" date="2008" name="Biopolymers">
        <title>Structure-guided discovery of cyclin-dependent kinase inhibitors.</title>
        <authorList>
            <person name="Fischmann T.O."/>
            <person name="Hruza A."/>
            <person name="Duca J.S."/>
            <person name="Ramanathan L."/>
            <person name="Mayhood T."/>
            <person name="Windsor W.T."/>
            <person name="Le H.V."/>
            <person name="Guzi T.J."/>
            <person name="Dwyer M.P."/>
            <person name="Paruch K."/>
            <person name="Doll R.J."/>
            <person name="Lees E."/>
            <person name="Parry D."/>
            <person name="Seghezzi W."/>
            <person name="Madison V."/>
        </authorList>
    </citation>
    <scope>X-RAY CRYSTALLOGRAPHY (1.28 ANGSTROMS) IN COMPLEX WITH INHIBITORS</scope>
</reference>
<reference key="72">
    <citation type="journal article" date="2008" name="J. Med. Chem.">
        <title>Identification of N-(4-piperidinyl)-4-(2,6-dichlorobenzoylamino)-1H-pyrazole-3-carboxamide (AT7519), a novel cyclin dependent kinase inhibitor using fragment-based X-ray crystallography and structure based drug design.</title>
        <authorList>
            <person name="Wyatt P.G."/>
            <person name="Woodhead A.J."/>
            <person name="Berdini V."/>
            <person name="Boulstridge J.A."/>
            <person name="Carr M.G."/>
            <person name="Cross D.M."/>
            <person name="Davis D.J."/>
            <person name="Devine L.A."/>
            <person name="Early T.R."/>
            <person name="Feltell R.E."/>
            <person name="Lewis E.J."/>
            <person name="McMenamin R.L."/>
            <person name="Navarro E.F."/>
            <person name="O'Brien M.A."/>
            <person name="O'Reilly M."/>
            <person name="Reule M."/>
            <person name="Saxty G."/>
            <person name="Seavers L.C."/>
            <person name="Smith D.M."/>
            <person name="Squires M.S."/>
            <person name="Trewartha G."/>
            <person name="Walker M.T."/>
            <person name="Woolford A.J."/>
        </authorList>
    </citation>
    <scope>X-RAY CRYSTALLOGRAPHY (1.68 ANGSTROMS) IN COMPLEX WITH INHIBITORS</scope>
</reference>
<reference key="73">
    <citation type="journal article" date="2011" name="Structure">
        <title>Briefly bound to activate: transient binding of a second catalytic magnesium activates the structure and dynamics of CDK2 kinase for catalysis.</title>
        <authorList>
            <person name="Bao Z.Q."/>
            <person name="Jacobsen D.M."/>
            <person name="Young M.A."/>
        </authorList>
    </citation>
    <scope>X-RAY CRYSTALLOGRAPHY (1.91 ANGSTROMS) OF 1-296 IN COMPLEX WITH ATP AND MAGNESIUM</scope>
    <scope>COFACTOR</scope>
    <scope>PHOSPHORYLATION AT THR-160</scope>
</reference>
<reference evidence="60 61 62" key="74">
    <citation type="journal article" date="2017" name="EMBO J.">
        <title>Structural basis of divergent cyclin-dependent kinase activation by Spy1/RINGO proteins.</title>
        <authorList>
            <person name="McGrath D.A."/>
            <person name="Fifield B.A."/>
            <person name="Marceau A.H."/>
            <person name="Tripathi S."/>
            <person name="Porter L.A."/>
            <person name="Rubin S.M."/>
        </authorList>
    </citation>
    <scope>X-RAY CRYSTALLOGRAPHY (2.70 ANGSTROMS) IN COMPLEXES WITH SPDYA AND CDKN1B</scope>
    <scope>FUNCTION</scope>
    <scope>CATALYTIC ACTIVITY</scope>
    <scope>ACTIVITY REGULATION</scope>
    <scope>INTERACTION WITH SPDYA AND CDKN1B</scope>
    <scope>PHOSPHORYLATION AT THR-160</scope>
</reference>
<reference key="75">
    <citation type="journal article" date="2007" name="Nature">
        <title>Patterns of somatic mutation in human cancer genomes.</title>
        <authorList>
            <person name="Greenman C."/>
            <person name="Stephens P."/>
            <person name="Smith R."/>
            <person name="Dalgliesh G.L."/>
            <person name="Hunter C."/>
            <person name="Bignell G."/>
            <person name="Davies H."/>
            <person name="Teague J."/>
            <person name="Butler A."/>
            <person name="Stevens C."/>
            <person name="Edkins S."/>
            <person name="O'Meara S."/>
            <person name="Vastrik I."/>
            <person name="Schmidt E.E."/>
            <person name="Avis T."/>
            <person name="Barthorpe S."/>
            <person name="Bhamra G."/>
            <person name="Buck G."/>
            <person name="Choudhury B."/>
            <person name="Clements J."/>
            <person name="Cole J."/>
            <person name="Dicks E."/>
            <person name="Forbes S."/>
            <person name="Gray K."/>
            <person name="Halliday K."/>
            <person name="Harrison R."/>
            <person name="Hills K."/>
            <person name="Hinton J."/>
            <person name="Jenkinson A."/>
            <person name="Jones D."/>
            <person name="Menzies A."/>
            <person name="Mironenko T."/>
            <person name="Perry J."/>
            <person name="Raine K."/>
            <person name="Richardson D."/>
            <person name="Shepherd R."/>
            <person name="Small A."/>
            <person name="Tofts C."/>
            <person name="Varian J."/>
            <person name="Webb T."/>
            <person name="West S."/>
            <person name="Widaa S."/>
            <person name="Yates A."/>
            <person name="Cahill D.P."/>
            <person name="Louis D.N."/>
            <person name="Goldstraw P."/>
            <person name="Nicholson A.G."/>
            <person name="Brasseur F."/>
            <person name="Looijenga L."/>
            <person name="Weber B.L."/>
            <person name="Chiew Y.-E."/>
            <person name="DeFazio A."/>
            <person name="Greaves M.F."/>
            <person name="Green A.R."/>
            <person name="Campbell P."/>
            <person name="Birney E."/>
            <person name="Easton D.F."/>
            <person name="Chenevix-Trench G."/>
            <person name="Tan M.-H."/>
            <person name="Khoo S.K."/>
            <person name="Teh B.T."/>
            <person name="Yuen S.T."/>
            <person name="Leung S.Y."/>
            <person name="Wooster R."/>
            <person name="Futreal P.A."/>
            <person name="Stratton M.R."/>
        </authorList>
    </citation>
    <scope>VARIANTS [LARGE SCALE ANALYSIS] LEU-45 AND SER-290</scope>
</reference>
<reference key="76">
    <citation type="journal article" date="2013" name="FEBS Lett.">
        <title>A role for the Ankyrin repeat containing protein Ankrd17 in Nod1- and Nod2-mediated inflammatory responses.</title>
        <authorList>
            <person name="Menning M."/>
            <person name="Kufer T.A."/>
        </authorList>
    </citation>
    <scope>INTERACTION WITH ANKRD17</scope>
</reference>
<organism>
    <name type="scientific">Homo sapiens</name>
    <name type="common">Human</name>
    <dbReference type="NCBI Taxonomy" id="9606"/>
    <lineage>
        <taxon>Eukaryota</taxon>
        <taxon>Metazoa</taxon>
        <taxon>Chordata</taxon>
        <taxon>Craniata</taxon>
        <taxon>Vertebrata</taxon>
        <taxon>Euteleostomi</taxon>
        <taxon>Mammalia</taxon>
        <taxon>Eutheria</taxon>
        <taxon>Euarchontoglires</taxon>
        <taxon>Primates</taxon>
        <taxon>Haplorrhini</taxon>
        <taxon>Catarrhini</taxon>
        <taxon>Hominidae</taxon>
        <taxon>Homo</taxon>
    </lineage>
</organism>
<feature type="chain" id="PRO_0000085769" description="Cyclin-dependent kinase 2">
    <location>
        <begin position="1"/>
        <end position="298"/>
    </location>
</feature>
<feature type="domain" description="Protein kinase" evidence="3">
    <location>
        <begin position="4"/>
        <end position="286"/>
    </location>
</feature>
<feature type="active site" description="Proton acceptor">
    <location>
        <position position="127"/>
    </location>
</feature>
<feature type="binding site" evidence="3 22 41">
    <location>
        <begin position="10"/>
        <end position="18"/>
    </location>
    <ligand>
        <name>ATP</name>
        <dbReference type="ChEBI" id="CHEBI:30616"/>
    </ligand>
</feature>
<feature type="binding site" evidence="3 22 41">
    <location>
        <position position="33"/>
    </location>
    <ligand>
        <name>ATP</name>
        <dbReference type="ChEBI" id="CHEBI:30616"/>
    </ligand>
</feature>
<feature type="binding site" evidence="3 22 41">
    <location>
        <begin position="81"/>
        <end position="83"/>
    </location>
    <ligand>
        <name>ATP</name>
        <dbReference type="ChEBI" id="CHEBI:30616"/>
    </ligand>
</feature>
<feature type="binding site" evidence="3 22 41">
    <location>
        <position position="86"/>
    </location>
    <ligand>
        <name>ATP</name>
        <dbReference type="ChEBI" id="CHEBI:30616"/>
    </ligand>
</feature>
<feature type="binding site" evidence="3 22 41">
    <location>
        <begin position="129"/>
        <end position="132"/>
    </location>
    <ligand>
        <name>ATP</name>
        <dbReference type="ChEBI" id="CHEBI:30616"/>
    </ligand>
</feature>
<feature type="binding site" evidence="41">
    <location>
        <position position="132"/>
    </location>
    <ligand>
        <name>Mg(2+)</name>
        <dbReference type="ChEBI" id="CHEBI:18420"/>
    </ligand>
</feature>
<feature type="binding site" evidence="3 22 41">
    <location>
        <position position="145"/>
    </location>
    <ligand>
        <name>ATP</name>
        <dbReference type="ChEBI" id="CHEBI:30616"/>
    </ligand>
</feature>
<feature type="binding site" evidence="41">
    <location>
        <position position="145"/>
    </location>
    <ligand>
        <name>Mg(2+)</name>
        <dbReference type="ChEBI" id="CHEBI:18420"/>
    </ligand>
</feature>
<feature type="site" description="CDK7 binding" evidence="24">
    <location>
        <position position="9"/>
    </location>
</feature>
<feature type="site" description="CDK7 binding" evidence="24">
    <location>
        <begin position="88"/>
        <end position="89"/>
    </location>
</feature>
<feature type="site" description="CDK7 binding" evidence="24">
    <location>
        <position position="166"/>
    </location>
</feature>
<feature type="modified residue" description="N-acetylmethionine" evidence="66">
    <location>
        <position position="1"/>
    </location>
</feature>
<feature type="modified residue" description="N6-acetyllysine" evidence="64">
    <location>
        <position position="6"/>
    </location>
</feature>
<feature type="modified residue" description="Phosphothreonine" evidence="15 22">
    <location>
        <position position="14"/>
    </location>
</feature>
<feature type="modified residue" description="Phosphotyrosine; by WEE1" evidence="15 22 65">
    <location>
        <position position="15"/>
    </location>
</feature>
<feature type="modified residue" description="Phosphotyrosine" evidence="63">
    <location>
        <position position="19"/>
    </location>
</feature>
<feature type="modified residue" description="Phosphothreonine; by CAK and CCRK" evidence="15 16 21 22 26 34 36 41 59">
    <location>
        <position position="160"/>
    </location>
</feature>
<feature type="splice variant" id="VSP_041998" description="In isoform 2." evidence="58">
    <location>
        <begin position="163"/>
        <end position="196"/>
    </location>
</feature>
<feature type="sequence variant" id="VAR_016157" description="In dbSNP:rs3087335.">
    <original>Y</original>
    <variation>S</variation>
    <location>
        <position position="15"/>
    </location>
</feature>
<feature type="sequence variant" id="VAR_053927" description="In dbSNP:rs11554376.">
    <original>V</original>
    <variation>L</variation>
    <location>
        <position position="18"/>
    </location>
</feature>
<feature type="sequence variant" id="VAR_041972" description="In a glioblastoma multiforme sample; somatic mutation." evidence="23">
    <original>P</original>
    <variation>L</variation>
    <location>
        <position position="45"/>
    </location>
</feature>
<feature type="sequence variant" id="VAR_019988" description="In dbSNP:rs2069413." evidence="23 55">
    <original>T</original>
    <variation>S</variation>
    <location>
        <position position="290"/>
    </location>
</feature>
<feature type="mutagenesis site" description="Reduced phosphorylation by CAK." evidence="24">
    <original>K</original>
    <variation>F</variation>
    <location>
        <position position="9"/>
    </location>
</feature>
<feature type="mutagenesis site" description="2-fold increase in activity." evidence="15">
    <original>T</original>
    <variation>A</variation>
    <location>
        <position position="14"/>
    </location>
</feature>
<feature type="mutagenesis site" description="2-fold increase in activity." evidence="15">
    <original>Y</original>
    <variation>F</variation>
    <location>
        <position position="15"/>
    </location>
</feature>
<feature type="mutagenesis site" description="Reduced phosphorylation by CAK." evidence="24">
    <original>KK</original>
    <variation>EV</variation>
    <location>
        <begin position="88"/>
        <end position="89"/>
    </location>
</feature>
<feature type="mutagenesis site" description="Abolishes activity." evidence="15">
    <original>T</original>
    <variation>A</variation>
    <location>
        <position position="160"/>
    </location>
</feature>
<feature type="mutagenesis site" description="Reduced phosphorylation by CAK and reduced kinase activity." evidence="24">
    <original>L</original>
    <variation>R</variation>
    <location>
        <position position="166"/>
    </location>
</feature>
<feature type="sequence conflict" description="In Ref. 5; BAA32794." evidence="58" ref="5">
    <original>EKIGE</original>
    <variation>AQIGQ</variation>
    <location>
        <begin position="8"/>
        <end position="12"/>
    </location>
</feature>
<feature type="sequence conflict" description="In Ref. 5; BAA32794." evidence="58" ref="5">
    <original>LTGEV</original>
    <variation>STGQM</variation>
    <location>
        <begin position="25"/>
        <end position="29"/>
    </location>
</feature>
<feature type="sequence conflict" description="In Ref. 5; BAA32794." evidence="58" ref="5">
    <original>NKRISA</original>
    <variation>YKRFST</variation>
    <location>
        <begin position="272"/>
        <end position="277"/>
    </location>
</feature>
<feature type="sequence conflict" description="In Ref. 5; BAA32794." evidence="58" ref="5">
    <original>FQ</original>
    <variation>LE</variation>
    <location>
        <begin position="286"/>
        <end position="287"/>
    </location>
</feature>
<feature type="strand" evidence="75">
    <location>
        <begin position="3"/>
        <end position="12"/>
    </location>
</feature>
<feature type="strand" evidence="75">
    <location>
        <begin position="14"/>
        <end position="23"/>
    </location>
</feature>
<feature type="turn" evidence="75">
    <location>
        <begin position="24"/>
        <end position="26"/>
    </location>
</feature>
<feature type="strand" evidence="75">
    <location>
        <begin position="29"/>
        <end position="34"/>
    </location>
</feature>
<feature type="strand" evidence="72">
    <location>
        <begin position="39"/>
        <end position="41"/>
    </location>
</feature>
<feature type="strand" evidence="70">
    <location>
        <begin position="42"/>
        <end position="44"/>
    </location>
</feature>
<feature type="helix" evidence="75">
    <location>
        <begin position="46"/>
        <end position="54"/>
    </location>
</feature>
<feature type="helix" evidence="75">
    <location>
        <begin position="55"/>
        <end position="57"/>
    </location>
</feature>
<feature type="strand" evidence="75">
    <location>
        <begin position="66"/>
        <end position="72"/>
    </location>
</feature>
<feature type="strand" evidence="75">
    <location>
        <begin position="75"/>
        <end position="81"/>
    </location>
</feature>
<feature type="strand" evidence="75">
    <location>
        <begin position="84"/>
        <end position="86"/>
    </location>
</feature>
<feature type="helix" evidence="75">
    <location>
        <begin position="87"/>
        <end position="93"/>
    </location>
</feature>
<feature type="turn" evidence="75">
    <location>
        <begin position="94"/>
        <end position="97"/>
    </location>
</feature>
<feature type="helix" evidence="75">
    <location>
        <begin position="101"/>
        <end position="120"/>
    </location>
</feature>
<feature type="helix" evidence="75">
    <location>
        <begin position="130"/>
        <end position="132"/>
    </location>
</feature>
<feature type="strand" evidence="75">
    <location>
        <begin position="133"/>
        <end position="135"/>
    </location>
</feature>
<feature type="strand" evidence="73">
    <location>
        <begin position="137"/>
        <end position="139"/>
    </location>
</feature>
<feature type="strand" evidence="75">
    <location>
        <begin position="141"/>
        <end position="143"/>
    </location>
</feature>
<feature type="helix" evidence="75">
    <location>
        <begin position="148"/>
        <end position="152"/>
    </location>
</feature>
<feature type="turn" evidence="74">
    <location>
        <begin position="153"/>
        <end position="156"/>
    </location>
</feature>
<feature type="strand" evidence="76">
    <location>
        <begin position="157"/>
        <end position="159"/>
    </location>
</feature>
<feature type="turn" evidence="71">
    <location>
        <begin position="160"/>
        <end position="163"/>
    </location>
</feature>
<feature type="helix" evidence="75">
    <location>
        <begin position="166"/>
        <end position="168"/>
    </location>
</feature>
<feature type="helix" evidence="75">
    <location>
        <begin position="171"/>
        <end position="174"/>
    </location>
</feature>
<feature type="strand" evidence="68">
    <location>
        <begin position="178"/>
        <end position="180"/>
    </location>
</feature>
<feature type="helix" evidence="75">
    <location>
        <begin position="183"/>
        <end position="198"/>
    </location>
</feature>
<feature type="helix" evidence="75">
    <location>
        <begin position="208"/>
        <end position="219"/>
    </location>
</feature>
<feature type="turn" evidence="75">
    <location>
        <begin position="224"/>
        <end position="226"/>
    </location>
</feature>
<feature type="helix" evidence="75">
    <location>
        <begin position="230"/>
        <end position="232"/>
    </location>
</feature>
<feature type="helix" evidence="75">
    <location>
        <begin position="248"/>
        <end position="251"/>
    </location>
</feature>
<feature type="strand" evidence="67">
    <location>
        <begin position="252"/>
        <end position="254"/>
    </location>
</feature>
<feature type="helix" evidence="75">
    <location>
        <begin position="257"/>
        <end position="266"/>
    </location>
</feature>
<feature type="helix" evidence="75">
    <location>
        <begin position="271"/>
        <end position="273"/>
    </location>
</feature>
<feature type="helix" evidence="75">
    <location>
        <begin position="277"/>
        <end position="281"/>
    </location>
</feature>
<feature type="helix" evidence="75">
    <location>
        <begin position="284"/>
        <end position="286"/>
    </location>
</feature>
<feature type="turn" evidence="69">
    <location>
        <begin position="287"/>
        <end position="289"/>
    </location>
</feature>
<protein>
    <recommendedName>
        <fullName>Cyclin-dependent kinase 2</fullName>
        <ecNumber evidence="15 45 46 47 53">2.7.11.22</ecNumber>
    </recommendedName>
    <alternativeName>
        <fullName>Cell division protein kinase 2</fullName>
    </alternativeName>
    <alternativeName>
        <fullName>p33 protein kinase</fullName>
    </alternativeName>
</protein>
<keyword id="KW-0002">3D-structure</keyword>
<keyword id="KW-0007">Acetylation</keyword>
<keyword id="KW-0025">Alternative splicing</keyword>
<keyword id="KW-0067">ATP-binding</keyword>
<keyword id="KW-0131">Cell cycle</keyword>
<keyword id="KW-0132">Cell division</keyword>
<keyword id="KW-0963">Cytoplasm</keyword>
<keyword id="KW-0206">Cytoskeleton</keyword>
<keyword id="KW-0227">DNA damage</keyword>
<keyword id="KW-0234">DNA repair</keyword>
<keyword id="KW-0967">Endosome</keyword>
<keyword id="KW-0418">Kinase</keyword>
<keyword id="KW-0460">Magnesium</keyword>
<keyword id="KW-0469">Meiosis</keyword>
<keyword id="KW-0479">Metal-binding</keyword>
<keyword id="KW-0498">Mitosis</keyword>
<keyword id="KW-0547">Nucleotide-binding</keyword>
<keyword id="KW-0539">Nucleus</keyword>
<keyword id="KW-0597">Phosphoprotein</keyword>
<keyword id="KW-1267">Proteomics identification</keyword>
<keyword id="KW-1185">Reference proteome</keyword>
<keyword id="KW-0702">S-nitrosylation</keyword>
<keyword id="KW-0723">Serine/threonine-protein kinase</keyword>
<keyword id="KW-0808">Transferase</keyword>
<name>CDK2_HUMAN</name>
<accession>P24941</accession>
<accession>A8K7C6</accession>
<accession>O75100</accession>
<dbReference type="EC" id="2.7.11.22" evidence="15 45 46 47 53"/>
<dbReference type="EMBL" id="X61622">
    <property type="protein sequence ID" value="CAA43807.1"/>
    <property type="molecule type" value="mRNA"/>
</dbReference>
<dbReference type="EMBL" id="X62071">
    <property type="protein sequence ID" value="CAA43985.1"/>
    <property type="molecule type" value="mRNA"/>
</dbReference>
<dbReference type="EMBL" id="M68520">
    <property type="protein sequence ID" value="AAA35667.1"/>
    <property type="molecule type" value="mRNA"/>
</dbReference>
<dbReference type="EMBL" id="AB012305">
    <property type="protein sequence ID" value="BAA32794.1"/>
    <property type="molecule type" value="mRNA"/>
</dbReference>
<dbReference type="EMBL" id="BT006821">
    <property type="protein sequence ID" value="AAP35467.1"/>
    <property type="molecule type" value="mRNA"/>
</dbReference>
<dbReference type="EMBL" id="AF512553">
    <property type="protein sequence ID" value="AAM34794.1"/>
    <property type="molecule type" value="Genomic_DNA"/>
</dbReference>
<dbReference type="EMBL" id="AK291941">
    <property type="protein sequence ID" value="BAF84630.1"/>
    <property type="molecule type" value="mRNA"/>
</dbReference>
<dbReference type="EMBL" id="AC025162">
    <property type="status" value="NOT_ANNOTATED_CDS"/>
    <property type="molecule type" value="Genomic_DNA"/>
</dbReference>
<dbReference type="EMBL" id="AC034102">
    <property type="status" value="NOT_ANNOTATED_CDS"/>
    <property type="molecule type" value="Genomic_DNA"/>
</dbReference>
<dbReference type="EMBL" id="CH471054">
    <property type="protein sequence ID" value="EAW96858.1"/>
    <property type="molecule type" value="Genomic_DNA"/>
</dbReference>
<dbReference type="EMBL" id="BC003065">
    <property type="protein sequence ID" value="AAH03065.1"/>
    <property type="molecule type" value="mRNA"/>
</dbReference>
<dbReference type="CCDS" id="CCDS8898.1">
    <molecule id="P24941-1"/>
</dbReference>
<dbReference type="CCDS" id="CCDS8899.1">
    <molecule id="P24941-2"/>
</dbReference>
<dbReference type="PIR" id="A41227">
    <property type="entry name" value="A41227"/>
</dbReference>
<dbReference type="RefSeq" id="NP_001277159.1">
    <property type="nucleotide sequence ID" value="NM_001290230.1"/>
</dbReference>
<dbReference type="RefSeq" id="NP_001789.2">
    <molecule id="P24941-1"/>
    <property type="nucleotide sequence ID" value="NM_001798.4"/>
</dbReference>
<dbReference type="RefSeq" id="NP_439892.2">
    <molecule id="P24941-2"/>
    <property type="nucleotide sequence ID" value="NM_052827.4"/>
</dbReference>
<dbReference type="PDB" id="1AQ1">
    <property type="method" value="X-ray"/>
    <property type="resolution" value="2.00 A"/>
    <property type="chains" value="A=1-298"/>
</dbReference>
<dbReference type="PDB" id="1B38">
    <property type="method" value="X-ray"/>
    <property type="resolution" value="2.00 A"/>
    <property type="chains" value="A=1-298"/>
</dbReference>
<dbReference type="PDB" id="1B39">
    <property type="method" value="X-ray"/>
    <property type="resolution" value="2.10 A"/>
    <property type="chains" value="A=1-298"/>
</dbReference>
<dbReference type="PDB" id="1BUH">
    <property type="method" value="X-ray"/>
    <property type="resolution" value="2.60 A"/>
    <property type="chains" value="A=1-298"/>
</dbReference>
<dbReference type="PDB" id="1CKP">
    <property type="method" value="X-ray"/>
    <property type="resolution" value="2.05 A"/>
    <property type="chains" value="A=1-298"/>
</dbReference>
<dbReference type="PDB" id="1DI8">
    <property type="method" value="X-ray"/>
    <property type="resolution" value="2.20 A"/>
    <property type="chains" value="A=1-298"/>
</dbReference>
<dbReference type="PDB" id="1DM2">
    <property type="method" value="X-ray"/>
    <property type="resolution" value="2.10 A"/>
    <property type="chains" value="A=1-298"/>
</dbReference>
<dbReference type="PDB" id="1E1V">
    <property type="method" value="X-ray"/>
    <property type="resolution" value="1.95 A"/>
    <property type="chains" value="A=1-298"/>
</dbReference>
<dbReference type="PDB" id="1E1X">
    <property type="method" value="X-ray"/>
    <property type="resolution" value="1.85 A"/>
    <property type="chains" value="A=1-298"/>
</dbReference>
<dbReference type="PDB" id="1E9H">
    <property type="method" value="X-ray"/>
    <property type="resolution" value="2.50 A"/>
    <property type="chains" value="A/C=1-296"/>
</dbReference>
<dbReference type="PDB" id="1F5Q">
    <property type="method" value="X-ray"/>
    <property type="resolution" value="2.50 A"/>
    <property type="chains" value="A/C=1-298"/>
</dbReference>
<dbReference type="PDB" id="1FIN">
    <property type="method" value="X-ray"/>
    <property type="resolution" value="2.30 A"/>
    <property type="chains" value="A/C=1-298"/>
</dbReference>
<dbReference type="PDB" id="1FQ1">
    <property type="method" value="X-ray"/>
    <property type="resolution" value="3.00 A"/>
    <property type="chains" value="B=1-298"/>
</dbReference>
<dbReference type="PDB" id="1FVT">
    <property type="method" value="X-ray"/>
    <property type="resolution" value="2.20 A"/>
    <property type="chains" value="A=1-298"/>
</dbReference>
<dbReference type="PDB" id="1FVV">
    <property type="method" value="X-ray"/>
    <property type="resolution" value="2.80 A"/>
    <property type="chains" value="A/C=1-298"/>
</dbReference>
<dbReference type="PDB" id="1G5S">
    <property type="method" value="X-ray"/>
    <property type="resolution" value="2.61 A"/>
    <property type="chains" value="A=1-298"/>
</dbReference>
<dbReference type="PDB" id="1GIH">
    <property type="method" value="X-ray"/>
    <property type="resolution" value="2.80 A"/>
    <property type="chains" value="A=1-298"/>
</dbReference>
<dbReference type="PDB" id="1GII">
    <property type="method" value="X-ray"/>
    <property type="resolution" value="2.00 A"/>
    <property type="chains" value="A=1-298"/>
</dbReference>
<dbReference type="PDB" id="1GIJ">
    <property type="method" value="X-ray"/>
    <property type="resolution" value="2.20 A"/>
    <property type="chains" value="A=1-298"/>
</dbReference>
<dbReference type="PDB" id="1GY3">
    <property type="method" value="X-ray"/>
    <property type="resolution" value="2.70 A"/>
    <property type="chains" value="A/C=1-296"/>
</dbReference>
<dbReference type="PDB" id="1GZ8">
    <property type="method" value="X-ray"/>
    <property type="resolution" value="1.30 A"/>
    <property type="chains" value="A=1-298"/>
</dbReference>
<dbReference type="PDB" id="1H00">
    <property type="method" value="X-ray"/>
    <property type="resolution" value="1.60 A"/>
    <property type="chains" value="A=1-298"/>
</dbReference>
<dbReference type="PDB" id="1H01">
    <property type="method" value="X-ray"/>
    <property type="resolution" value="1.79 A"/>
    <property type="chains" value="A=1-298"/>
</dbReference>
<dbReference type="PDB" id="1H07">
    <property type="method" value="X-ray"/>
    <property type="resolution" value="1.85 A"/>
    <property type="chains" value="A=1-298"/>
</dbReference>
<dbReference type="PDB" id="1H08">
    <property type="method" value="X-ray"/>
    <property type="resolution" value="1.80 A"/>
    <property type="chains" value="A=1-298"/>
</dbReference>
<dbReference type="PDB" id="1H0V">
    <property type="method" value="X-ray"/>
    <property type="resolution" value="1.90 A"/>
    <property type="chains" value="A=1-298"/>
</dbReference>
<dbReference type="PDB" id="1H0W">
    <property type="method" value="X-ray"/>
    <property type="resolution" value="2.10 A"/>
    <property type="chains" value="A=1-298"/>
</dbReference>
<dbReference type="PDB" id="1H1P">
    <property type="method" value="X-ray"/>
    <property type="resolution" value="2.10 A"/>
    <property type="chains" value="A/C=1-298"/>
</dbReference>
<dbReference type="PDB" id="1H1Q">
    <property type="method" value="X-ray"/>
    <property type="resolution" value="2.50 A"/>
    <property type="chains" value="A/C=1-298"/>
</dbReference>
<dbReference type="PDB" id="1H1R">
    <property type="method" value="X-ray"/>
    <property type="resolution" value="2.00 A"/>
    <property type="chains" value="A/C=1-298"/>
</dbReference>
<dbReference type="PDB" id="1H1S">
    <property type="method" value="X-ray"/>
    <property type="resolution" value="2.00 A"/>
    <property type="chains" value="A/C=1-298"/>
</dbReference>
<dbReference type="PDB" id="1H24">
    <property type="method" value="X-ray"/>
    <property type="resolution" value="2.50 A"/>
    <property type="chains" value="A/C=1-298"/>
</dbReference>
<dbReference type="PDB" id="1H25">
    <property type="method" value="X-ray"/>
    <property type="resolution" value="2.50 A"/>
    <property type="chains" value="A/C=1-298"/>
</dbReference>
<dbReference type="PDB" id="1H26">
    <property type="method" value="X-ray"/>
    <property type="resolution" value="2.24 A"/>
    <property type="chains" value="A/C=1-298"/>
</dbReference>
<dbReference type="PDB" id="1H27">
    <property type="method" value="X-ray"/>
    <property type="resolution" value="2.20 A"/>
    <property type="chains" value="A/C=1-298"/>
</dbReference>
<dbReference type="PDB" id="1H28">
    <property type="method" value="X-ray"/>
    <property type="resolution" value="2.80 A"/>
    <property type="chains" value="A/C=1-298"/>
</dbReference>
<dbReference type="PDB" id="1HCK">
    <property type="method" value="X-ray"/>
    <property type="resolution" value="1.90 A"/>
    <property type="chains" value="A=1-298"/>
</dbReference>
<dbReference type="PDB" id="1HCL">
    <property type="method" value="X-ray"/>
    <property type="resolution" value="1.80 A"/>
    <property type="chains" value="A=1-298"/>
</dbReference>
<dbReference type="PDB" id="1JST">
    <property type="method" value="X-ray"/>
    <property type="resolution" value="2.60 A"/>
    <property type="chains" value="A/C=1-298"/>
</dbReference>
<dbReference type="PDB" id="1JSU">
    <property type="method" value="X-ray"/>
    <property type="resolution" value="2.30 A"/>
    <property type="chains" value="A=1-298"/>
</dbReference>
<dbReference type="PDB" id="1JSV">
    <property type="method" value="X-ray"/>
    <property type="resolution" value="1.96 A"/>
    <property type="chains" value="A=1-298"/>
</dbReference>
<dbReference type="PDB" id="1JVP">
    <property type="method" value="X-ray"/>
    <property type="resolution" value="1.53 A"/>
    <property type="chains" value="P=1-298"/>
</dbReference>
<dbReference type="PDB" id="1KE5">
    <property type="method" value="X-ray"/>
    <property type="resolution" value="2.20 A"/>
    <property type="chains" value="A=1-298"/>
</dbReference>
<dbReference type="PDB" id="1KE6">
    <property type="method" value="X-ray"/>
    <property type="resolution" value="2.00 A"/>
    <property type="chains" value="A=1-298"/>
</dbReference>
<dbReference type="PDB" id="1KE7">
    <property type="method" value="X-ray"/>
    <property type="resolution" value="2.00 A"/>
    <property type="chains" value="A=1-298"/>
</dbReference>
<dbReference type="PDB" id="1KE8">
    <property type="method" value="X-ray"/>
    <property type="resolution" value="2.00 A"/>
    <property type="chains" value="A=1-298"/>
</dbReference>
<dbReference type="PDB" id="1KE9">
    <property type="method" value="X-ray"/>
    <property type="resolution" value="2.00 A"/>
    <property type="chains" value="A=1-298"/>
</dbReference>
<dbReference type="PDB" id="1OGU">
    <property type="method" value="X-ray"/>
    <property type="resolution" value="2.60 A"/>
    <property type="chains" value="A/C=1-298"/>
</dbReference>
<dbReference type="PDB" id="1OI9">
    <property type="method" value="X-ray"/>
    <property type="resolution" value="2.10 A"/>
    <property type="chains" value="A/C=1-298"/>
</dbReference>
<dbReference type="PDB" id="1OIQ">
    <property type="method" value="X-ray"/>
    <property type="resolution" value="2.31 A"/>
    <property type="chains" value="A=1-298"/>
</dbReference>
<dbReference type="PDB" id="1OIR">
    <property type="method" value="X-ray"/>
    <property type="resolution" value="1.91 A"/>
    <property type="chains" value="A=1-298"/>
</dbReference>
<dbReference type="PDB" id="1OIT">
    <property type="method" value="X-ray"/>
    <property type="resolution" value="1.60 A"/>
    <property type="chains" value="A=1-298"/>
</dbReference>
<dbReference type="PDB" id="1OIU">
    <property type="method" value="X-ray"/>
    <property type="resolution" value="2.00 A"/>
    <property type="chains" value="A/C=1-298"/>
</dbReference>
<dbReference type="PDB" id="1OIY">
    <property type="method" value="X-ray"/>
    <property type="resolution" value="2.40 A"/>
    <property type="chains" value="A/C=1-298"/>
</dbReference>
<dbReference type="PDB" id="1OKV">
    <property type="method" value="X-ray"/>
    <property type="resolution" value="2.40 A"/>
    <property type="chains" value="A/C=1-298"/>
</dbReference>
<dbReference type="PDB" id="1OKW">
    <property type="method" value="X-ray"/>
    <property type="resolution" value="2.50 A"/>
    <property type="chains" value="A/C=1-298"/>
</dbReference>
<dbReference type="PDB" id="1OL1">
    <property type="method" value="X-ray"/>
    <property type="resolution" value="2.90 A"/>
    <property type="chains" value="A/C=1-298"/>
</dbReference>
<dbReference type="PDB" id="1OL2">
    <property type="method" value="X-ray"/>
    <property type="resolution" value="2.60 A"/>
    <property type="chains" value="A/C=1-298"/>
</dbReference>
<dbReference type="PDB" id="1P2A">
    <property type="method" value="X-ray"/>
    <property type="resolution" value="2.50 A"/>
    <property type="chains" value="A=1-298"/>
</dbReference>
<dbReference type="PDB" id="1P5E">
    <property type="method" value="X-ray"/>
    <property type="resolution" value="2.22 A"/>
    <property type="chains" value="A/C=1-298"/>
</dbReference>
<dbReference type="PDB" id="1PF8">
    <property type="method" value="X-ray"/>
    <property type="resolution" value="2.51 A"/>
    <property type="chains" value="A=1-298"/>
</dbReference>
<dbReference type="PDB" id="1PKD">
    <property type="method" value="X-ray"/>
    <property type="resolution" value="2.30 A"/>
    <property type="chains" value="A/C=1-296"/>
</dbReference>
<dbReference type="PDB" id="1PW2">
    <property type="method" value="X-ray"/>
    <property type="resolution" value="1.95 A"/>
    <property type="chains" value="A=1-298"/>
</dbReference>
<dbReference type="PDB" id="1PXI">
    <property type="method" value="X-ray"/>
    <property type="resolution" value="1.95 A"/>
    <property type="chains" value="A=1-298"/>
</dbReference>
<dbReference type="PDB" id="1PXJ">
    <property type="method" value="X-ray"/>
    <property type="resolution" value="2.30 A"/>
    <property type="chains" value="A=1-298"/>
</dbReference>
<dbReference type="PDB" id="1PXK">
    <property type="method" value="X-ray"/>
    <property type="resolution" value="2.80 A"/>
    <property type="chains" value="A=1-298"/>
</dbReference>
<dbReference type="PDB" id="1PXL">
    <property type="method" value="X-ray"/>
    <property type="resolution" value="2.50 A"/>
    <property type="chains" value="A=1-298"/>
</dbReference>
<dbReference type="PDB" id="1PXM">
    <property type="method" value="X-ray"/>
    <property type="resolution" value="2.53 A"/>
    <property type="chains" value="A=1-298"/>
</dbReference>
<dbReference type="PDB" id="1PXN">
    <property type="method" value="X-ray"/>
    <property type="resolution" value="2.50 A"/>
    <property type="chains" value="A=1-298"/>
</dbReference>
<dbReference type="PDB" id="1PXO">
    <property type="method" value="X-ray"/>
    <property type="resolution" value="1.96 A"/>
    <property type="chains" value="A=1-298"/>
</dbReference>
<dbReference type="PDB" id="1PXP">
    <property type="method" value="X-ray"/>
    <property type="resolution" value="2.30 A"/>
    <property type="chains" value="A=1-298"/>
</dbReference>
<dbReference type="PDB" id="1PYE">
    <property type="method" value="X-ray"/>
    <property type="resolution" value="2.00 A"/>
    <property type="chains" value="A=1-298"/>
</dbReference>
<dbReference type="PDB" id="1QMZ">
    <property type="method" value="X-ray"/>
    <property type="resolution" value="2.20 A"/>
    <property type="chains" value="A/C=1-298"/>
</dbReference>
<dbReference type="PDB" id="1R78">
    <property type="method" value="X-ray"/>
    <property type="resolution" value="2.00 A"/>
    <property type="chains" value="A=1-298"/>
</dbReference>
<dbReference type="PDB" id="1URC">
    <property type="method" value="X-ray"/>
    <property type="resolution" value="2.60 A"/>
    <property type="chains" value="A/C=1-298"/>
</dbReference>
<dbReference type="PDB" id="1URW">
    <property type="method" value="X-ray"/>
    <property type="resolution" value="1.60 A"/>
    <property type="chains" value="A=1-298"/>
</dbReference>
<dbReference type="PDB" id="1V1K">
    <property type="method" value="X-ray"/>
    <property type="resolution" value="2.31 A"/>
    <property type="chains" value="A=1-298"/>
</dbReference>
<dbReference type="PDB" id="1VYW">
    <property type="method" value="X-ray"/>
    <property type="resolution" value="2.30 A"/>
    <property type="chains" value="A/C=1-298"/>
</dbReference>
<dbReference type="PDB" id="1VYZ">
    <property type="method" value="X-ray"/>
    <property type="resolution" value="2.21 A"/>
    <property type="chains" value="A=1-298"/>
</dbReference>
<dbReference type="PDB" id="1W0X">
    <property type="method" value="X-ray"/>
    <property type="resolution" value="2.20 A"/>
    <property type="chains" value="C=1-298"/>
</dbReference>
<dbReference type="PDB" id="1W8C">
    <property type="method" value="X-ray"/>
    <property type="resolution" value="2.05 A"/>
    <property type="chains" value="A=1-298"/>
</dbReference>
<dbReference type="PDB" id="1W98">
    <property type="method" value="X-ray"/>
    <property type="resolution" value="2.15 A"/>
    <property type="chains" value="A=1-297"/>
</dbReference>
<dbReference type="PDB" id="1WCC">
    <property type="method" value="X-ray"/>
    <property type="resolution" value="2.20 A"/>
    <property type="chains" value="A=1-298"/>
</dbReference>
<dbReference type="PDB" id="1Y8Y">
    <property type="method" value="X-ray"/>
    <property type="resolution" value="2.00 A"/>
    <property type="chains" value="A=1-298"/>
</dbReference>
<dbReference type="PDB" id="1Y91">
    <property type="method" value="X-ray"/>
    <property type="resolution" value="2.15 A"/>
    <property type="chains" value="A=1-298"/>
</dbReference>
<dbReference type="PDB" id="1YKR">
    <property type="method" value="X-ray"/>
    <property type="resolution" value="1.80 A"/>
    <property type="chains" value="A=1-298"/>
</dbReference>
<dbReference type="PDB" id="2A0C">
    <property type="method" value="X-ray"/>
    <property type="resolution" value="1.95 A"/>
    <property type="chains" value="X=1-298"/>
</dbReference>
<dbReference type="PDB" id="2A4L">
    <property type="method" value="X-ray"/>
    <property type="resolution" value="2.40 A"/>
    <property type="chains" value="A=1-298"/>
</dbReference>
<dbReference type="PDB" id="2B52">
    <property type="method" value="X-ray"/>
    <property type="resolution" value="1.88 A"/>
    <property type="chains" value="A=1-298"/>
</dbReference>
<dbReference type="PDB" id="2B53">
    <property type="method" value="X-ray"/>
    <property type="resolution" value="2.00 A"/>
    <property type="chains" value="A=1-298"/>
</dbReference>
<dbReference type="PDB" id="2B54">
    <property type="method" value="X-ray"/>
    <property type="resolution" value="1.85 A"/>
    <property type="chains" value="A=1-298"/>
</dbReference>
<dbReference type="PDB" id="2B55">
    <property type="method" value="X-ray"/>
    <property type="resolution" value="1.85 A"/>
    <property type="chains" value="A=1-298"/>
</dbReference>
<dbReference type="PDB" id="2BHE">
    <property type="method" value="X-ray"/>
    <property type="resolution" value="1.90 A"/>
    <property type="chains" value="A=1-298"/>
</dbReference>
<dbReference type="PDB" id="2BHH">
    <property type="method" value="X-ray"/>
    <property type="resolution" value="2.60 A"/>
    <property type="chains" value="A=1-298"/>
</dbReference>
<dbReference type="PDB" id="2BKZ">
    <property type="method" value="X-ray"/>
    <property type="resolution" value="2.60 A"/>
    <property type="chains" value="A/C=1-298"/>
</dbReference>
<dbReference type="PDB" id="2BPM">
    <property type="method" value="X-ray"/>
    <property type="resolution" value="2.40 A"/>
    <property type="chains" value="A/C=1-298"/>
</dbReference>
<dbReference type="PDB" id="2BTR">
    <property type="method" value="X-ray"/>
    <property type="resolution" value="1.85 A"/>
    <property type="chains" value="A=1-298"/>
</dbReference>
<dbReference type="PDB" id="2BTS">
    <property type="method" value="X-ray"/>
    <property type="resolution" value="1.99 A"/>
    <property type="chains" value="A=1-298"/>
</dbReference>
<dbReference type="PDB" id="2C4G">
    <property type="method" value="X-ray"/>
    <property type="resolution" value="2.70 A"/>
    <property type="chains" value="A/C=1-298"/>
</dbReference>
<dbReference type="PDB" id="2C5N">
    <property type="method" value="X-ray"/>
    <property type="resolution" value="2.10 A"/>
    <property type="chains" value="A/C=1-298"/>
</dbReference>
<dbReference type="PDB" id="2C5O">
    <property type="method" value="X-ray"/>
    <property type="resolution" value="2.10 A"/>
    <property type="chains" value="A/C=1-298"/>
</dbReference>
<dbReference type="PDB" id="2C5V">
    <property type="method" value="X-ray"/>
    <property type="resolution" value="2.90 A"/>
    <property type="chains" value="A/C=1-298"/>
</dbReference>
<dbReference type="PDB" id="2C5X">
    <property type="method" value="X-ray"/>
    <property type="resolution" value="2.90 A"/>
    <property type="chains" value="A/C=1-298"/>
</dbReference>
<dbReference type="PDB" id="2C5Y">
    <property type="method" value="X-ray"/>
    <property type="resolution" value="2.25 A"/>
    <property type="chains" value="A=1-298"/>
</dbReference>
<dbReference type="PDB" id="2C68">
    <property type="method" value="X-ray"/>
    <property type="resolution" value="1.95 A"/>
    <property type="chains" value="A=1-298"/>
</dbReference>
<dbReference type="PDB" id="2C69">
    <property type="method" value="X-ray"/>
    <property type="resolution" value="2.10 A"/>
    <property type="chains" value="A=1-298"/>
</dbReference>
<dbReference type="PDB" id="2C6I">
    <property type="method" value="X-ray"/>
    <property type="resolution" value="1.80 A"/>
    <property type="chains" value="A=1-298"/>
</dbReference>
<dbReference type="PDB" id="2C6K">
    <property type="method" value="X-ray"/>
    <property type="resolution" value="1.90 A"/>
    <property type="chains" value="A=1-298"/>
</dbReference>
<dbReference type="PDB" id="2C6L">
    <property type="method" value="X-ray"/>
    <property type="resolution" value="2.30 A"/>
    <property type="chains" value="A=1-298"/>
</dbReference>
<dbReference type="PDB" id="2C6M">
    <property type="method" value="X-ray"/>
    <property type="resolution" value="1.90 A"/>
    <property type="chains" value="A=1-298"/>
</dbReference>
<dbReference type="PDB" id="2C6O">
    <property type="method" value="X-ray"/>
    <property type="resolution" value="2.10 A"/>
    <property type="chains" value="A=1-298"/>
</dbReference>
<dbReference type="PDB" id="2C6T">
    <property type="method" value="X-ray"/>
    <property type="resolution" value="2.61 A"/>
    <property type="chains" value="A/C=1-298"/>
</dbReference>
<dbReference type="PDB" id="2CCH">
    <property type="method" value="X-ray"/>
    <property type="resolution" value="1.70 A"/>
    <property type="chains" value="A/C=1-298"/>
</dbReference>
<dbReference type="PDB" id="2CCI">
    <property type="method" value="X-ray"/>
    <property type="resolution" value="2.70 A"/>
    <property type="chains" value="A/C=1-298"/>
</dbReference>
<dbReference type="PDB" id="2CJM">
    <property type="method" value="X-ray"/>
    <property type="resolution" value="2.30 A"/>
    <property type="chains" value="A/C=1-298"/>
</dbReference>
<dbReference type="PDB" id="2CLX">
    <property type="method" value="X-ray"/>
    <property type="resolution" value="1.80 A"/>
    <property type="chains" value="A=1-298"/>
</dbReference>
<dbReference type="PDB" id="2DS1">
    <property type="method" value="X-ray"/>
    <property type="resolution" value="2.00 A"/>
    <property type="chains" value="A=1-298"/>
</dbReference>
<dbReference type="PDB" id="2DUV">
    <property type="method" value="X-ray"/>
    <property type="resolution" value="2.20 A"/>
    <property type="chains" value="A=1-298"/>
</dbReference>
<dbReference type="PDB" id="2EXM">
    <property type="method" value="X-ray"/>
    <property type="resolution" value="1.80 A"/>
    <property type="chains" value="A=1-298"/>
</dbReference>
<dbReference type="PDB" id="2FVD">
    <property type="method" value="X-ray"/>
    <property type="resolution" value="1.85 A"/>
    <property type="chains" value="A=1-298"/>
</dbReference>
<dbReference type="PDB" id="2G9X">
    <property type="method" value="X-ray"/>
    <property type="resolution" value="2.50 A"/>
    <property type="chains" value="A/C=1-298"/>
</dbReference>
<dbReference type="PDB" id="2I40">
    <property type="method" value="X-ray"/>
    <property type="resolution" value="2.80 A"/>
    <property type="chains" value="A/C=1-298"/>
</dbReference>
<dbReference type="PDB" id="2IW6">
    <property type="method" value="X-ray"/>
    <property type="resolution" value="2.30 A"/>
    <property type="chains" value="A/C=1-298"/>
</dbReference>
<dbReference type="PDB" id="2IW8">
    <property type="method" value="X-ray"/>
    <property type="resolution" value="2.30 A"/>
    <property type="chains" value="A/C=1-298"/>
</dbReference>
<dbReference type="PDB" id="2IW9">
    <property type="method" value="X-ray"/>
    <property type="resolution" value="2.00 A"/>
    <property type="chains" value="A/C=1-298"/>
</dbReference>
<dbReference type="PDB" id="2J9M">
    <property type="method" value="X-ray"/>
    <property type="resolution" value="2.50 A"/>
    <property type="chains" value="A=1-298"/>
</dbReference>
<dbReference type="PDB" id="2JGZ">
    <property type="method" value="X-ray"/>
    <property type="resolution" value="2.90 A"/>
    <property type="chains" value="A=1-288"/>
</dbReference>
<dbReference type="PDB" id="2R3F">
    <property type="method" value="X-ray"/>
    <property type="resolution" value="1.50 A"/>
    <property type="chains" value="A=1-298"/>
</dbReference>
<dbReference type="PDB" id="2R3G">
    <property type="method" value="X-ray"/>
    <property type="resolution" value="1.55 A"/>
    <property type="chains" value="A=1-298"/>
</dbReference>
<dbReference type="PDB" id="2R3H">
    <property type="method" value="X-ray"/>
    <property type="resolution" value="1.50 A"/>
    <property type="chains" value="A=1-298"/>
</dbReference>
<dbReference type="PDB" id="2R3I">
    <property type="method" value="X-ray"/>
    <property type="resolution" value="1.28 A"/>
    <property type="chains" value="A=1-298"/>
</dbReference>
<dbReference type="PDB" id="2R3J">
    <property type="method" value="X-ray"/>
    <property type="resolution" value="1.65 A"/>
    <property type="chains" value="A=1-298"/>
</dbReference>
<dbReference type="PDB" id="2R3K">
    <property type="method" value="X-ray"/>
    <property type="resolution" value="1.70 A"/>
    <property type="chains" value="A=1-298"/>
</dbReference>
<dbReference type="PDB" id="2R3L">
    <property type="method" value="X-ray"/>
    <property type="resolution" value="1.65 A"/>
    <property type="chains" value="A=1-298"/>
</dbReference>
<dbReference type="PDB" id="2R3M">
    <property type="method" value="X-ray"/>
    <property type="resolution" value="1.70 A"/>
    <property type="chains" value="A=1-298"/>
</dbReference>
<dbReference type="PDB" id="2R3N">
    <property type="method" value="X-ray"/>
    <property type="resolution" value="1.63 A"/>
    <property type="chains" value="A=1-298"/>
</dbReference>
<dbReference type="PDB" id="2R3O">
    <property type="method" value="X-ray"/>
    <property type="resolution" value="1.80 A"/>
    <property type="chains" value="A=1-298"/>
</dbReference>
<dbReference type="PDB" id="2R3P">
    <property type="method" value="X-ray"/>
    <property type="resolution" value="1.66 A"/>
    <property type="chains" value="A=1-298"/>
</dbReference>
<dbReference type="PDB" id="2R3Q">
    <property type="method" value="X-ray"/>
    <property type="resolution" value="1.35 A"/>
    <property type="chains" value="A=1-298"/>
</dbReference>
<dbReference type="PDB" id="2R3R">
    <property type="method" value="X-ray"/>
    <property type="resolution" value="1.47 A"/>
    <property type="chains" value="A=1-298"/>
</dbReference>
<dbReference type="PDB" id="2R64">
    <property type="method" value="X-ray"/>
    <property type="resolution" value="2.30 A"/>
    <property type="chains" value="A=1-298"/>
</dbReference>
<dbReference type="PDB" id="2UUE">
    <property type="method" value="X-ray"/>
    <property type="resolution" value="2.06 A"/>
    <property type="chains" value="A/C=1-298"/>
</dbReference>
<dbReference type="PDB" id="2UZB">
    <property type="method" value="X-ray"/>
    <property type="resolution" value="2.70 A"/>
    <property type="chains" value="A/C=1-298"/>
</dbReference>
<dbReference type="PDB" id="2UZD">
    <property type="method" value="X-ray"/>
    <property type="resolution" value="2.72 A"/>
    <property type="chains" value="A/C=1-298"/>
</dbReference>
<dbReference type="PDB" id="2UZE">
    <property type="method" value="X-ray"/>
    <property type="resolution" value="2.40 A"/>
    <property type="chains" value="A/C=1-298"/>
</dbReference>
<dbReference type="PDB" id="2UZL">
    <property type="method" value="X-ray"/>
    <property type="resolution" value="2.40 A"/>
    <property type="chains" value="A/C=1-298"/>
</dbReference>
<dbReference type="PDB" id="2UZN">
    <property type="method" value="X-ray"/>
    <property type="resolution" value="2.30 A"/>
    <property type="chains" value="A=1-298"/>
</dbReference>
<dbReference type="PDB" id="2UZO">
    <property type="method" value="X-ray"/>
    <property type="resolution" value="2.30 A"/>
    <property type="chains" value="A=1-298"/>
</dbReference>
<dbReference type="PDB" id="2V0D">
    <property type="method" value="X-ray"/>
    <property type="resolution" value="2.20 A"/>
    <property type="chains" value="A=1-298"/>
</dbReference>
<dbReference type="PDB" id="2V22">
    <property type="method" value="X-ray"/>
    <property type="resolution" value="2.60 A"/>
    <property type="chains" value="A/C=1-298"/>
</dbReference>
<dbReference type="PDB" id="2VTA">
    <property type="method" value="X-ray"/>
    <property type="resolution" value="2.00 A"/>
    <property type="chains" value="A=1-298"/>
</dbReference>
<dbReference type="PDB" id="2VTH">
    <property type="method" value="X-ray"/>
    <property type="resolution" value="1.90 A"/>
    <property type="chains" value="A=1-298"/>
</dbReference>
<dbReference type="PDB" id="2VTI">
    <property type="method" value="X-ray"/>
    <property type="resolution" value="2.00 A"/>
    <property type="chains" value="A=1-298"/>
</dbReference>
<dbReference type="PDB" id="2VTJ">
    <property type="method" value="X-ray"/>
    <property type="resolution" value="2.20 A"/>
    <property type="chains" value="A=1-298"/>
</dbReference>
<dbReference type="PDB" id="2VTL">
    <property type="method" value="X-ray"/>
    <property type="resolution" value="2.00 A"/>
    <property type="chains" value="A=1-298"/>
</dbReference>
<dbReference type="PDB" id="2VTM">
    <property type="method" value="X-ray"/>
    <property type="resolution" value="2.25 A"/>
    <property type="chains" value="A=1-298"/>
</dbReference>
<dbReference type="PDB" id="2VTN">
    <property type="method" value="X-ray"/>
    <property type="resolution" value="2.20 A"/>
    <property type="chains" value="A=1-298"/>
</dbReference>
<dbReference type="PDB" id="2VTO">
    <property type="method" value="X-ray"/>
    <property type="resolution" value="2.19 A"/>
    <property type="chains" value="A=1-298"/>
</dbReference>
<dbReference type="PDB" id="2VTP">
    <property type="method" value="X-ray"/>
    <property type="resolution" value="2.15 A"/>
    <property type="chains" value="A=1-298"/>
</dbReference>
<dbReference type="PDB" id="2VTQ">
    <property type="method" value="X-ray"/>
    <property type="resolution" value="1.90 A"/>
    <property type="chains" value="A=1-298"/>
</dbReference>
<dbReference type="PDB" id="2VTR">
    <property type="method" value="X-ray"/>
    <property type="resolution" value="1.90 A"/>
    <property type="chains" value="A=1-298"/>
</dbReference>
<dbReference type="PDB" id="2VTS">
    <property type="method" value="X-ray"/>
    <property type="resolution" value="1.90 A"/>
    <property type="chains" value="A=1-298"/>
</dbReference>
<dbReference type="PDB" id="2VTT">
    <property type="method" value="X-ray"/>
    <property type="resolution" value="1.68 A"/>
    <property type="chains" value="A=1-298"/>
</dbReference>
<dbReference type="PDB" id="2VU3">
    <property type="method" value="X-ray"/>
    <property type="resolution" value="1.85 A"/>
    <property type="chains" value="A=1-298"/>
</dbReference>
<dbReference type="PDB" id="2VV9">
    <property type="method" value="X-ray"/>
    <property type="resolution" value="1.90 A"/>
    <property type="chains" value="A=1-298"/>
</dbReference>
<dbReference type="PDB" id="2W05">
    <property type="method" value="X-ray"/>
    <property type="resolution" value="1.90 A"/>
    <property type="chains" value="A=1-298"/>
</dbReference>
<dbReference type="PDB" id="2W06">
    <property type="method" value="X-ray"/>
    <property type="resolution" value="2.04 A"/>
    <property type="chains" value="A=1-298"/>
</dbReference>
<dbReference type="PDB" id="2W17">
    <property type="method" value="X-ray"/>
    <property type="resolution" value="2.15 A"/>
    <property type="chains" value="A=1-298"/>
</dbReference>
<dbReference type="PDB" id="2W1H">
    <property type="method" value="X-ray"/>
    <property type="resolution" value="2.15 A"/>
    <property type="chains" value="A=1-298"/>
</dbReference>
<dbReference type="PDB" id="2WEV">
    <property type="method" value="X-ray"/>
    <property type="resolution" value="2.30 A"/>
    <property type="chains" value="A/C=1-298"/>
</dbReference>
<dbReference type="PDB" id="2WFY">
    <property type="method" value="X-ray"/>
    <property type="resolution" value="2.53 A"/>
    <property type="chains" value="A/C=1-298"/>
</dbReference>
<dbReference type="PDB" id="2WHB">
    <property type="method" value="X-ray"/>
    <property type="resolution" value="2.90 A"/>
    <property type="chains" value="A/C=1-298"/>
</dbReference>
<dbReference type="PDB" id="2WIH">
    <property type="method" value="X-ray"/>
    <property type="resolution" value="2.50 A"/>
    <property type="chains" value="A/C=1-298"/>
</dbReference>
<dbReference type="PDB" id="2WIP">
    <property type="method" value="X-ray"/>
    <property type="resolution" value="2.80 A"/>
    <property type="chains" value="A/C=1-298"/>
</dbReference>
<dbReference type="PDB" id="2WMA">
    <property type="method" value="X-ray"/>
    <property type="resolution" value="2.80 A"/>
    <property type="chains" value="A/C=1-298"/>
</dbReference>
<dbReference type="PDB" id="2WMB">
    <property type="method" value="X-ray"/>
    <property type="resolution" value="2.60 A"/>
    <property type="chains" value="A/C=1-298"/>
</dbReference>
<dbReference type="PDB" id="2WPA">
    <property type="method" value="X-ray"/>
    <property type="resolution" value="2.51 A"/>
    <property type="chains" value="A/C=1-298"/>
</dbReference>
<dbReference type="PDB" id="2WXV">
    <property type="method" value="X-ray"/>
    <property type="resolution" value="2.60 A"/>
    <property type="chains" value="A/C=1-298"/>
</dbReference>
<dbReference type="PDB" id="2X1N">
    <property type="method" value="X-ray"/>
    <property type="resolution" value="2.75 A"/>
    <property type="chains" value="A/C=1-298"/>
</dbReference>
<dbReference type="PDB" id="2XMY">
    <property type="method" value="X-ray"/>
    <property type="resolution" value="1.90 A"/>
    <property type="chains" value="A=1-298"/>
</dbReference>
<dbReference type="PDB" id="2XNB">
    <property type="method" value="X-ray"/>
    <property type="resolution" value="1.85 A"/>
    <property type="chains" value="A=1-298"/>
</dbReference>
<dbReference type="PDB" id="3BHT">
    <property type="method" value="X-ray"/>
    <property type="resolution" value="2.00 A"/>
    <property type="chains" value="A/C=1-298"/>
</dbReference>
<dbReference type="PDB" id="3BHU">
    <property type="method" value="X-ray"/>
    <property type="resolution" value="2.30 A"/>
    <property type="chains" value="A/C=1-298"/>
</dbReference>
<dbReference type="PDB" id="3BHV">
    <property type="method" value="X-ray"/>
    <property type="resolution" value="2.10 A"/>
    <property type="chains" value="A/C=1-298"/>
</dbReference>
<dbReference type="PDB" id="3DDP">
    <property type="method" value="X-ray"/>
    <property type="resolution" value="2.70 A"/>
    <property type="chains" value="A/C=1-298"/>
</dbReference>
<dbReference type="PDB" id="3DDQ">
    <property type="method" value="X-ray"/>
    <property type="resolution" value="1.80 A"/>
    <property type="chains" value="A/C=1-298"/>
</dbReference>
<dbReference type="PDB" id="3DOG">
    <property type="method" value="X-ray"/>
    <property type="resolution" value="2.70 A"/>
    <property type="chains" value="A/C=1-298"/>
</dbReference>
<dbReference type="PDB" id="3EID">
    <property type="method" value="X-ray"/>
    <property type="resolution" value="3.15 A"/>
    <property type="chains" value="A/C=1-298"/>
</dbReference>
<dbReference type="PDB" id="3EJ1">
    <property type="method" value="X-ray"/>
    <property type="resolution" value="3.22 A"/>
    <property type="chains" value="A/C=1-298"/>
</dbReference>
<dbReference type="PDB" id="3EOC">
    <property type="method" value="X-ray"/>
    <property type="resolution" value="3.20 A"/>
    <property type="chains" value="A/C=1-298"/>
</dbReference>
<dbReference type="PDB" id="3EZR">
    <property type="method" value="X-ray"/>
    <property type="resolution" value="1.90 A"/>
    <property type="chains" value="A=1-298"/>
</dbReference>
<dbReference type="PDB" id="3EZV">
    <property type="method" value="X-ray"/>
    <property type="resolution" value="1.99 A"/>
    <property type="chains" value="A=1-298"/>
</dbReference>
<dbReference type="PDB" id="3F5X">
    <property type="method" value="X-ray"/>
    <property type="resolution" value="2.40 A"/>
    <property type="chains" value="A/C=1-298"/>
</dbReference>
<dbReference type="PDB" id="3FZ1">
    <property type="method" value="X-ray"/>
    <property type="resolution" value="1.90 A"/>
    <property type="chains" value="A=1-298"/>
</dbReference>
<dbReference type="PDB" id="3IG7">
    <property type="method" value="X-ray"/>
    <property type="resolution" value="1.80 A"/>
    <property type="chains" value="A=1-298"/>
</dbReference>
<dbReference type="PDB" id="3IGG">
    <property type="method" value="X-ray"/>
    <property type="resolution" value="1.80 A"/>
    <property type="chains" value="A=1-298"/>
</dbReference>
<dbReference type="PDB" id="3LE6">
    <property type="method" value="X-ray"/>
    <property type="resolution" value="2.00 A"/>
    <property type="chains" value="A=1-298"/>
</dbReference>
<dbReference type="PDB" id="3LFN">
    <property type="method" value="X-ray"/>
    <property type="resolution" value="2.28 A"/>
    <property type="chains" value="A=1-298"/>
</dbReference>
<dbReference type="PDB" id="3LFQ">
    <property type="method" value="X-ray"/>
    <property type="resolution" value="2.03 A"/>
    <property type="chains" value="A=1-298"/>
</dbReference>
<dbReference type="PDB" id="3LFS">
    <property type="method" value="X-ray"/>
    <property type="resolution" value="2.40 A"/>
    <property type="chains" value="A=1-298"/>
</dbReference>
<dbReference type="PDB" id="3MY5">
    <property type="method" value="X-ray"/>
    <property type="resolution" value="2.10 A"/>
    <property type="chains" value="A/C=1-298"/>
</dbReference>
<dbReference type="PDB" id="3NS9">
    <property type="method" value="X-ray"/>
    <property type="resolution" value="1.78 A"/>
    <property type="chains" value="A=1-298"/>
</dbReference>
<dbReference type="PDB" id="3PJ8">
    <property type="method" value="X-ray"/>
    <property type="resolution" value="1.96 A"/>
    <property type="chains" value="A=1-298"/>
</dbReference>
<dbReference type="PDB" id="3PXF">
    <property type="method" value="X-ray"/>
    <property type="resolution" value="1.80 A"/>
    <property type="chains" value="A=1-298"/>
</dbReference>
<dbReference type="PDB" id="3PXQ">
    <property type="method" value="X-ray"/>
    <property type="resolution" value="1.90 A"/>
    <property type="chains" value="A=1-298"/>
</dbReference>
<dbReference type="PDB" id="3PXR">
    <property type="method" value="X-ray"/>
    <property type="resolution" value="2.00 A"/>
    <property type="chains" value="A=1-298"/>
</dbReference>
<dbReference type="PDB" id="3PXY">
    <property type="method" value="X-ray"/>
    <property type="resolution" value="1.80 A"/>
    <property type="chains" value="A=1-298"/>
</dbReference>
<dbReference type="PDB" id="3PXZ">
    <property type="method" value="X-ray"/>
    <property type="resolution" value="1.70 A"/>
    <property type="chains" value="A=1-298"/>
</dbReference>
<dbReference type="PDB" id="3PY0">
    <property type="method" value="X-ray"/>
    <property type="resolution" value="1.75 A"/>
    <property type="chains" value="A=1-298"/>
</dbReference>
<dbReference type="PDB" id="3PY1">
    <property type="method" value="X-ray"/>
    <property type="resolution" value="2.05 A"/>
    <property type="chains" value="A=1-298"/>
</dbReference>
<dbReference type="PDB" id="3QHR">
    <property type="method" value="X-ray"/>
    <property type="resolution" value="2.17 A"/>
    <property type="chains" value="A/C=1-296"/>
</dbReference>
<dbReference type="PDB" id="3QHW">
    <property type="method" value="X-ray"/>
    <property type="resolution" value="1.91 A"/>
    <property type="chains" value="A/C=1-296"/>
</dbReference>
<dbReference type="PDB" id="3QL8">
    <property type="method" value="X-ray"/>
    <property type="resolution" value="1.90 A"/>
    <property type="chains" value="A=1-298"/>
</dbReference>
<dbReference type="PDB" id="3QQF">
    <property type="method" value="X-ray"/>
    <property type="resolution" value="1.75 A"/>
    <property type="chains" value="A=1-298"/>
</dbReference>
<dbReference type="PDB" id="3QQG">
    <property type="method" value="X-ray"/>
    <property type="resolution" value="1.90 A"/>
    <property type="chains" value="A=1-298"/>
</dbReference>
<dbReference type="PDB" id="3QQH">
    <property type="method" value="X-ray"/>
    <property type="resolution" value="1.87 A"/>
    <property type="chains" value="A=1-298"/>
</dbReference>
<dbReference type="PDB" id="3QQJ">
    <property type="method" value="X-ray"/>
    <property type="resolution" value="1.70 A"/>
    <property type="chains" value="A=1-298"/>
</dbReference>
<dbReference type="PDB" id="3QQK">
    <property type="method" value="X-ray"/>
    <property type="resolution" value="1.86 A"/>
    <property type="chains" value="A=1-298"/>
</dbReference>
<dbReference type="PDB" id="3QQL">
    <property type="method" value="X-ray"/>
    <property type="resolution" value="1.85 A"/>
    <property type="chains" value="A=1-298"/>
</dbReference>
<dbReference type="PDB" id="3QRT">
    <property type="method" value="X-ray"/>
    <property type="resolution" value="1.75 A"/>
    <property type="chains" value="A=1-298"/>
</dbReference>
<dbReference type="PDB" id="3QRU">
    <property type="method" value="X-ray"/>
    <property type="resolution" value="1.95 A"/>
    <property type="chains" value="A=1-298"/>
</dbReference>
<dbReference type="PDB" id="3QTQ">
    <property type="method" value="X-ray"/>
    <property type="resolution" value="1.80 A"/>
    <property type="chains" value="A=1-298"/>
</dbReference>
<dbReference type="PDB" id="3QTR">
    <property type="method" value="X-ray"/>
    <property type="resolution" value="1.85 A"/>
    <property type="chains" value="A=1-298"/>
</dbReference>
<dbReference type="PDB" id="3QTS">
    <property type="method" value="X-ray"/>
    <property type="resolution" value="1.90 A"/>
    <property type="chains" value="A=1-298"/>
</dbReference>
<dbReference type="PDB" id="3QTU">
    <property type="method" value="X-ray"/>
    <property type="resolution" value="1.82 A"/>
    <property type="chains" value="A=1-298"/>
</dbReference>
<dbReference type="PDB" id="3QTW">
    <property type="method" value="X-ray"/>
    <property type="resolution" value="1.85 A"/>
    <property type="chains" value="A=1-298"/>
</dbReference>
<dbReference type="PDB" id="3QTX">
    <property type="method" value="X-ray"/>
    <property type="resolution" value="1.95 A"/>
    <property type="chains" value="A=1-298"/>
</dbReference>
<dbReference type="PDB" id="3QTZ">
    <property type="method" value="X-ray"/>
    <property type="resolution" value="2.00 A"/>
    <property type="chains" value="A=1-298"/>
</dbReference>
<dbReference type="PDB" id="3QU0">
    <property type="method" value="X-ray"/>
    <property type="resolution" value="1.95 A"/>
    <property type="chains" value="A=1-298"/>
</dbReference>
<dbReference type="PDB" id="3QWJ">
    <property type="method" value="X-ray"/>
    <property type="resolution" value="1.75 A"/>
    <property type="chains" value="A=1-298"/>
</dbReference>
<dbReference type="PDB" id="3QWK">
    <property type="method" value="X-ray"/>
    <property type="resolution" value="1.85 A"/>
    <property type="chains" value="A=1-298"/>
</dbReference>
<dbReference type="PDB" id="3QX2">
    <property type="method" value="X-ray"/>
    <property type="resolution" value="1.75 A"/>
    <property type="chains" value="A=1-298"/>
</dbReference>
<dbReference type="PDB" id="3QX4">
    <property type="method" value="X-ray"/>
    <property type="resolution" value="1.92 A"/>
    <property type="chains" value="A=1-298"/>
</dbReference>
<dbReference type="PDB" id="3QXO">
    <property type="method" value="X-ray"/>
    <property type="resolution" value="1.75 A"/>
    <property type="chains" value="A=1-298"/>
</dbReference>
<dbReference type="PDB" id="3QXP">
    <property type="method" value="X-ray"/>
    <property type="resolution" value="1.75 A"/>
    <property type="chains" value="A=1-298"/>
</dbReference>
<dbReference type="PDB" id="3QZF">
    <property type="method" value="X-ray"/>
    <property type="resolution" value="2.00 A"/>
    <property type="chains" value="A=1-298"/>
</dbReference>
<dbReference type="PDB" id="3QZG">
    <property type="method" value="X-ray"/>
    <property type="resolution" value="1.75 A"/>
    <property type="chains" value="A=1-298"/>
</dbReference>
<dbReference type="PDB" id="3QZH">
    <property type="method" value="X-ray"/>
    <property type="resolution" value="1.95 A"/>
    <property type="chains" value="A=1-298"/>
</dbReference>
<dbReference type="PDB" id="3QZI">
    <property type="method" value="X-ray"/>
    <property type="resolution" value="1.75 A"/>
    <property type="chains" value="A=1-298"/>
</dbReference>
<dbReference type="PDB" id="3R1Q">
    <property type="method" value="X-ray"/>
    <property type="resolution" value="1.85 A"/>
    <property type="chains" value="A=1-298"/>
</dbReference>
<dbReference type="PDB" id="3R1S">
    <property type="method" value="X-ray"/>
    <property type="resolution" value="1.80 A"/>
    <property type="chains" value="A=1-298"/>
</dbReference>
<dbReference type="PDB" id="3R1Y">
    <property type="method" value="X-ray"/>
    <property type="resolution" value="1.80 A"/>
    <property type="chains" value="A=1-298"/>
</dbReference>
<dbReference type="PDB" id="3R28">
    <property type="method" value="X-ray"/>
    <property type="resolution" value="1.75 A"/>
    <property type="chains" value="A=1-298"/>
</dbReference>
<dbReference type="PDB" id="3R6X">
    <property type="method" value="X-ray"/>
    <property type="resolution" value="1.75 A"/>
    <property type="chains" value="A=1-298"/>
</dbReference>
<dbReference type="PDB" id="3R71">
    <property type="method" value="X-ray"/>
    <property type="resolution" value="1.75 A"/>
    <property type="chains" value="A=1-298"/>
</dbReference>
<dbReference type="PDB" id="3R73">
    <property type="method" value="X-ray"/>
    <property type="resolution" value="1.70 A"/>
    <property type="chains" value="A=1-298"/>
</dbReference>
<dbReference type="PDB" id="3R7E">
    <property type="method" value="X-ray"/>
    <property type="resolution" value="1.90 A"/>
    <property type="chains" value="A=1-298"/>
</dbReference>
<dbReference type="PDB" id="3R7I">
    <property type="method" value="X-ray"/>
    <property type="resolution" value="1.85 A"/>
    <property type="chains" value="A=1-298"/>
</dbReference>
<dbReference type="PDB" id="3R7U">
    <property type="method" value="X-ray"/>
    <property type="resolution" value="1.75 A"/>
    <property type="chains" value="A=1-298"/>
</dbReference>
<dbReference type="PDB" id="3R7V">
    <property type="method" value="X-ray"/>
    <property type="resolution" value="1.95 A"/>
    <property type="chains" value="A=1-298"/>
</dbReference>
<dbReference type="PDB" id="3R7Y">
    <property type="method" value="X-ray"/>
    <property type="resolution" value="1.90 A"/>
    <property type="chains" value="A=1-298"/>
</dbReference>
<dbReference type="PDB" id="3R83">
    <property type="method" value="X-ray"/>
    <property type="resolution" value="1.75 A"/>
    <property type="chains" value="A=1-298"/>
</dbReference>
<dbReference type="PDB" id="3R8L">
    <property type="method" value="X-ray"/>
    <property type="resolution" value="1.90 A"/>
    <property type="chains" value="A=1-298"/>
</dbReference>
<dbReference type="PDB" id="3R8M">
    <property type="method" value="X-ray"/>
    <property type="resolution" value="1.80 A"/>
    <property type="chains" value="A=1-298"/>
</dbReference>
<dbReference type="PDB" id="3R8P">
    <property type="method" value="X-ray"/>
    <property type="resolution" value="1.80 A"/>
    <property type="chains" value="A=1-298"/>
</dbReference>
<dbReference type="PDB" id="3R8U">
    <property type="method" value="X-ray"/>
    <property type="resolution" value="2.00 A"/>
    <property type="chains" value="A=1-298"/>
</dbReference>
<dbReference type="PDB" id="3R8V">
    <property type="method" value="X-ray"/>
    <property type="resolution" value="1.90 A"/>
    <property type="chains" value="A=1-298"/>
</dbReference>
<dbReference type="PDB" id="3R8Z">
    <property type="method" value="X-ray"/>
    <property type="resolution" value="1.85 A"/>
    <property type="chains" value="A=1-298"/>
</dbReference>
<dbReference type="PDB" id="3R9D">
    <property type="method" value="X-ray"/>
    <property type="resolution" value="1.95 A"/>
    <property type="chains" value="A=1-298"/>
</dbReference>
<dbReference type="PDB" id="3R9H">
    <property type="method" value="X-ray"/>
    <property type="resolution" value="2.10 A"/>
    <property type="chains" value="A=1-298"/>
</dbReference>
<dbReference type="PDB" id="3R9N">
    <property type="method" value="X-ray"/>
    <property type="resolution" value="1.75 A"/>
    <property type="chains" value="A=1-298"/>
</dbReference>
<dbReference type="PDB" id="3R9O">
    <property type="method" value="X-ray"/>
    <property type="resolution" value="1.90 A"/>
    <property type="chains" value="A=1-298"/>
</dbReference>
<dbReference type="PDB" id="3RAH">
    <property type="method" value="X-ray"/>
    <property type="resolution" value="1.75 A"/>
    <property type="chains" value="A=1-298"/>
</dbReference>
<dbReference type="PDB" id="3RAI">
    <property type="method" value="X-ray"/>
    <property type="resolution" value="1.70 A"/>
    <property type="chains" value="A=1-298"/>
</dbReference>
<dbReference type="PDB" id="3RAK">
    <property type="method" value="X-ray"/>
    <property type="resolution" value="1.75 A"/>
    <property type="chains" value="A=1-298"/>
</dbReference>
<dbReference type="PDB" id="3RAL">
    <property type="method" value="X-ray"/>
    <property type="resolution" value="1.75 A"/>
    <property type="chains" value="A=1-298"/>
</dbReference>
<dbReference type="PDB" id="3RJC">
    <property type="method" value="X-ray"/>
    <property type="resolution" value="1.85 A"/>
    <property type="chains" value="A=1-298"/>
</dbReference>
<dbReference type="PDB" id="3RK5">
    <property type="method" value="X-ray"/>
    <property type="resolution" value="2.00 A"/>
    <property type="chains" value="A=1-298"/>
</dbReference>
<dbReference type="PDB" id="3RK7">
    <property type="method" value="X-ray"/>
    <property type="resolution" value="1.80 A"/>
    <property type="chains" value="A=1-298"/>
</dbReference>
<dbReference type="PDB" id="3RK9">
    <property type="method" value="X-ray"/>
    <property type="resolution" value="1.85 A"/>
    <property type="chains" value="A=1-298"/>
</dbReference>
<dbReference type="PDB" id="3RKB">
    <property type="method" value="X-ray"/>
    <property type="resolution" value="2.00 A"/>
    <property type="chains" value="A=1-298"/>
</dbReference>
<dbReference type="PDB" id="3RM6">
    <property type="method" value="X-ray"/>
    <property type="resolution" value="1.60 A"/>
    <property type="chains" value="A=1-298"/>
</dbReference>
<dbReference type="PDB" id="3RM7">
    <property type="method" value="X-ray"/>
    <property type="resolution" value="1.85 A"/>
    <property type="chains" value="A=1-298"/>
</dbReference>
<dbReference type="PDB" id="3RMF">
    <property type="method" value="X-ray"/>
    <property type="resolution" value="1.75 A"/>
    <property type="chains" value="A=1-298"/>
</dbReference>
<dbReference type="PDB" id="3RNI">
    <property type="method" value="X-ray"/>
    <property type="resolution" value="1.95 A"/>
    <property type="chains" value="A=1-298"/>
</dbReference>
<dbReference type="PDB" id="3ROY">
    <property type="method" value="X-ray"/>
    <property type="resolution" value="1.75 A"/>
    <property type="chains" value="A=1-298"/>
</dbReference>
<dbReference type="PDB" id="3RPO">
    <property type="method" value="X-ray"/>
    <property type="resolution" value="1.75 A"/>
    <property type="chains" value="A=1-298"/>
</dbReference>
<dbReference type="PDB" id="3RPR">
    <property type="method" value="X-ray"/>
    <property type="resolution" value="1.75 A"/>
    <property type="chains" value="A=1-298"/>
</dbReference>
<dbReference type="PDB" id="3RPV">
    <property type="method" value="X-ray"/>
    <property type="resolution" value="1.80 A"/>
    <property type="chains" value="A=1-298"/>
</dbReference>
<dbReference type="PDB" id="3RPY">
    <property type="method" value="X-ray"/>
    <property type="resolution" value="1.90 A"/>
    <property type="chains" value="A=1-298"/>
</dbReference>
<dbReference type="PDB" id="3RZB">
    <property type="method" value="X-ray"/>
    <property type="resolution" value="1.90 A"/>
    <property type="chains" value="A=1-298"/>
</dbReference>
<dbReference type="PDB" id="3S00">
    <property type="method" value="X-ray"/>
    <property type="resolution" value="1.80 A"/>
    <property type="chains" value="A=1-298"/>
</dbReference>
<dbReference type="PDB" id="3S0O">
    <property type="method" value="X-ray"/>
    <property type="resolution" value="2.00 A"/>
    <property type="chains" value="A=1-298"/>
</dbReference>
<dbReference type="PDB" id="3S1H">
    <property type="method" value="X-ray"/>
    <property type="resolution" value="1.75 A"/>
    <property type="chains" value="A=1-298"/>
</dbReference>
<dbReference type="PDB" id="3S2P">
    <property type="method" value="X-ray"/>
    <property type="resolution" value="2.30 A"/>
    <property type="chains" value="A=1-298"/>
</dbReference>
<dbReference type="PDB" id="3SQQ">
    <property type="method" value="X-ray"/>
    <property type="resolution" value="1.85 A"/>
    <property type="chains" value="A=1-298"/>
</dbReference>
<dbReference type="PDB" id="3SW4">
    <property type="method" value="X-ray"/>
    <property type="resolution" value="1.70 A"/>
    <property type="chains" value="A=1-298"/>
</dbReference>
<dbReference type="PDB" id="3SW7">
    <property type="method" value="X-ray"/>
    <property type="resolution" value="1.80 A"/>
    <property type="chains" value="A=1-298"/>
</dbReference>
<dbReference type="PDB" id="3TI1">
    <property type="method" value="X-ray"/>
    <property type="resolution" value="1.99 A"/>
    <property type="chains" value="A=1-298"/>
</dbReference>
<dbReference type="PDB" id="3TIY">
    <property type="method" value="X-ray"/>
    <property type="resolution" value="1.84 A"/>
    <property type="chains" value="A=1-298"/>
</dbReference>
<dbReference type="PDB" id="3TIZ">
    <property type="method" value="X-ray"/>
    <property type="resolution" value="2.02 A"/>
    <property type="chains" value="A=1-298"/>
</dbReference>
<dbReference type="PDB" id="3TNW">
    <property type="method" value="X-ray"/>
    <property type="resolution" value="2.00 A"/>
    <property type="chains" value="A/C=1-298"/>
</dbReference>
<dbReference type="PDB" id="3ULI">
    <property type="method" value="X-ray"/>
    <property type="resolution" value="2.00 A"/>
    <property type="chains" value="A=1-298"/>
</dbReference>
<dbReference type="PDB" id="3UNJ">
    <property type="method" value="X-ray"/>
    <property type="resolution" value="1.90 A"/>
    <property type="chains" value="A=1-298"/>
</dbReference>
<dbReference type="PDB" id="3UNK">
    <property type="method" value="X-ray"/>
    <property type="resolution" value="2.10 A"/>
    <property type="chains" value="A=1-298"/>
</dbReference>
<dbReference type="PDB" id="3WBL">
    <property type="method" value="X-ray"/>
    <property type="resolution" value="2.00 A"/>
    <property type="chains" value="A=1-298"/>
</dbReference>
<dbReference type="PDB" id="4ACM">
    <property type="method" value="X-ray"/>
    <property type="resolution" value="1.63 A"/>
    <property type="chains" value="A=1-298"/>
</dbReference>
<dbReference type="PDB" id="4BCK">
    <property type="method" value="X-ray"/>
    <property type="resolution" value="2.05 A"/>
    <property type="chains" value="A/C=1-298"/>
</dbReference>
<dbReference type="PDB" id="4BCM">
    <property type="method" value="X-ray"/>
    <property type="resolution" value="2.45 A"/>
    <property type="chains" value="A/C=1-298"/>
</dbReference>
<dbReference type="PDB" id="4BCN">
    <property type="method" value="X-ray"/>
    <property type="resolution" value="2.10 A"/>
    <property type="chains" value="A/C=1-298"/>
</dbReference>
<dbReference type="PDB" id="4BCO">
    <property type="method" value="X-ray"/>
    <property type="resolution" value="2.05 A"/>
    <property type="chains" value="A/C=1-298"/>
</dbReference>
<dbReference type="PDB" id="4BCP">
    <property type="method" value="X-ray"/>
    <property type="resolution" value="2.26 A"/>
    <property type="chains" value="A/C=1-298"/>
</dbReference>
<dbReference type="PDB" id="4BCQ">
    <property type="method" value="X-ray"/>
    <property type="resolution" value="2.40 A"/>
    <property type="chains" value="A/C=1-298"/>
</dbReference>
<dbReference type="PDB" id="4BGH">
    <property type="method" value="X-ray"/>
    <property type="resolution" value="1.95 A"/>
    <property type="chains" value="A=1-298"/>
</dbReference>
<dbReference type="PDB" id="4BZD">
    <property type="method" value="X-ray"/>
    <property type="resolution" value="1.83 A"/>
    <property type="chains" value="A=1-298"/>
</dbReference>
<dbReference type="PDB" id="4CFM">
    <property type="method" value="X-ray"/>
    <property type="resolution" value="2.85 A"/>
    <property type="chains" value="A/C=1-298"/>
</dbReference>
<dbReference type="PDB" id="4CFN">
    <property type="method" value="X-ray"/>
    <property type="resolution" value="2.20 A"/>
    <property type="chains" value="A/C=1-298"/>
</dbReference>
<dbReference type="PDB" id="4CFU">
    <property type="method" value="X-ray"/>
    <property type="resolution" value="2.20 A"/>
    <property type="chains" value="A/C=1-298"/>
</dbReference>
<dbReference type="PDB" id="4CFV">
    <property type="method" value="X-ray"/>
    <property type="resolution" value="2.00 A"/>
    <property type="chains" value="A/C=1-298"/>
</dbReference>
<dbReference type="PDB" id="4CFW">
    <property type="method" value="X-ray"/>
    <property type="resolution" value="2.45 A"/>
    <property type="chains" value="A/C=1-298"/>
</dbReference>
<dbReference type="PDB" id="4CFX">
    <property type="method" value="X-ray"/>
    <property type="resolution" value="3.50 A"/>
    <property type="chains" value="A/C=1-298"/>
</dbReference>
<dbReference type="PDB" id="4D1X">
    <property type="method" value="X-ray"/>
    <property type="resolution" value="2.10 A"/>
    <property type="chains" value="A=1-298"/>
</dbReference>
<dbReference type="PDB" id="4D1Z">
    <property type="method" value="X-ray"/>
    <property type="resolution" value="1.85 A"/>
    <property type="chains" value="A=1-298"/>
</dbReference>
<dbReference type="PDB" id="4EK3">
    <property type="method" value="X-ray"/>
    <property type="resolution" value="1.34 A"/>
    <property type="chains" value="A=1-298"/>
</dbReference>
<dbReference type="PDB" id="4EK4">
    <property type="method" value="X-ray"/>
    <property type="resolution" value="1.26 A"/>
    <property type="chains" value="A=1-298"/>
</dbReference>
<dbReference type="PDB" id="4EK5">
    <property type="method" value="X-ray"/>
    <property type="resolution" value="1.60 A"/>
    <property type="chains" value="A=1-298"/>
</dbReference>
<dbReference type="PDB" id="4EK6">
    <property type="method" value="X-ray"/>
    <property type="resolution" value="1.52 A"/>
    <property type="chains" value="A=1-298"/>
</dbReference>
<dbReference type="PDB" id="4EK8">
    <property type="method" value="X-ray"/>
    <property type="resolution" value="1.70 A"/>
    <property type="chains" value="A=1-298"/>
</dbReference>
<dbReference type="PDB" id="4EOI">
    <property type="method" value="X-ray"/>
    <property type="resolution" value="2.00 A"/>
    <property type="chains" value="A/C=1-298"/>
</dbReference>
<dbReference type="PDB" id="4EOJ">
    <property type="method" value="X-ray"/>
    <property type="resolution" value="1.65 A"/>
    <property type="chains" value="A/C=1-298"/>
</dbReference>
<dbReference type="PDB" id="4EOK">
    <property type="method" value="X-ray"/>
    <property type="resolution" value="2.57 A"/>
    <property type="chains" value="A/C=1-297"/>
</dbReference>
<dbReference type="PDB" id="4EOL">
    <property type="method" value="X-ray"/>
    <property type="resolution" value="2.40 A"/>
    <property type="chains" value="A/C=1-297"/>
</dbReference>
<dbReference type="PDB" id="4EOM">
    <property type="method" value="X-ray"/>
    <property type="resolution" value="2.10 A"/>
    <property type="chains" value="A/C=1-297"/>
</dbReference>
<dbReference type="PDB" id="4EON">
    <property type="method" value="X-ray"/>
    <property type="resolution" value="2.40 A"/>
    <property type="chains" value="A/C=1-298"/>
</dbReference>
<dbReference type="PDB" id="4EOO">
    <property type="method" value="X-ray"/>
    <property type="resolution" value="2.10 A"/>
    <property type="chains" value="A/C=1-297"/>
</dbReference>
<dbReference type="PDB" id="4EOP">
    <property type="method" value="X-ray"/>
    <property type="resolution" value="1.99 A"/>
    <property type="chains" value="A/C=1-297"/>
</dbReference>
<dbReference type="PDB" id="4EOQ">
    <property type="method" value="X-ray"/>
    <property type="resolution" value="2.15 A"/>
    <property type="chains" value="A/C=1-297"/>
</dbReference>
<dbReference type="PDB" id="4EOR">
    <property type="method" value="X-ray"/>
    <property type="resolution" value="2.20 A"/>
    <property type="chains" value="A/C=1-297"/>
</dbReference>
<dbReference type="PDB" id="4EOS">
    <property type="method" value="X-ray"/>
    <property type="resolution" value="2.57 A"/>
    <property type="chains" value="A/C=1-297"/>
</dbReference>
<dbReference type="PDB" id="4ERW">
    <property type="method" value="X-ray"/>
    <property type="resolution" value="2.00 A"/>
    <property type="chains" value="A=1-298"/>
</dbReference>
<dbReference type="PDB" id="4EZ3">
    <property type="method" value="X-ray"/>
    <property type="resolution" value="2.00 A"/>
    <property type="chains" value="A=1-298"/>
</dbReference>
<dbReference type="PDB" id="4EZ7">
    <property type="method" value="X-ray"/>
    <property type="resolution" value="2.49 A"/>
    <property type="chains" value="A=1-298"/>
</dbReference>
<dbReference type="PDB" id="4FKG">
    <property type="method" value="X-ray"/>
    <property type="resolution" value="1.51 A"/>
    <property type="chains" value="A=1-298"/>
</dbReference>
<dbReference type="PDB" id="4FKI">
    <property type="method" value="X-ray"/>
    <property type="resolution" value="1.60 A"/>
    <property type="chains" value="A=1-298"/>
</dbReference>
<dbReference type="PDB" id="4FKJ">
    <property type="method" value="X-ray"/>
    <property type="resolution" value="1.63 A"/>
    <property type="chains" value="A=1-298"/>
</dbReference>
<dbReference type="PDB" id="4FKL">
    <property type="method" value="X-ray"/>
    <property type="resolution" value="1.26 A"/>
    <property type="chains" value="A=1-298"/>
</dbReference>
<dbReference type="PDB" id="4FKO">
    <property type="method" value="X-ray"/>
    <property type="resolution" value="1.55 A"/>
    <property type="chains" value="A=1-298"/>
</dbReference>
<dbReference type="PDB" id="4FKP">
    <property type="method" value="X-ray"/>
    <property type="resolution" value="1.60 A"/>
    <property type="chains" value="A=1-298"/>
</dbReference>
<dbReference type="PDB" id="4FKQ">
    <property type="method" value="X-ray"/>
    <property type="resolution" value="1.75 A"/>
    <property type="chains" value="A=1-298"/>
</dbReference>
<dbReference type="PDB" id="4FKR">
    <property type="method" value="X-ray"/>
    <property type="resolution" value="1.90 A"/>
    <property type="chains" value="A=1-298"/>
</dbReference>
<dbReference type="PDB" id="4FKS">
    <property type="method" value="X-ray"/>
    <property type="resolution" value="1.55 A"/>
    <property type="chains" value="A=1-298"/>
</dbReference>
<dbReference type="PDB" id="4FKT">
    <property type="method" value="X-ray"/>
    <property type="resolution" value="1.60 A"/>
    <property type="chains" value="A=1-298"/>
</dbReference>
<dbReference type="PDB" id="4FKU">
    <property type="method" value="X-ray"/>
    <property type="resolution" value="1.47 A"/>
    <property type="chains" value="A=1-298"/>
</dbReference>
<dbReference type="PDB" id="4FKV">
    <property type="method" value="X-ray"/>
    <property type="resolution" value="1.70 A"/>
    <property type="chains" value="A=1-298"/>
</dbReference>
<dbReference type="PDB" id="4FKW">
    <property type="method" value="X-ray"/>
    <property type="resolution" value="1.80 A"/>
    <property type="chains" value="A=1-298"/>
</dbReference>
<dbReference type="PDB" id="4FX3">
    <property type="method" value="X-ray"/>
    <property type="resolution" value="2.75 A"/>
    <property type="chains" value="A/C=1-298"/>
</dbReference>
<dbReference type="PDB" id="4GCJ">
    <property type="method" value="X-ray"/>
    <property type="resolution" value="1.42 A"/>
    <property type="chains" value="A=1-298"/>
</dbReference>
<dbReference type="PDB" id="4I3Z">
    <property type="method" value="X-ray"/>
    <property type="resolution" value="2.05 A"/>
    <property type="chains" value="A/C=1-296"/>
</dbReference>
<dbReference type="PDB" id="4II5">
    <property type="method" value="X-ray"/>
    <property type="resolution" value="2.15 A"/>
    <property type="chains" value="A/C=1-298"/>
</dbReference>
<dbReference type="PDB" id="4KD1">
    <property type="method" value="X-ray"/>
    <property type="resolution" value="1.70 A"/>
    <property type="chains" value="A=1-298"/>
</dbReference>
<dbReference type="PDB" id="4LYN">
    <property type="method" value="X-ray"/>
    <property type="resolution" value="2.00 A"/>
    <property type="chains" value="A=1-298"/>
</dbReference>
<dbReference type="PDB" id="4NJ3">
    <property type="method" value="X-ray"/>
    <property type="resolution" value="1.85 A"/>
    <property type="chains" value="A=1-298"/>
</dbReference>
<dbReference type="PDB" id="4RJ3">
    <property type="method" value="X-ray"/>
    <property type="resolution" value="1.63 A"/>
    <property type="chains" value="A=1-298"/>
</dbReference>
<dbReference type="PDB" id="5A14">
    <property type="method" value="X-ray"/>
    <property type="resolution" value="2.00 A"/>
    <property type="chains" value="A=1-298"/>
</dbReference>
<dbReference type="PDB" id="5AND">
    <property type="method" value="X-ray"/>
    <property type="resolution" value="2.30 A"/>
    <property type="chains" value="A=1-298"/>
</dbReference>
<dbReference type="PDB" id="5ANE">
    <property type="method" value="X-ray"/>
    <property type="resolution" value="1.70 A"/>
    <property type="chains" value="A=1-298"/>
</dbReference>
<dbReference type="PDB" id="5ANG">
    <property type="method" value="X-ray"/>
    <property type="resolution" value="1.90 A"/>
    <property type="chains" value="A=1-298"/>
</dbReference>
<dbReference type="PDB" id="5ANI">
    <property type="method" value="X-ray"/>
    <property type="resolution" value="1.90 A"/>
    <property type="chains" value="A=1-298"/>
</dbReference>
<dbReference type="PDB" id="5ANJ">
    <property type="method" value="X-ray"/>
    <property type="resolution" value="1.60 A"/>
    <property type="chains" value="A=1-298"/>
</dbReference>
<dbReference type="PDB" id="5ANK">
    <property type="method" value="X-ray"/>
    <property type="resolution" value="1.90 A"/>
    <property type="chains" value="A=1-298"/>
</dbReference>
<dbReference type="PDB" id="5ANO">
    <property type="method" value="X-ray"/>
    <property type="resolution" value="1.70 A"/>
    <property type="chains" value="A=1-298"/>
</dbReference>
<dbReference type="PDB" id="5CYI">
    <property type="method" value="X-ray"/>
    <property type="resolution" value="2.00 A"/>
    <property type="chains" value="A/C=1-298"/>
</dbReference>
<dbReference type="PDB" id="5D1J">
    <property type="method" value="X-ray"/>
    <property type="resolution" value="1.80 A"/>
    <property type="chains" value="A=1-298"/>
</dbReference>
<dbReference type="PDB" id="5FP5">
    <property type="method" value="X-ray"/>
    <property type="resolution" value="2.16 A"/>
    <property type="chains" value="A=1-298"/>
</dbReference>
<dbReference type="PDB" id="5FP6">
    <property type="method" value="X-ray"/>
    <property type="resolution" value="1.85 A"/>
    <property type="chains" value="A=1-298"/>
</dbReference>
<dbReference type="PDB" id="5IEV">
    <property type="method" value="X-ray"/>
    <property type="resolution" value="2.03 A"/>
    <property type="chains" value="A=1-298"/>
</dbReference>
<dbReference type="PDB" id="5IEX">
    <property type="method" value="X-ray"/>
    <property type="resolution" value="2.03 A"/>
    <property type="chains" value="A=1-298"/>
</dbReference>
<dbReference type="PDB" id="5IEY">
    <property type="method" value="X-ray"/>
    <property type="resolution" value="1.66 A"/>
    <property type="chains" value="A=1-298"/>
</dbReference>
<dbReference type="PDB" id="5IF1">
    <property type="method" value="X-ray"/>
    <property type="resolution" value="2.61 A"/>
    <property type="chains" value="A/C=1-298"/>
</dbReference>
<dbReference type="PDB" id="5JQ5">
    <property type="method" value="X-ray"/>
    <property type="resolution" value="1.94 A"/>
    <property type="chains" value="A=1-298"/>
</dbReference>
<dbReference type="PDB" id="5JQ8">
    <property type="method" value="X-ray"/>
    <property type="resolution" value="1.94 A"/>
    <property type="chains" value="A=1-298"/>
</dbReference>
<dbReference type="PDB" id="5K4J">
    <property type="method" value="X-ray"/>
    <property type="resolution" value="1.60 A"/>
    <property type="chains" value="A=1-298"/>
</dbReference>
<dbReference type="PDB" id="5L2W">
    <property type="method" value="X-ray"/>
    <property type="resolution" value="2.80 A"/>
    <property type="chains" value="A=1-298"/>
</dbReference>
<dbReference type="PDB" id="5LMK">
    <property type="method" value="X-ray"/>
    <property type="resolution" value="2.40 A"/>
    <property type="chains" value="A=1-298, C=1-296"/>
</dbReference>
<dbReference type="PDB" id="5MHQ">
    <property type="method" value="X-ray"/>
    <property type="resolution" value="1.30 A"/>
    <property type="chains" value="A=1-298"/>
</dbReference>
<dbReference type="PDB" id="5NEV">
    <property type="method" value="X-ray"/>
    <property type="resolution" value="2.97 A"/>
    <property type="chains" value="A/C=1-298"/>
</dbReference>
<dbReference type="PDB" id="5OO0">
    <property type="method" value="X-ray"/>
    <property type="resolution" value="1.60 A"/>
    <property type="chains" value="A=1-298"/>
</dbReference>
<dbReference type="PDB" id="5OO1">
    <property type="method" value="X-ray"/>
    <property type="resolution" value="2.00 A"/>
    <property type="chains" value="A=1-298"/>
</dbReference>
<dbReference type="PDB" id="5OO3">
    <property type="method" value="X-ray"/>
    <property type="resolution" value="1.73 A"/>
    <property type="chains" value="A=1-298"/>
</dbReference>
<dbReference type="PDB" id="5OSJ">
    <property type="method" value="X-ray"/>
    <property type="resolution" value="1.83 A"/>
    <property type="chains" value="A=1-298"/>
</dbReference>
<dbReference type="PDB" id="5OSM">
    <property type="method" value="X-ray"/>
    <property type="resolution" value="1.77 A"/>
    <property type="chains" value="A=1-298"/>
</dbReference>
<dbReference type="PDB" id="5UQ1">
    <property type="method" value="X-ray"/>
    <property type="resolution" value="3.20 A"/>
    <property type="chains" value="A/C=1-298"/>
</dbReference>
<dbReference type="PDB" id="5UQ2">
    <property type="method" value="X-ray"/>
    <property type="resolution" value="2.70 A"/>
    <property type="chains" value="A=1-298"/>
</dbReference>
<dbReference type="PDB" id="5UQ3">
    <property type="method" value="X-ray"/>
    <property type="resolution" value="3.60 A"/>
    <property type="chains" value="A=1-298"/>
</dbReference>
<dbReference type="PDB" id="6ATH">
    <property type="method" value="X-ray"/>
    <property type="resolution" value="1.82 A"/>
    <property type="chains" value="A=1-298"/>
</dbReference>
<dbReference type="PDB" id="6GUB">
    <property type="method" value="X-ray"/>
    <property type="resolution" value="2.52 A"/>
    <property type="chains" value="A/C=1-298"/>
</dbReference>
<dbReference type="PDB" id="6GUC">
    <property type="method" value="X-ray"/>
    <property type="resolution" value="2.00 A"/>
    <property type="chains" value="A/C=1-298"/>
</dbReference>
<dbReference type="PDB" id="6GUE">
    <property type="method" value="X-ray"/>
    <property type="resolution" value="1.99 A"/>
    <property type="chains" value="A/C=1-298"/>
</dbReference>
<dbReference type="PDB" id="6GUF">
    <property type="method" value="X-ray"/>
    <property type="resolution" value="2.65 A"/>
    <property type="chains" value="A/C=1-298"/>
</dbReference>
<dbReference type="PDB" id="6GUH">
    <property type="method" value="X-ray"/>
    <property type="resolution" value="1.50 A"/>
    <property type="chains" value="A=1-298"/>
</dbReference>
<dbReference type="PDB" id="6GUK">
    <property type="method" value="X-ray"/>
    <property type="resolution" value="1.30 A"/>
    <property type="chains" value="A=1-298"/>
</dbReference>
<dbReference type="PDB" id="6GVA">
    <property type="method" value="X-ray"/>
    <property type="resolution" value="2.15 A"/>
    <property type="chains" value="A=1-298"/>
</dbReference>
<dbReference type="PDB" id="6INL">
    <property type="method" value="X-ray"/>
    <property type="resolution" value="1.75 A"/>
    <property type="chains" value="A=1-298"/>
</dbReference>
<dbReference type="PDB" id="6JGM">
    <property type="method" value="X-ray"/>
    <property type="resolution" value="2.30 A"/>
    <property type="chains" value="A=1-298"/>
</dbReference>
<dbReference type="PDB" id="6OQI">
    <property type="method" value="X-ray"/>
    <property type="resolution" value="2.00 A"/>
    <property type="chains" value="A=1-298"/>
</dbReference>
<dbReference type="PDB" id="6P3W">
    <property type="method" value="X-ray"/>
    <property type="resolution" value="2.54 A"/>
    <property type="chains" value="A/C=1-298"/>
</dbReference>
<dbReference type="PDB" id="6Q3B">
    <property type="method" value="X-ray"/>
    <property type="resolution" value="1.11 A"/>
    <property type="chains" value="A=1-298"/>
</dbReference>
<dbReference type="PDB" id="6Q3C">
    <property type="method" value="X-ray"/>
    <property type="resolution" value="1.29 A"/>
    <property type="chains" value="A=1-298"/>
</dbReference>
<dbReference type="PDB" id="6Q3F">
    <property type="method" value="X-ray"/>
    <property type="resolution" value="1.18 A"/>
    <property type="chains" value="A=1-298"/>
</dbReference>
<dbReference type="PDB" id="6Q48">
    <property type="method" value="X-ray"/>
    <property type="resolution" value="1.03 A"/>
    <property type="chains" value="A=1-298"/>
</dbReference>
<dbReference type="PDB" id="6Q49">
    <property type="method" value="X-ray"/>
    <property type="resolution" value="1.00 A"/>
    <property type="chains" value="A=1-298"/>
</dbReference>
<dbReference type="PDB" id="6Q4A">
    <property type="method" value="X-ray"/>
    <property type="resolution" value="1.13 A"/>
    <property type="chains" value="A=1-298"/>
</dbReference>
<dbReference type="PDB" id="6Q4B">
    <property type="method" value="X-ray"/>
    <property type="resolution" value="1.12 A"/>
    <property type="chains" value="A=1-298"/>
</dbReference>
<dbReference type="PDB" id="6Q4C">
    <property type="method" value="X-ray"/>
    <property type="resolution" value="1.73 A"/>
    <property type="chains" value="A=1-298"/>
</dbReference>
<dbReference type="PDB" id="6Q4D">
    <property type="method" value="X-ray"/>
    <property type="resolution" value="1.07 A"/>
    <property type="chains" value="A=1-298"/>
</dbReference>
<dbReference type="PDB" id="6Q4E">
    <property type="method" value="X-ray"/>
    <property type="resolution" value="1.06 A"/>
    <property type="chains" value="A=1-298"/>
</dbReference>
<dbReference type="PDB" id="6Q4F">
    <property type="method" value="X-ray"/>
    <property type="resolution" value="1.21 A"/>
    <property type="chains" value="A=1-298"/>
</dbReference>
<dbReference type="PDB" id="6Q4G">
    <property type="method" value="X-ray"/>
    <property type="resolution" value="0.98 A"/>
    <property type="chains" value="A=1-298"/>
</dbReference>
<dbReference type="PDB" id="6Q4H">
    <property type="method" value="X-ray"/>
    <property type="resolution" value="1.00 A"/>
    <property type="chains" value="A=1-298"/>
</dbReference>
<dbReference type="PDB" id="6Q4I">
    <property type="method" value="X-ray"/>
    <property type="resolution" value="1.11 A"/>
    <property type="chains" value="A=1-298"/>
</dbReference>
<dbReference type="PDB" id="6Q4J">
    <property type="method" value="X-ray"/>
    <property type="resolution" value="1.05 A"/>
    <property type="chains" value="A=1-298"/>
</dbReference>
<dbReference type="PDB" id="6Q4K">
    <property type="method" value="X-ray"/>
    <property type="resolution" value="1.06 A"/>
    <property type="chains" value="A=1-298"/>
</dbReference>
<dbReference type="PDB" id="6RIJ">
    <property type="method" value="X-ray"/>
    <property type="resolution" value="2.20 A"/>
    <property type="chains" value="A/C=1-298"/>
</dbReference>
<dbReference type="PDB" id="6SG4">
    <property type="method" value="X-ray"/>
    <property type="resolution" value="2.43 A"/>
    <property type="chains" value="A/C=1-298"/>
</dbReference>
<dbReference type="PDB" id="6YL1">
    <property type="method" value="X-ray"/>
    <property type="resolution" value="1.66 A"/>
    <property type="chains" value="A=1-298"/>
</dbReference>
<dbReference type="PDB" id="6YL6">
    <property type="method" value="X-ray"/>
    <property type="resolution" value="1.70 A"/>
    <property type="chains" value="A=1-298"/>
</dbReference>
<dbReference type="PDB" id="6YLK">
    <property type="method" value="X-ray"/>
    <property type="resolution" value="1.65 A"/>
    <property type="chains" value="A=1-298"/>
</dbReference>
<dbReference type="PDB" id="7ACK">
    <property type="method" value="X-ray"/>
    <property type="resolution" value="1.80 A"/>
    <property type="chains" value="A/C=1-298"/>
</dbReference>
<dbReference type="PDB" id="7B5L">
    <property type="method" value="EM"/>
    <property type="resolution" value="3.80 A"/>
    <property type="chains" value="L=1-298"/>
</dbReference>
<dbReference type="PDB" id="7B5R">
    <property type="method" value="EM"/>
    <property type="resolution" value="3.80 A"/>
    <property type="chains" value="L=1-298"/>
</dbReference>
<dbReference type="PDB" id="7B7S">
    <property type="method" value="X-ray"/>
    <property type="resolution" value="2.54 A"/>
    <property type="chains" value="A/C=1-298"/>
</dbReference>
<dbReference type="PDB" id="7E34">
    <property type="method" value="X-ray"/>
    <property type="resolution" value="3.19 A"/>
    <property type="chains" value="A=2-298"/>
</dbReference>
<dbReference type="PDB" id="7KJS">
    <property type="method" value="X-ray"/>
    <property type="resolution" value="2.19 A"/>
    <property type="chains" value="A=1-298"/>
</dbReference>
<dbReference type="PDB" id="7M2F">
    <property type="method" value="X-ray"/>
    <property type="resolution" value="1.63 A"/>
    <property type="chains" value="A=1-298"/>
</dbReference>
<dbReference type="PDB" id="7MKX">
    <property type="method" value="X-ray"/>
    <property type="resolution" value="3.08 A"/>
    <property type="chains" value="A/C=1-298"/>
</dbReference>
<dbReference type="PDB" id="7NVQ">
    <property type="method" value="X-ray"/>
    <property type="resolution" value="2.05 A"/>
    <property type="chains" value="A=1-298"/>
</dbReference>
<dbReference type="PDB" id="7QHL">
    <property type="method" value="X-ray"/>
    <property type="resolution" value="1.70 A"/>
    <property type="chains" value="A/C=1-298"/>
</dbReference>
<dbReference type="PDB" id="7RA5">
    <property type="method" value="X-ray"/>
    <property type="resolution" value="1.67 A"/>
    <property type="chains" value="A=1-298"/>
</dbReference>
<dbReference type="PDB" id="7RWE">
    <property type="method" value="X-ray"/>
    <property type="resolution" value="1.59 A"/>
    <property type="chains" value="A=1-298"/>
</dbReference>
<dbReference type="PDB" id="7RWF">
    <property type="method" value="X-ray"/>
    <property type="resolution" value="1.50 A"/>
    <property type="chains" value="A=1-298"/>
</dbReference>
<dbReference type="PDB" id="7RXO">
    <property type="method" value="X-ray"/>
    <property type="resolution" value="1.38 A"/>
    <property type="chains" value="A=1-298"/>
</dbReference>
<dbReference type="PDB" id="7S4T">
    <property type="method" value="X-ray"/>
    <property type="resolution" value="1.91 A"/>
    <property type="chains" value="A=1-298"/>
</dbReference>
<dbReference type="PDB" id="7S7A">
    <property type="method" value="X-ray"/>
    <property type="resolution" value="1.70 A"/>
    <property type="chains" value="A=1-298"/>
</dbReference>
<dbReference type="PDB" id="7S84">
    <property type="method" value="X-ray"/>
    <property type="resolution" value="2.00 A"/>
    <property type="chains" value="A=1-298"/>
</dbReference>
<dbReference type="PDB" id="7S85">
    <property type="method" value="X-ray"/>
    <property type="resolution" value="1.98 A"/>
    <property type="chains" value="A=1-298"/>
</dbReference>
<dbReference type="PDB" id="7S9X">
    <property type="method" value="X-ray"/>
    <property type="resolution" value="1.69 A"/>
    <property type="chains" value="A=1-298"/>
</dbReference>
<dbReference type="PDB" id="7SA0">
    <property type="method" value="X-ray"/>
    <property type="resolution" value="1.59 A"/>
    <property type="chains" value="A=1-298"/>
</dbReference>
<dbReference type="PDB" id="7UG1">
    <property type="method" value="X-ray"/>
    <property type="resolution" value="1.84 A"/>
    <property type="chains" value="A=1-298"/>
</dbReference>
<dbReference type="PDB" id="7UXI">
    <property type="method" value="X-ray"/>
    <property type="resolution" value="2.07 A"/>
    <property type="chains" value="A=1-298"/>
</dbReference>
<dbReference type="PDB" id="7UXK">
    <property type="method" value="X-ray"/>
    <property type="resolution" value="2.63 A"/>
    <property type="chains" value="A=1-298"/>
</dbReference>
<dbReference type="PDB" id="7VDU">
    <property type="method" value="X-ray"/>
    <property type="resolution" value="1.53 A"/>
    <property type="chains" value="A=1-298"/>
</dbReference>
<dbReference type="PDB" id="7ZPC">
    <property type="method" value="X-ray"/>
    <property type="resolution" value="1.40 A"/>
    <property type="chains" value="A=1-298"/>
</dbReference>
<dbReference type="PDB" id="8B54">
    <property type="method" value="X-ray"/>
    <property type="resolution" value="2.60 A"/>
    <property type="chains" value="A/C=1-298"/>
</dbReference>
<dbReference type="PDB" id="8BYA">
    <property type="method" value="EM"/>
    <property type="resolution" value="3.38 A"/>
    <property type="chains" value="A=1-298"/>
</dbReference>
<dbReference type="PDB" id="8BZO">
    <property type="method" value="EM"/>
    <property type="resolution" value="3.50 A"/>
    <property type="chains" value="A=1-297"/>
</dbReference>
<dbReference type="PDB" id="8CUR">
    <property type="method" value="X-ray"/>
    <property type="resolution" value="2.20 A"/>
    <property type="chains" value="A=1-298"/>
</dbReference>
<dbReference type="PDB" id="8ERD">
    <property type="method" value="X-ray"/>
    <property type="resolution" value="1.33 A"/>
    <property type="chains" value="A=1-298"/>
</dbReference>
<dbReference type="PDB" id="8ERN">
    <property type="method" value="X-ray"/>
    <property type="resolution" value="1.64 A"/>
    <property type="chains" value="A=1-298"/>
</dbReference>
<dbReference type="PDB" id="8FOW">
    <property type="method" value="X-ray"/>
    <property type="resolution" value="1.60 A"/>
    <property type="chains" value="A=1-298"/>
</dbReference>
<dbReference type="PDB" id="8FP0">
    <property type="method" value="X-ray"/>
    <property type="resolution" value="1.60 A"/>
    <property type="chains" value="A=1-298"/>
</dbReference>
<dbReference type="PDB" id="8FP5">
    <property type="method" value="X-ray"/>
    <property type="resolution" value="1.70 A"/>
    <property type="chains" value="A=1-298"/>
</dbReference>
<dbReference type="PDB" id="8H6P">
    <property type="method" value="X-ray"/>
    <property type="resolution" value="2.44 A"/>
    <property type="chains" value="A=1-297"/>
</dbReference>
<dbReference type="PDB" id="8H6T">
    <property type="method" value="X-ray"/>
    <property type="resolution" value="3.00 A"/>
    <property type="chains" value="A=1-297"/>
</dbReference>
<dbReference type="PDB" id="8OR0">
    <property type="method" value="EM"/>
    <property type="resolution" value="3.10 A"/>
    <property type="chains" value="H=1-298"/>
</dbReference>
<dbReference type="PDB" id="8OR4">
    <property type="method" value="EM"/>
    <property type="resolution" value="3.80 A"/>
    <property type="chains" value="H=1-298"/>
</dbReference>
<dbReference type="PDB" id="8OY2">
    <property type="method" value="X-ray"/>
    <property type="resolution" value="2.62 A"/>
    <property type="chains" value="A=1-298"/>
</dbReference>
<dbReference type="PDB" id="8ROZ">
    <property type="method" value="EM"/>
    <property type="resolution" value="2.70 A"/>
    <property type="chains" value="A=1-298"/>
</dbReference>
<dbReference type="PDB" id="8RU8">
    <property type="method" value="X-ray"/>
    <property type="resolution" value="1.51 A"/>
    <property type="chains" value="A=1-298"/>
</dbReference>
<dbReference type="PDB" id="8UV0">
    <property type="method" value="X-ray"/>
    <property type="resolution" value="1.55 A"/>
    <property type="chains" value="A=2-298"/>
</dbReference>
<dbReference type="PDB" id="8VQ3">
    <property type="method" value="X-ray"/>
    <property type="resolution" value="1.84 A"/>
    <property type="chains" value="A=1-298"/>
</dbReference>
<dbReference type="PDB" id="8VQ4">
    <property type="method" value="X-ray"/>
    <property type="resolution" value="1.90 A"/>
    <property type="chains" value="A=1-298"/>
</dbReference>
<dbReference type="PDB" id="9FR2">
    <property type="method" value="X-ray"/>
    <property type="resolution" value="1.60 A"/>
    <property type="chains" value="A=1-298"/>
</dbReference>
<dbReference type="PDBsum" id="1AQ1"/>
<dbReference type="PDBsum" id="1B38"/>
<dbReference type="PDBsum" id="1B39"/>
<dbReference type="PDBsum" id="1BUH"/>
<dbReference type="PDBsum" id="1CKP"/>
<dbReference type="PDBsum" id="1DI8"/>
<dbReference type="PDBsum" id="1DM2"/>
<dbReference type="PDBsum" id="1E1V"/>
<dbReference type="PDBsum" id="1E1X"/>
<dbReference type="PDBsum" id="1E9H"/>
<dbReference type="PDBsum" id="1F5Q"/>
<dbReference type="PDBsum" id="1FIN"/>
<dbReference type="PDBsum" id="1FQ1"/>
<dbReference type="PDBsum" id="1FVT"/>
<dbReference type="PDBsum" id="1FVV"/>
<dbReference type="PDBsum" id="1G5S"/>
<dbReference type="PDBsum" id="1GIH"/>
<dbReference type="PDBsum" id="1GII"/>
<dbReference type="PDBsum" id="1GIJ"/>
<dbReference type="PDBsum" id="1GY3"/>
<dbReference type="PDBsum" id="1GZ8"/>
<dbReference type="PDBsum" id="1H00"/>
<dbReference type="PDBsum" id="1H01"/>
<dbReference type="PDBsum" id="1H07"/>
<dbReference type="PDBsum" id="1H08"/>
<dbReference type="PDBsum" id="1H0V"/>
<dbReference type="PDBsum" id="1H0W"/>
<dbReference type="PDBsum" id="1H1P"/>
<dbReference type="PDBsum" id="1H1Q"/>
<dbReference type="PDBsum" id="1H1R"/>
<dbReference type="PDBsum" id="1H1S"/>
<dbReference type="PDBsum" id="1H24"/>
<dbReference type="PDBsum" id="1H25"/>
<dbReference type="PDBsum" id="1H26"/>
<dbReference type="PDBsum" id="1H27"/>
<dbReference type="PDBsum" id="1H28"/>
<dbReference type="PDBsum" id="1HCK"/>
<dbReference type="PDBsum" id="1HCL"/>
<dbReference type="PDBsum" id="1JST"/>
<dbReference type="PDBsum" id="1JSU"/>
<dbReference type="PDBsum" id="1JSV"/>
<dbReference type="PDBsum" id="1JVP"/>
<dbReference type="PDBsum" id="1KE5"/>
<dbReference type="PDBsum" id="1KE6"/>
<dbReference type="PDBsum" id="1KE7"/>
<dbReference type="PDBsum" id="1KE8"/>
<dbReference type="PDBsum" id="1KE9"/>
<dbReference type="PDBsum" id="1OGU"/>
<dbReference type="PDBsum" id="1OI9"/>
<dbReference type="PDBsum" id="1OIQ"/>
<dbReference type="PDBsum" id="1OIR"/>
<dbReference type="PDBsum" id="1OIT"/>
<dbReference type="PDBsum" id="1OIU"/>
<dbReference type="PDBsum" id="1OIY"/>
<dbReference type="PDBsum" id="1OKV"/>
<dbReference type="PDBsum" id="1OKW"/>
<dbReference type="PDBsum" id="1OL1"/>
<dbReference type="PDBsum" id="1OL2"/>
<dbReference type="PDBsum" id="1P2A"/>
<dbReference type="PDBsum" id="1P5E"/>
<dbReference type="PDBsum" id="1PF8"/>
<dbReference type="PDBsum" id="1PKD"/>
<dbReference type="PDBsum" id="1PW2"/>
<dbReference type="PDBsum" id="1PXI"/>
<dbReference type="PDBsum" id="1PXJ"/>
<dbReference type="PDBsum" id="1PXK"/>
<dbReference type="PDBsum" id="1PXL"/>
<dbReference type="PDBsum" id="1PXM"/>
<dbReference type="PDBsum" id="1PXN"/>
<dbReference type="PDBsum" id="1PXO"/>
<dbReference type="PDBsum" id="1PXP"/>
<dbReference type="PDBsum" id="1PYE"/>
<dbReference type="PDBsum" id="1QMZ"/>
<dbReference type="PDBsum" id="1R78"/>
<dbReference type="PDBsum" id="1URC"/>
<dbReference type="PDBsum" id="1URW"/>
<dbReference type="PDBsum" id="1V1K"/>
<dbReference type="PDBsum" id="1VYW"/>
<dbReference type="PDBsum" id="1VYZ"/>
<dbReference type="PDBsum" id="1W0X"/>
<dbReference type="PDBsum" id="1W8C"/>
<dbReference type="PDBsum" id="1W98"/>
<dbReference type="PDBsum" id="1WCC"/>
<dbReference type="PDBsum" id="1Y8Y"/>
<dbReference type="PDBsum" id="1Y91"/>
<dbReference type="PDBsum" id="1YKR"/>
<dbReference type="PDBsum" id="2A0C"/>
<dbReference type="PDBsum" id="2A4L"/>
<dbReference type="PDBsum" id="2B52"/>
<dbReference type="PDBsum" id="2B53"/>
<dbReference type="PDBsum" id="2B54"/>
<dbReference type="PDBsum" id="2B55"/>
<dbReference type="PDBsum" id="2BHE"/>
<dbReference type="PDBsum" id="2BHH"/>
<dbReference type="PDBsum" id="2BKZ"/>
<dbReference type="PDBsum" id="2BPM"/>
<dbReference type="PDBsum" id="2BTR"/>
<dbReference type="PDBsum" id="2BTS"/>
<dbReference type="PDBsum" id="2C4G"/>
<dbReference type="PDBsum" id="2C5N"/>
<dbReference type="PDBsum" id="2C5O"/>
<dbReference type="PDBsum" id="2C5V"/>
<dbReference type="PDBsum" id="2C5X"/>
<dbReference type="PDBsum" id="2C5Y"/>
<dbReference type="PDBsum" id="2C68"/>
<dbReference type="PDBsum" id="2C69"/>
<dbReference type="PDBsum" id="2C6I"/>
<dbReference type="PDBsum" id="2C6K"/>
<dbReference type="PDBsum" id="2C6L"/>
<dbReference type="PDBsum" id="2C6M"/>
<dbReference type="PDBsum" id="2C6O"/>
<dbReference type="PDBsum" id="2C6T"/>
<dbReference type="PDBsum" id="2CCH"/>
<dbReference type="PDBsum" id="2CCI"/>
<dbReference type="PDBsum" id="2CJM"/>
<dbReference type="PDBsum" id="2CLX"/>
<dbReference type="PDBsum" id="2DS1"/>
<dbReference type="PDBsum" id="2DUV"/>
<dbReference type="PDBsum" id="2EXM"/>
<dbReference type="PDBsum" id="2FVD"/>
<dbReference type="PDBsum" id="2G9X"/>
<dbReference type="PDBsum" id="2I40"/>
<dbReference type="PDBsum" id="2IW6"/>
<dbReference type="PDBsum" id="2IW8"/>
<dbReference type="PDBsum" id="2IW9"/>
<dbReference type="PDBsum" id="2J9M"/>
<dbReference type="PDBsum" id="2JGZ"/>
<dbReference type="PDBsum" id="2R3F"/>
<dbReference type="PDBsum" id="2R3G"/>
<dbReference type="PDBsum" id="2R3H"/>
<dbReference type="PDBsum" id="2R3I"/>
<dbReference type="PDBsum" id="2R3J"/>
<dbReference type="PDBsum" id="2R3K"/>
<dbReference type="PDBsum" id="2R3L"/>
<dbReference type="PDBsum" id="2R3M"/>
<dbReference type="PDBsum" id="2R3N"/>
<dbReference type="PDBsum" id="2R3O"/>
<dbReference type="PDBsum" id="2R3P"/>
<dbReference type="PDBsum" id="2R3Q"/>
<dbReference type="PDBsum" id="2R3R"/>
<dbReference type="PDBsum" id="2R64"/>
<dbReference type="PDBsum" id="2UUE"/>
<dbReference type="PDBsum" id="2UZB"/>
<dbReference type="PDBsum" id="2UZD"/>
<dbReference type="PDBsum" id="2UZE"/>
<dbReference type="PDBsum" id="2UZL"/>
<dbReference type="PDBsum" id="2UZN"/>
<dbReference type="PDBsum" id="2UZO"/>
<dbReference type="PDBsum" id="2V0D"/>
<dbReference type="PDBsum" id="2V22"/>
<dbReference type="PDBsum" id="2VTA"/>
<dbReference type="PDBsum" id="2VTH"/>
<dbReference type="PDBsum" id="2VTI"/>
<dbReference type="PDBsum" id="2VTJ"/>
<dbReference type="PDBsum" id="2VTL"/>
<dbReference type="PDBsum" id="2VTM"/>
<dbReference type="PDBsum" id="2VTN"/>
<dbReference type="PDBsum" id="2VTO"/>
<dbReference type="PDBsum" id="2VTP"/>
<dbReference type="PDBsum" id="2VTQ"/>
<dbReference type="PDBsum" id="2VTR"/>
<dbReference type="PDBsum" id="2VTS"/>
<dbReference type="PDBsum" id="2VTT"/>
<dbReference type="PDBsum" id="2VU3"/>
<dbReference type="PDBsum" id="2VV9"/>
<dbReference type="PDBsum" id="2W05"/>
<dbReference type="PDBsum" id="2W06"/>
<dbReference type="PDBsum" id="2W17"/>
<dbReference type="PDBsum" id="2W1H"/>
<dbReference type="PDBsum" id="2WEV"/>
<dbReference type="PDBsum" id="2WFY"/>
<dbReference type="PDBsum" id="2WHB"/>
<dbReference type="PDBsum" id="2WIH"/>
<dbReference type="PDBsum" id="2WIP"/>
<dbReference type="PDBsum" id="2WMA"/>
<dbReference type="PDBsum" id="2WMB"/>
<dbReference type="PDBsum" id="2WPA"/>
<dbReference type="PDBsum" id="2WXV"/>
<dbReference type="PDBsum" id="2X1N"/>
<dbReference type="PDBsum" id="2XMY"/>
<dbReference type="PDBsum" id="2XNB"/>
<dbReference type="PDBsum" id="3BHT"/>
<dbReference type="PDBsum" id="3BHU"/>
<dbReference type="PDBsum" id="3BHV"/>
<dbReference type="PDBsum" id="3DDP"/>
<dbReference type="PDBsum" id="3DDQ"/>
<dbReference type="PDBsum" id="3DOG"/>
<dbReference type="PDBsum" id="3EID"/>
<dbReference type="PDBsum" id="3EJ1"/>
<dbReference type="PDBsum" id="3EOC"/>
<dbReference type="PDBsum" id="3EZR"/>
<dbReference type="PDBsum" id="3EZV"/>
<dbReference type="PDBsum" id="3F5X"/>
<dbReference type="PDBsum" id="3FZ1"/>
<dbReference type="PDBsum" id="3IG7"/>
<dbReference type="PDBsum" id="3IGG"/>
<dbReference type="PDBsum" id="3LE6"/>
<dbReference type="PDBsum" id="3LFN"/>
<dbReference type="PDBsum" id="3LFQ"/>
<dbReference type="PDBsum" id="3LFS"/>
<dbReference type="PDBsum" id="3MY5"/>
<dbReference type="PDBsum" id="3NS9"/>
<dbReference type="PDBsum" id="3PJ8"/>
<dbReference type="PDBsum" id="3PXF"/>
<dbReference type="PDBsum" id="3PXQ"/>
<dbReference type="PDBsum" id="3PXR"/>
<dbReference type="PDBsum" id="3PXY"/>
<dbReference type="PDBsum" id="3PXZ"/>
<dbReference type="PDBsum" id="3PY0"/>
<dbReference type="PDBsum" id="3PY1"/>
<dbReference type="PDBsum" id="3QHR"/>
<dbReference type="PDBsum" id="3QHW"/>
<dbReference type="PDBsum" id="3QL8"/>
<dbReference type="PDBsum" id="3QQF"/>
<dbReference type="PDBsum" id="3QQG"/>
<dbReference type="PDBsum" id="3QQH"/>
<dbReference type="PDBsum" id="3QQJ"/>
<dbReference type="PDBsum" id="3QQK"/>
<dbReference type="PDBsum" id="3QQL"/>
<dbReference type="PDBsum" id="3QRT"/>
<dbReference type="PDBsum" id="3QRU"/>
<dbReference type="PDBsum" id="3QTQ"/>
<dbReference type="PDBsum" id="3QTR"/>
<dbReference type="PDBsum" id="3QTS"/>
<dbReference type="PDBsum" id="3QTU"/>
<dbReference type="PDBsum" id="3QTW"/>
<dbReference type="PDBsum" id="3QTX"/>
<dbReference type="PDBsum" id="3QTZ"/>
<dbReference type="PDBsum" id="3QU0"/>
<dbReference type="PDBsum" id="3QWJ"/>
<dbReference type="PDBsum" id="3QWK"/>
<dbReference type="PDBsum" id="3QX2"/>
<dbReference type="PDBsum" id="3QX4"/>
<dbReference type="PDBsum" id="3QXO"/>
<dbReference type="PDBsum" id="3QXP"/>
<dbReference type="PDBsum" id="3QZF"/>
<dbReference type="PDBsum" id="3QZG"/>
<dbReference type="PDBsum" id="3QZH"/>
<dbReference type="PDBsum" id="3QZI"/>
<dbReference type="PDBsum" id="3R1Q"/>
<dbReference type="PDBsum" id="3R1S"/>
<dbReference type="PDBsum" id="3R1Y"/>
<dbReference type="PDBsum" id="3R28"/>
<dbReference type="PDBsum" id="3R6X"/>
<dbReference type="PDBsum" id="3R71"/>
<dbReference type="PDBsum" id="3R73"/>
<dbReference type="PDBsum" id="3R7E"/>
<dbReference type="PDBsum" id="3R7I"/>
<dbReference type="PDBsum" id="3R7U"/>
<dbReference type="PDBsum" id="3R7V"/>
<dbReference type="PDBsum" id="3R7Y"/>
<dbReference type="PDBsum" id="3R83"/>
<dbReference type="PDBsum" id="3R8L"/>
<dbReference type="PDBsum" id="3R8M"/>
<dbReference type="PDBsum" id="3R8P"/>
<dbReference type="PDBsum" id="3R8U"/>
<dbReference type="PDBsum" id="3R8V"/>
<dbReference type="PDBsum" id="3R8Z"/>
<dbReference type="PDBsum" id="3R9D"/>
<dbReference type="PDBsum" id="3R9H"/>
<dbReference type="PDBsum" id="3R9N"/>
<dbReference type="PDBsum" id="3R9O"/>
<dbReference type="PDBsum" id="3RAH"/>
<dbReference type="PDBsum" id="3RAI"/>
<dbReference type="PDBsum" id="3RAK"/>
<dbReference type="PDBsum" id="3RAL"/>
<dbReference type="PDBsum" id="3RJC"/>
<dbReference type="PDBsum" id="3RK5"/>
<dbReference type="PDBsum" id="3RK7"/>
<dbReference type="PDBsum" id="3RK9"/>
<dbReference type="PDBsum" id="3RKB"/>
<dbReference type="PDBsum" id="3RM6"/>
<dbReference type="PDBsum" id="3RM7"/>
<dbReference type="PDBsum" id="3RMF"/>
<dbReference type="PDBsum" id="3RNI"/>
<dbReference type="PDBsum" id="3ROY"/>
<dbReference type="PDBsum" id="3RPO"/>
<dbReference type="PDBsum" id="3RPR"/>
<dbReference type="PDBsum" id="3RPV"/>
<dbReference type="PDBsum" id="3RPY"/>
<dbReference type="PDBsum" id="3RZB"/>
<dbReference type="PDBsum" id="3S00"/>
<dbReference type="PDBsum" id="3S0O"/>
<dbReference type="PDBsum" id="3S1H"/>
<dbReference type="PDBsum" id="3S2P"/>
<dbReference type="PDBsum" id="3SQQ"/>
<dbReference type="PDBsum" id="3SW4"/>
<dbReference type="PDBsum" id="3SW7"/>
<dbReference type="PDBsum" id="3TI1"/>
<dbReference type="PDBsum" id="3TIY"/>
<dbReference type="PDBsum" id="3TIZ"/>
<dbReference type="PDBsum" id="3TNW"/>
<dbReference type="PDBsum" id="3ULI"/>
<dbReference type="PDBsum" id="3UNJ"/>
<dbReference type="PDBsum" id="3UNK"/>
<dbReference type="PDBsum" id="3WBL"/>
<dbReference type="PDBsum" id="4ACM"/>
<dbReference type="PDBsum" id="4BCK"/>
<dbReference type="PDBsum" id="4BCM"/>
<dbReference type="PDBsum" id="4BCN"/>
<dbReference type="PDBsum" id="4BCO"/>
<dbReference type="PDBsum" id="4BCP"/>
<dbReference type="PDBsum" id="4BCQ"/>
<dbReference type="PDBsum" id="4BGH"/>
<dbReference type="PDBsum" id="4BZD"/>
<dbReference type="PDBsum" id="4CFM"/>
<dbReference type="PDBsum" id="4CFN"/>
<dbReference type="PDBsum" id="4CFU"/>
<dbReference type="PDBsum" id="4CFV"/>
<dbReference type="PDBsum" id="4CFW"/>
<dbReference type="PDBsum" id="4CFX"/>
<dbReference type="PDBsum" id="4D1X"/>
<dbReference type="PDBsum" id="4D1Z"/>
<dbReference type="PDBsum" id="4EK3"/>
<dbReference type="PDBsum" id="4EK4"/>
<dbReference type="PDBsum" id="4EK5"/>
<dbReference type="PDBsum" id="4EK6"/>
<dbReference type="PDBsum" id="4EK8"/>
<dbReference type="PDBsum" id="4EOI"/>
<dbReference type="PDBsum" id="4EOJ"/>
<dbReference type="PDBsum" id="4EOK"/>
<dbReference type="PDBsum" id="4EOL"/>
<dbReference type="PDBsum" id="4EOM"/>
<dbReference type="PDBsum" id="4EON"/>
<dbReference type="PDBsum" id="4EOO"/>
<dbReference type="PDBsum" id="4EOP"/>
<dbReference type="PDBsum" id="4EOQ"/>
<dbReference type="PDBsum" id="4EOR"/>
<dbReference type="PDBsum" id="4EOS"/>
<dbReference type="PDBsum" id="4ERW"/>
<dbReference type="PDBsum" id="4EZ3"/>
<dbReference type="PDBsum" id="4EZ7"/>
<dbReference type="PDBsum" id="4FKG"/>
<dbReference type="PDBsum" id="4FKI"/>
<dbReference type="PDBsum" id="4FKJ"/>
<dbReference type="PDBsum" id="4FKL"/>
<dbReference type="PDBsum" id="4FKO"/>
<dbReference type="PDBsum" id="4FKP"/>
<dbReference type="PDBsum" id="4FKQ"/>
<dbReference type="PDBsum" id="4FKR"/>
<dbReference type="PDBsum" id="4FKS"/>
<dbReference type="PDBsum" id="4FKT"/>
<dbReference type="PDBsum" id="4FKU"/>
<dbReference type="PDBsum" id="4FKV"/>
<dbReference type="PDBsum" id="4FKW"/>
<dbReference type="PDBsum" id="4FX3"/>
<dbReference type="PDBsum" id="4GCJ"/>
<dbReference type="PDBsum" id="4I3Z"/>
<dbReference type="PDBsum" id="4II5"/>
<dbReference type="PDBsum" id="4KD1"/>
<dbReference type="PDBsum" id="4LYN"/>
<dbReference type="PDBsum" id="4NJ3"/>
<dbReference type="PDBsum" id="4RJ3"/>
<dbReference type="PDBsum" id="5A14"/>
<dbReference type="PDBsum" id="5AND"/>
<dbReference type="PDBsum" id="5ANE"/>
<dbReference type="PDBsum" id="5ANG"/>
<dbReference type="PDBsum" id="5ANI"/>
<dbReference type="PDBsum" id="5ANJ"/>
<dbReference type="PDBsum" id="5ANK"/>
<dbReference type="PDBsum" id="5ANO"/>
<dbReference type="PDBsum" id="5CYI"/>
<dbReference type="PDBsum" id="5D1J"/>
<dbReference type="PDBsum" id="5FP5"/>
<dbReference type="PDBsum" id="5FP6"/>
<dbReference type="PDBsum" id="5IEV"/>
<dbReference type="PDBsum" id="5IEX"/>
<dbReference type="PDBsum" id="5IEY"/>
<dbReference type="PDBsum" id="5IF1"/>
<dbReference type="PDBsum" id="5JQ5"/>
<dbReference type="PDBsum" id="5JQ8"/>
<dbReference type="PDBsum" id="5K4J"/>
<dbReference type="PDBsum" id="5L2W"/>
<dbReference type="PDBsum" id="5LMK"/>
<dbReference type="PDBsum" id="5MHQ"/>
<dbReference type="PDBsum" id="5NEV"/>
<dbReference type="PDBsum" id="5OO0"/>
<dbReference type="PDBsum" id="5OO1"/>
<dbReference type="PDBsum" id="5OO3"/>
<dbReference type="PDBsum" id="5OSJ"/>
<dbReference type="PDBsum" id="5OSM"/>
<dbReference type="PDBsum" id="5UQ1"/>
<dbReference type="PDBsum" id="5UQ2"/>
<dbReference type="PDBsum" id="5UQ3"/>
<dbReference type="PDBsum" id="6ATH"/>
<dbReference type="PDBsum" id="6GUB"/>
<dbReference type="PDBsum" id="6GUC"/>
<dbReference type="PDBsum" id="6GUE"/>
<dbReference type="PDBsum" id="6GUF"/>
<dbReference type="PDBsum" id="6GUH"/>
<dbReference type="PDBsum" id="6GUK"/>
<dbReference type="PDBsum" id="6GVA"/>
<dbReference type="PDBsum" id="6INL"/>
<dbReference type="PDBsum" id="6JGM"/>
<dbReference type="PDBsum" id="6OQI"/>
<dbReference type="PDBsum" id="6P3W"/>
<dbReference type="PDBsum" id="6Q3B"/>
<dbReference type="PDBsum" id="6Q3C"/>
<dbReference type="PDBsum" id="6Q3F"/>
<dbReference type="PDBsum" id="6Q48"/>
<dbReference type="PDBsum" id="6Q49"/>
<dbReference type="PDBsum" id="6Q4A"/>
<dbReference type="PDBsum" id="6Q4B"/>
<dbReference type="PDBsum" id="6Q4C"/>
<dbReference type="PDBsum" id="6Q4D"/>
<dbReference type="PDBsum" id="6Q4E"/>
<dbReference type="PDBsum" id="6Q4F"/>
<dbReference type="PDBsum" id="6Q4G"/>
<dbReference type="PDBsum" id="6Q4H"/>
<dbReference type="PDBsum" id="6Q4I"/>
<dbReference type="PDBsum" id="6Q4J"/>
<dbReference type="PDBsum" id="6Q4K"/>
<dbReference type="PDBsum" id="6RIJ"/>
<dbReference type="PDBsum" id="6SG4"/>
<dbReference type="PDBsum" id="6YL1"/>
<dbReference type="PDBsum" id="6YL6"/>
<dbReference type="PDBsum" id="6YLK"/>
<dbReference type="PDBsum" id="7ACK"/>
<dbReference type="PDBsum" id="7B5L"/>
<dbReference type="PDBsum" id="7B5R"/>
<dbReference type="PDBsum" id="7B7S"/>
<dbReference type="PDBsum" id="7E34"/>
<dbReference type="PDBsum" id="7KJS"/>
<dbReference type="PDBsum" id="7M2F"/>
<dbReference type="PDBsum" id="7MKX"/>
<dbReference type="PDBsum" id="7NVQ"/>
<dbReference type="PDBsum" id="7QHL"/>
<dbReference type="PDBsum" id="7RA5"/>
<dbReference type="PDBsum" id="7RWE"/>
<dbReference type="PDBsum" id="7RWF"/>
<dbReference type="PDBsum" id="7RXO"/>
<dbReference type="PDBsum" id="7S4T"/>
<dbReference type="PDBsum" id="7S7A"/>
<dbReference type="PDBsum" id="7S84"/>
<dbReference type="PDBsum" id="7S85"/>
<dbReference type="PDBsum" id="7S9X"/>
<dbReference type="PDBsum" id="7SA0"/>
<dbReference type="PDBsum" id="7UG1"/>
<dbReference type="PDBsum" id="7UXI"/>
<dbReference type="PDBsum" id="7UXK"/>
<dbReference type="PDBsum" id="7VDU"/>
<dbReference type="PDBsum" id="7ZPC"/>
<dbReference type="PDBsum" id="8B54"/>
<dbReference type="PDBsum" id="8BYA"/>
<dbReference type="PDBsum" id="8BZO"/>
<dbReference type="PDBsum" id="8CUR"/>
<dbReference type="PDBsum" id="8ERD"/>
<dbReference type="PDBsum" id="8ERN"/>
<dbReference type="PDBsum" id="8FOW"/>
<dbReference type="PDBsum" id="8FP0"/>
<dbReference type="PDBsum" id="8FP5"/>
<dbReference type="PDBsum" id="8H6P"/>
<dbReference type="PDBsum" id="8H6T"/>
<dbReference type="PDBsum" id="8OR0"/>
<dbReference type="PDBsum" id="8OR4"/>
<dbReference type="PDBsum" id="8OY2"/>
<dbReference type="PDBsum" id="8ROZ"/>
<dbReference type="PDBsum" id="8RU8"/>
<dbReference type="PDBsum" id="8UV0"/>
<dbReference type="PDBsum" id="8VQ3"/>
<dbReference type="PDBsum" id="8VQ4"/>
<dbReference type="PDBsum" id="9FR2"/>
<dbReference type="EMDB" id="EMD-12037"/>
<dbReference type="EMDB" id="EMD-12048"/>
<dbReference type="EMDB" id="EMD-16325"/>
<dbReference type="EMDB" id="EMD-16344"/>
<dbReference type="EMDB" id="EMD-17114"/>
<dbReference type="EMDB" id="EMD-17117"/>
<dbReference type="EMDB" id="EMD-19408"/>
<dbReference type="EMDB" id="EMD-4467"/>
<dbReference type="SMR" id="P24941"/>
<dbReference type="BioGRID" id="107452">
    <property type="interactions" value="816"/>
</dbReference>
<dbReference type="ComplexPortal" id="CPX-2005">
    <property type="entry name" value="Cyclin A1-CDK2 complex"/>
</dbReference>
<dbReference type="ComplexPortal" id="CPX-2006">
    <property type="entry name" value="Cyclin A2-CDK2 complex"/>
</dbReference>
<dbReference type="ComplexPortal" id="CPX-2009">
    <property type="entry name" value="Cyclin B3-CDK2 complex"/>
</dbReference>
<dbReference type="ComplexPortal" id="CPX-2015">
    <property type="entry name" value="Cyclin E1-CDK2 complex"/>
</dbReference>
<dbReference type="ComplexPortal" id="CPX-2016">
    <property type="entry name" value="Cyclin E2-CDK2 complex"/>
</dbReference>
<dbReference type="CORUM" id="P24941"/>
<dbReference type="DIP" id="DIP-161N"/>
<dbReference type="ELM" id="P24941"/>
<dbReference type="FunCoup" id="P24941">
    <property type="interactions" value="2737"/>
</dbReference>
<dbReference type="IntAct" id="P24941">
    <property type="interactions" value="222"/>
</dbReference>
<dbReference type="MINT" id="P24941"/>
<dbReference type="STRING" id="9606.ENSP00000266970"/>
<dbReference type="BindingDB" id="P24941"/>
<dbReference type="ChEMBL" id="CHEMBL301"/>
<dbReference type="DrugBank" id="DB06888">
    <property type="generic name" value="(13R,15S)-13-METHYL-16-OXA-8,9,12,22,24-PENTAAZAHEXACYCLO[15.6.2.16,9.1,12,15.0,2,7.0,21,25]HEPTACOSA-1(24),2,4,6,17(25),18,20-HEPTAENE-23,26-DIONE"/>
</dbReference>
<dbReference type="DrugBank" id="DB03583">
    <property type="generic name" value="(2E,3S)-3-hydroxy-5'-[(4-hydroxypiperidin-1-yl)sulfonyl]-3-methyl-1,3-dihydro-2,3'-biindol-2'(1'H)-one"/>
</dbReference>
<dbReference type="DrugBank" id="DB07054">
    <property type="generic name" value="(2R)-1-(DIMETHYLAMINO)-3-{4-[(6-{[2-FLUORO-5-(TRIFLUOROMETHYL)PHENYL]AMINO}PYRIMIDIN-4-YL)AMINO]PHENOXY}PROPAN-2-OL"/>
</dbReference>
<dbReference type="DrugBank" id="DB07750">
    <property type="generic name" value="(2R)-1-[4-({4-[(2,5-Dichlorophenyl)amino]-2-pyrimidinyl}amino)phenoxy]-3-(dimethylamino)-2-propanol"/>
</dbReference>
<dbReference type="DrugBank" id="DB07761">
    <property type="generic name" value="(2R)-1-[4-({6-[(2,6-Difluorophenyl)amino]-4-pyrimidinyl}amino)phenoxy]-3-(dimethylamino)-2-propanol"/>
</dbReference>
<dbReference type="DrugBank" id="DB07504">
    <property type="generic name" value="(2R)-1-{4-[(4-Anilino-5-bromo-2-pyrimidinyl)amino]phenoxy}-3-(dimethylamino)-2-propanol"/>
</dbReference>
<dbReference type="DrugBank" id="DB08463">
    <property type="generic name" value="(2R)-2-({9-(1-methylethyl)-6-[(4-pyridin-2-ylbenzyl)amino]-9H-purin-2-yl}amino)butan-1-ol"/>
</dbReference>
<dbReference type="DrugBank" id="DB08285">
    <property type="generic name" value="(2R)-2-{[4-(benzylamino)-8-(1-methylethyl)pyrazolo[1,5-a][1,3,5]triazin-2-yl]amino}butan-1-ol"/>
</dbReference>
<dbReference type="DrugBank" id="DB07889">
    <property type="generic name" value="(2S)-1-(Dimethylamino)-3-(4-{[4-(2-methylimidazo[1,2-a]pyridin-3-yl)-2-pyrimidinyl]amino}phenoxy)-2-propanol"/>
</dbReference>
<dbReference type="DrugBank" id="DB07755">
    <property type="generic name" value="(2S)-1-[4-({4-[(2,5-Dichlorophenyl)amino]-2-pyrimidinyl}amino)phenoxy]-3-(dimethylamino)-2-propanol"/>
</dbReference>
<dbReference type="DrugBank" id="DB07751">
    <property type="generic name" value="(2S)-1-[4-({6-[(2,6-Difluorophenyl)amino]-4-pyrimidinyl}amino)phenoxy]-3-(dimethylamino)-2-propanol"/>
</dbReference>
<dbReference type="DrugBank" id="DB07501">
    <property type="generic name" value="(2S)-1-{4-[(4-Anilino-5-bromo-2-pyrimidinyl)amino]phenoxy}-3-(dimethylamino)-2-propanol"/>
</dbReference>
<dbReference type="DrugBank" id="DB07137">
    <property type="generic name" value="(2S)-N-[(3E)-5-Cyclopropyl-3H-pyrazol-3-ylidene]-2-[4-(2-oxo-1-imidazolidinyl)phenyl]propanamide"/>
</dbReference>
<dbReference type="DrugBank" id="DB07431">
    <property type="generic name" value="(3R)-3-(aminomethyl)-9-methoxy-1,2,3,4-tetrahydro-5H-[1]benzothieno[3,2-e][1,4]diazepin-5-one"/>
</dbReference>
<dbReference type="DrugBank" id="DB08137">
    <property type="generic name" value="(4E)-N-(4-fluorophenyl)-4-[(phenylcarbonyl)imino]-4H-pyrazole-3-carboxamide"/>
</dbReference>
<dbReference type="DrugBank" id="DB02963">
    <property type="generic name" value="(5-Chloropyrazolo[1,5-a]Pyrimidin-7-Yl)-(4-Methanesulfonylphenyl)Amine"/>
</dbReference>
<dbReference type="DrugBank" id="DB06983">
    <property type="generic name" value="(5-phenyl-7-(pyridin-3-ylmethylamino)pyrazolo[1,5-a]pyrimidin-3-yl)methanol"/>
</dbReference>
<dbReference type="DrugBank" id="DB07529">
    <property type="generic name" value="(5E)-2-Amino-5-(2-pyridinylmethylene)-1,3-thiazol-4(5H)-one"/>
</dbReference>
<dbReference type="DrugBank" id="DB02898">
    <property type="generic name" value="(5R)-5-{[(2-Amino-3H-purin-6-yl)oxy]methyl}-2-pyrrolidinone"/>
</dbReference>
<dbReference type="DrugBank" id="DB07595">
    <property type="generic name" value="(5Z)-5-(3-BROMOCYCLOHEXA-2,5-DIEN-1-YLIDENE)-N-(PYRIDIN-4-YLMETHYL)-1,5-DIHYDROPYRAZOLO[1,5-A]PYRIMIDIN-7-AMINE"/>
</dbReference>
<dbReference type="DrugBank" id="DB07149">
    <property type="generic name" value="(7S)-2-(2-aminopyrimidin-4-yl)-7-(2-fluoroethyl)-1,5,6,7-tetrahydro-4H-pyrrolo[3,2-c]pyridin-4-one"/>
</dbReference>
<dbReference type="DrugBank" id="DB07852">
    <property type="generic name" value="1-(3,5-DICHLOROPHENYL)-5-METHYL-1H-1,2,4-TRIAZOLE-3-CARBOXYLIC ACID"/>
</dbReference>
<dbReference type="DrugBank" id="DB07622">
    <property type="generic name" value="1-(3-(2,4-DIMETHYLTHIAZOL-5-YL)-4-OXO-2,4-DIHYDROINDENO[1,2-C]PYRAZOL-5-YL)-3-(4-METHYLPIPERAZIN-1-YL)UREA"/>
</dbReference>
<dbReference type="DrugBank" id="DB06976">
    <property type="generic name" value="1-(5-OXO-2,3,5,9B-TETRAHYDRO-1H-PYRROLO[2,1-A]ISOINDOL-9-YL)-3-(5-PYRROLIDIN-2-YL-1H-PYRAZOL-3-YL)-UREA"/>
</dbReference>
<dbReference type="DrugBank" id="DB03663">
    <property type="generic name" value="1-[(2-Amino-6,9-Dihydro-1h-Purin-6-Yl)Oxy]-3-Methyl-2-Butanol"/>
</dbReference>
<dbReference type="DrugBank" id="DB08527">
    <property type="generic name" value="1-[4-(AMINOSULFONYL)PHENYL]-1,6-DIHYDROPYRAZOLO[3,4-E]INDAZOLE-3-CARBOXAMIDE"/>
</dbReference>
<dbReference type="DrugBank" id="DB02603">
    <property type="generic name" value="1-Amino-6-Cyclohex-3-Enylmethyloxypurine"/>
</dbReference>
<dbReference type="DrugBank" id="DB08355">
    <property type="generic name" value="1-methyl-8-(phenylamino)-4,5-dihydro-1H-pyrazolo[4,3-h]quinazoline-3-carboxylic acid"/>
</dbReference>
<dbReference type="DrugBank" id="DB07024">
    <property type="generic name" value="2-(3,4-DIHYDROXYPHENYL)-8-(1,1-DIOXIDOISOTHIAZOLIDIN-2-YL)-3-HYDROXY-6-METHYL-4H-CHROMEN-4-ONE"/>
</dbReference>
<dbReference type="DrugBank" id="DB07618">
    <property type="generic name" value="2-(4-(AMINOMETHYL)PIPERIDIN-1-YL)-N-(3_CYCLOHEXYL-4-OXO-2,4-DIHYDROINDENO[1,2-C]PYRAZOL-5-YL)ACETAMIDE"/>
</dbReference>
<dbReference type="DrugBank" id="DB04288">
    <property type="generic name" value="2-[Trans-(4-Aminocyclohexyl)Amino]-6-(Benzyl-Amino)-9-Cyclopentylpurine"/>
</dbReference>
<dbReference type="DrugBank" id="DB02297">
    <property type="generic name" value="2-Amino-6-Chloropyrazine"/>
</dbReference>
<dbReference type="DrugBank" id="DB06948">
    <property type="generic name" value="2-ANILINO-6-CYCLOHEXYLMETHOXYPURINE"/>
</dbReference>
<dbReference type="DrugBank" id="DB07982">
    <property type="generic name" value="2-{4-[4-({4-[2-methyl-1-(1-methylethyl)-1H-imidazol-5-yl]pyrimidin-2-yl}amino)phenyl]piperazin-1-yl}-2-oxoethanol"/>
</dbReference>
<dbReference type="DrugBank" id="DB07179">
    <property type="generic name" value="3-((3-bromo-5-o-tolylpyrazolo[1,5-a]pyrimidin-7-ylamino)methyl)pyridine 1-oxide"/>
</dbReference>
<dbReference type="DrugBank" id="DB08248">
    <property type="generic name" value="3-(6-CYCLOHEXYLMETHOXY-9H-PURIN-2-YLAMINO)-BENZENESULFONAMIDE"/>
</dbReference>
<dbReference type="DrugBank" id="DB08309">
    <property type="generic name" value="3-({2-[(4-{[6-(CYCLOHEXYLMETHOXY)-9H-PURIN-2-YL]AMINO}PHENYL)SULFONYL]ETHYL}AMINO)PROPAN-1-OL"/>
</dbReference>
<dbReference type="DrugBank" id="DB04518">
    <property type="generic name" value="3-[4-(2,4-Dimethyl-Thiazol-5-Yl)-Pyrimidin-2-Ylamino]-Phenol"/>
</dbReference>
<dbReference type="DrugBank" id="DB08535">
    <property type="generic name" value="3-bromo-5-phenyl-N-(pyridin-3-ylmethyl)pyrazolo[1,5-a]pyrimidin-7-amine"/>
</dbReference>
<dbReference type="DrugBank" id="DB07210">
    <property type="generic name" value="3-bromo-5-phenyl-N-(pyridin-4-ylmethyl)pyrazolo[1,5-a]pyrimidin-7-amine"/>
</dbReference>
<dbReference type="DrugBank" id="DB08536">
    <property type="generic name" value="3-bromo-5-phenyl-N-(pyrimidin-5-ylmethyl)pyrazolo[1,5-a]pyridin-7-amine"/>
</dbReference>
<dbReference type="DrugBank" id="DB08537">
    <property type="generic name" value="3-bromo-6-phenyl-N-(pyrimidin-5-ylmethyl)imidazo[1,2-a]pyridin-8-amine"/>
</dbReference>
<dbReference type="DrugBank" id="DB08539">
    <property type="generic name" value="3-cyclopropyl-5-phenyl-N-(pyridin-3-ylmethyl)pyrazolo[1,5-a]pyrimidin-7-amine"/>
</dbReference>
<dbReference type="DrugBank" id="DB08533">
    <property type="generic name" value="3-methyl-N-(pyridin-4-ylmethyl)imidazo[1,2-a]pyrazin-8-amine"/>
</dbReference>
<dbReference type="DrugBank" id="DB03490">
    <property type="generic name" value="3-Pyridin-4-Yl-2,4-Dihydro-Indeno[1,2-.C.]Pyrazole"/>
</dbReference>
<dbReference type="DrugBank" id="DB08124">
    <property type="generic name" value="3-{[(2,2-dioxido-1,3-dihydro-2-benzothien-5-yl)amino]methylene}-5-(1,3-oxazol-5-yl)-1,3-dihydro-2H-indol-2-one"/>
</dbReference>
<dbReference type="DrugBank" id="DB08126">
    <property type="generic name" value="3-{[4-([amino(imino)methyl]aminosulfonyl)anilino]methylene}-2-oxo-2,3-dihydro-1H-indole"/>
</dbReference>
<dbReference type="DrugBank" id="DB03737">
    <property type="generic name" value="4-((3r,4s,5r)-4-Amino-3,5-Dihydroxy-Hex-1-Ynyl)-5-Fluoro-3-[1-(3-Methoxy-1h-Pyrrol-2-Yl)-Meth-(Z)-Ylidene]-1,3-Dihydro-Indol-2-One"/>
</dbReference>
<dbReference type="DrugBank" id="DB02915">
    <property type="generic name" value="4-(2,4-Dimethyl-1,3-thiazol-5-yl)-N-[4-(trifluoromethyl)phenyl]-2-pyrimidinamine"/>
</dbReference>
<dbReference type="DrugBank" id="DB02091">
    <property type="generic name" value="4-(2,4-Dimethyl-Thiazol-5-Yl)-Pyrimidin-2-Ylamine"/>
</dbReference>
<dbReference type="DrugBank" id="DB03019">
    <property type="generic name" value="4-(2,5-Dichloro-Thiophen-3-Yl)-Pyrimidin-2-Ylamine"/>
</dbReference>
<dbReference type="DrugBank" id="DB08178">
    <property type="generic name" value="4-(4-methoxy-1H-pyrrolo[2,3-b]pyridin-3-yl)pyrimidin-2-amine"/>
</dbReference>
<dbReference type="DrugBank" id="DB08182">
    <property type="generic name" value="4-(4-propoxy-1H-pyrrolo[2,3-b]pyridin-3-yl)pyrimidin-2-amine"/>
</dbReference>
<dbReference type="DrugBank" id="DB02973">
    <property type="generic name" value="4-(5-Bromo-2-Oxo-2h-Indol-3-Ylazo)-Benzenesulfonamide"/>
</dbReference>
<dbReference type="DrugBank" id="DB08241">
    <property type="generic name" value="4-(6-CYCLOHEXYLMETHOXY-9H-PURIN-2-YLAMINO)--BENZAMIDE"/>
</dbReference>
<dbReference type="DrugBank" id="DB08136">
    <property type="generic name" value="4-(acetylamino)-N-(4-fluorophenyl)-1H-pyrazole-3-carboxamide"/>
</dbReference>
<dbReference type="DrugBank" id="DB07687">
    <property type="generic name" value="4-({5-[(4-AMINOCYCLOHEXYL)AMINO][1,2,4]TRIAZOLO[1,5-A]PYRIMIDIN-7-YL}AMINO)BENZENESULFONAMIDE"/>
</dbReference>
<dbReference type="DrugBank" id="DB02197">
    <property type="generic name" value="4-[(4-Imidazo[1,2-a]Pyridin-3-Ylpyrimidin-2-Yl)Amino]Benzenesulfonamide"/>
</dbReference>
<dbReference type="DrugBank" id="DB08673">
    <property type="generic name" value="4-[(5-ISOPROPYL-1,3-THIAZOL-2-YL)AMINO]BENZENESULFONAMIDE"/>
</dbReference>
<dbReference type="DrugBank" id="DB03307">
    <property type="generic name" value="4-[(6-Amino-4-Pyrimidinyl)Amino]Benzenesulfonamide"/>
</dbReference>
<dbReference type="DrugBank" id="DB08134">
    <property type="generic name" value="4-[(6-chloropyrazin-2-yl)amino]benzenesulfonamide"/>
</dbReference>
<dbReference type="DrugBank" id="DB06844">
    <property type="generic name" value="4-[(7-OXO-7H-THIAZOLO[5,4-E]INDOL-8-YLMETHYL)-AMINO]-N-PYRIDIN-2-YL-BENZENESULFONAMIDE"/>
</dbReference>
<dbReference type="DrugBank" id="DB03365">
    <property type="generic name" value="4-[3-Hydroxyanilino]-6,7-Dimethoxyquinazoline"/>
</dbReference>
<dbReference type="DrugBank" id="DB04407">
    <property type="generic name" value="4-[4-(4-Methyl-2-Methylamino-Thiazol-5-Yl)-Pyrimidin-2-Ylamino]-Phenol"/>
</dbReference>
<dbReference type="DrugBank" id="DB01888">
    <property type="generic name" value="4-[5-(Trans-4-Aminocyclohexylamino)-3-Isopropylpyrazolo[1,5-a]Pyrimidin-7-Ylamino]-N,N-Dimethylbenzenesulfonamide"/>
</dbReference>
<dbReference type="DrugBank" id="DB08219">
    <property type="generic name" value="4-Methyl-5-[(2Z)-2-{[4-(4-morpholinyl)phenyl]imino}-2,5-dihydro-4-pyrimidinyl]-1,3-thiazol-2-amine"/>
</dbReference>
<dbReference type="DrugBank" id="DB07540">
    <property type="generic name" value="4-{5-[(1Z)-1-(2-IMINO-4-OXO-1,3-THIAZOLIDIN-5-YLIDENE)ETHYL]-2-FURYL}BENZENESULFONAMIDE"/>
</dbReference>
<dbReference type="DrugBank" id="DB07531">
    <property type="generic name" value="4-{5-[(Z)-(2,4-DIOXO-1,3-THIAZOLIDIN-5-YLIDENE)METHYL]FURAN-2-YL}BENZENESULFONAMIDE"/>
</dbReference>
<dbReference type="DrugBank" id="DB07533">
    <property type="generic name" value="4-{5-[(Z)-(2-Imino-4-Oxo-1,3-Thiazolidin-5-Ylidene)methyl]-2-Furyl}-N-Methylbenzenesulfonamide"/>
</dbReference>
<dbReference type="DrugBank" id="DB07538">
    <property type="generic name" value="4-{5-[(Z)-(2-IMINO-4-OXO-1,3-THIAZOLIDIN-5-YLIDENE)METHYL]FURAN-2-YL}-2-(TRIFLUOROMETHYL)BENZENESULFONAMIDE"/>
</dbReference>
<dbReference type="DrugBank" id="DB07534">
    <property type="generic name" value="4-{5-[(Z)-(2-Imino-4-Oxo-1,3-Thiazolidin-5-Ylidene)methyl]furan-2-Yl}benzenesulfonamide"/>
</dbReference>
<dbReference type="DrugBank" id="DB07539">
    <property type="generic name" value="4-{5-[(Z)-(2-IMINO-4-OXO-1,3-THIAZOLIDIN-5-YLIDENE)METHYL]FURAN-2-YL}BENZOIC ACID"/>
</dbReference>
<dbReference type="DrugBank" id="DB08141">
    <property type="generic name" value="4-{[(2,6-difluorophenyl)carbonyl]amino}-N-[(3S)-piperidin-3-yl]-1H-pyrazole-3-carboxamide"/>
</dbReference>
<dbReference type="DrugBank" id="DB08125">
    <property type="generic name" value="4-{[(2-Oxo-1,2-dihydro-3H-indol-3-ylidene)methyl]amino}-N-(1,3-thiazol-2-yl)benzenesulfonamide"/>
</dbReference>
<dbReference type="DrugBank" id="DB07791">
    <property type="generic name" value="4-{[4-(1-CYCLOPROPYL-2-METHYL-1H-IMIDAZOL-5-YL)PYRIMIDIN-2-YL]AMINO}-N-METHYLBENZENESULFONAMIDE"/>
</dbReference>
<dbReference type="DrugBank" id="DB08572">
    <property type="generic name" value="4-{[4-AMINO-6-(CYCLOHEXYLMETHOXY)-5-NITROSOPYRIMIDIN-2-YL]AMINO}BENZAMIDE"/>
</dbReference>
<dbReference type="DrugBank" id="DB07686">
    <property type="generic name" value="4-{[5-(CYCLOHEXYLAMINO)[1,2,4]TRIAZOLO[1,5-A]PYRIMIDIN-7-YL]AMINO}BENZENESULFONAMIDE"/>
</dbReference>
<dbReference type="DrugBank" id="DB07685">
    <property type="generic name" value="4-{[5-(CYCLOHEXYLMETHOXY)[1,2,4]TRIAZOLO[1,5-A]PYRIMIDIN-7-YL]AMINO}BENZENESULFONAMIDE"/>
</dbReference>
<dbReference type="DrugBank" id="DB07688">
    <property type="generic name" value="4-{[5-(CYCLOHEXYLOXY)[1,2,4]TRIAZOLO[1,5-A]PYRIMIDIN-7-YL]AMINO}BENZENESULFONAMIDE"/>
</dbReference>
<dbReference type="DrugBank" id="DB07065">
    <property type="generic name" value="5-(2,3-dichlorophenyl)-N-(pyridin-4-ylmethyl)-3-thiocyanatopyrazolo[1,5-a]pyrimidin-7-amine"/>
</dbReference>
<dbReference type="DrugBank" id="DB08531">
    <property type="generic name" value="5-(2,3-dichlorophenyl)-N-(pyridin-4-ylmethyl)pyrazolo[1,5-a]pyrimidin-7-amine"/>
</dbReference>
<dbReference type="DrugBank" id="DB08534">
    <property type="generic name" value="5-(2-fluorophenyl)-N-(pyridin-4-ylmethyl)pyrazolo[1,5-a]pyrimidin-7-amine"/>
</dbReference>
<dbReference type="DrugBank" id="DB07163">
    <property type="generic name" value="5-[(2-AMINOETHYL)AMINO]-6-FLUORO-3-(1H-PYRROL-2-YL)BENZO[CD]INDOL-2(1H)-ONE"/>
</dbReference>
<dbReference type="DrugBank" id="DB08140">
    <property type="generic name" value="5-[(4-AMINOCYCLOHEXYL)AMINO]-7-(PROPAN-2-YLAMINO)PYRAZOLO[1,5-A]PYRIMIDINE-3-CARBONITRILE"/>
</dbReference>
<dbReference type="DrugBank" id="DB07471">
    <property type="generic name" value="5-[5,6-BIS(METHYLOXY)-1H-BENZIMIDAZOL-1-YL]-3-{[1-(2-CHLOROPHENYL)ETHYL]OXY}-2-THIOPHENECARBOXAMIDE"/>
</dbReference>
<dbReference type="DrugBank" id="DB07493">
    <property type="generic name" value="5-Bromoindirubin"/>
</dbReference>
<dbReference type="DrugBank" id="DB08139">
    <property type="generic name" value="5-chloro-7-[(1-methylethyl)amino]pyrazolo[1,5-a]pyrimidine-3-carbonitrile"/>
</dbReference>
<dbReference type="DrugBank" id="DB08132">
    <property type="generic name" value="5-hydroxynaphthalene-1-sulfonamide"/>
</dbReference>
<dbReference type="DrugBank" id="DB08532">
    <property type="generic name" value="6-(2-fluorophenyl)-N-(pyridin-3-ylmethyl)imidazo[1,2-a]pyrazin-8-amine"/>
</dbReference>
<dbReference type="DrugBank" id="DB07606">
    <property type="generic name" value="6-(3,4-DIHYDROXYBENZYL)-3-ETHYL-1-(2,4,6-TRICHLOROPHENYL)-1H-PYRAZOLO[3,4-D]PYRIMIDIN-4(5H)-ONE"/>
</dbReference>
<dbReference type="DrugBank" id="DB07612">
    <property type="generic name" value="6-(3-AMINOPHENYL)-N-(TERT-BUTYL)-2-(TRIFLUOROMETHYL)QUINAZOLIN-4-AMINE"/>
</dbReference>
<dbReference type="DrugBank" id="DB08247">
    <property type="generic name" value="6-(CYCLOHEXYLMETHOXY)-8-ISOPROPYL-9H-PURIN-2-AMINE"/>
</dbReference>
<dbReference type="DrugBank" id="DB08441">
    <property type="generic name" value="6-BROMO-13-THIA-2,4,8,12,19-PENTAAZATRICYCLO[12.3.1.1~3,7~]NONADECA-1(18),3(19),4,6,14,16-HEXAENE 13,13-DIOXIDE"/>
</dbReference>
<dbReference type="DrugBank" id="DB07203">
    <property type="generic name" value="6-CYCLOHEXYLMETHOXY-2-(3'-CHLOROANILINO) PURINE"/>
</dbReference>
<dbReference type="DrugBank" id="DB08233">
    <property type="generic name" value="6-CYCLOHEXYLMETHYLOXY-2-(4'-HYDROXYANILINO)PURINE"/>
</dbReference>
<dbReference type="DrugBank" id="DB08312">
    <property type="generic name" value="6-CYCLOHEXYLMETHYLOXY-5-NITROSO-PYRIMIDINE-2,4-DIAMINE"/>
</dbReference>
<dbReference type="DrugBank" id="DB02407">
    <property type="generic name" value="6-O-Cyclohexylmethyl Guanine"/>
</dbReference>
<dbReference type="DrugBank" id="DB04006">
    <property type="generic name" value="[2-Amino-6-(2,6-Difluoro-Benzoyl)-Imidazo[1,2-a]Pyridin-3-Yl]-Phenyl-Methanone"/>
</dbReference>
<dbReference type="DrugBank" id="DB02833">
    <property type="generic name" value="[4-(2-Amino-4-Methyl-Thiazol-5-Yl)-Pyrimidin-2-Yl]-(3-Nitro-Phenyl)-Amine"/>
</dbReference>
<dbReference type="DrugBank" id="DB13035">
    <property type="generic name" value="AG-24322"/>
</dbReference>
<dbReference type="DrugBank" id="DB04014">
    <property type="generic name" value="Alsterpaullone"/>
</dbReference>
<dbReference type="DrugBank" id="DB03496">
    <property type="generic name" value="Alvocidib"/>
</dbReference>
<dbReference type="DrugBank" id="DB08142">
    <property type="generic name" value="AT-7519"/>
</dbReference>
<dbReference type="DrugBank" id="DB07731">
    <property type="generic name" value="CAN-508"/>
</dbReference>
<dbReference type="DrugBank" id="DB15425">
    <property type="generic name" value="CYC-065"/>
</dbReference>
<dbReference type="DrugBank" id="DB12021">
    <property type="generic name" value="Dinaciclib"/>
</dbReference>
<dbReference type="DrugBank" id="DB17383">
    <property type="generic name" value="FN-1501"/>
</dbReference>
<dbReference type="DrugBank" id="DB08218">
    <property type="generic name" value="HYDROXY(OXO)(3-{[(2Z)-4-[3-(1H-1,2,4-TRIAZOL-1-YLMETHYL)PHENYL]PYRIMIDIN-2(5H)-YLIDENE]AMINO}PHENYL)AMMONIUM"/>
</dbReference>
<dbReference type="DrugBank" id="DB02950">
    <property type="generic name" value="Hymenialdisine"/>
</dbReference>
<dbReference type="DrugBank" id="DB02052">
    <property type="generic name" value="Indirubin-3'-monoxime"/>
</dbReference>
<dbReference type="DrugBank" id="DB07664">
    <property type="generic name" value="K-00546"/>
</dbReference>
<dbReference type="DrugBank" id="DB03801">
    <property type="generic name" value="Lysine Nz-Carboxylic Acid"/>
</dbReference>
<dbReference type="DrugBank" id="DB16232">
    <property type="generic name" value="Milciclib Maleate"/>
</dbReference>
<dbReference type="DrugBank" id="DB05608">
    <property type="generic name" value="MKC-1"/>
</dbReference>
<dbReference type="DrugBank" id="DB04186">
    <property type="generic name" value="N'-(Pyrrolidino[2,1-B]Isoindolin-4-On-8-Yl)-N-(Pyridin-2-Yl)Urea"/>
</dbReference>
<dbReference type="DrugBank" id="DB04101">
    <property type="generic name" value="N'-[4-(2,4-Dimethyl-1,3-thiazol-5-yl)-2-pyrimidinyl]-N-hydroxyimidoformamide"/>
</dbReference>
<dbReference type="DrugBank" id="DB08768">
    <property type="generic name" value="N(6)-dimethylallyladenine"/>
</dbReference>
<dbReference type="DrugBank" id="DB08538">
    <property type="generic name" value="N-((2-aminopyrimidin-5-yl)methyl)-5-(2,6-difluorophenyl)-3-ethylpyrazolo[1,5-a]pyrimidin-7-amine"/>
</dbReference>
<dbReference type="DrugBank" id="DB07790">
    <property type="generic name" value="N-(2-METHOXYETHYL)-4-({4-[2-METHYL-1-(1-METHYLETHYL)-1H-IMIDAZOL-5-YL]PYRIMIDIN-2-YL}AMINO)BENZENESULFONAMIDE"/>
</dbReference>
<dbReference type="DrugBank" id="DB06944">
    <property type="generic name" value="N-(3-cyclopropyl-1H-pyrazol-5-yl)-2-(2-naphthyl)acetamide"/>
</dbReference>
<dbReference type="DrugBank" id="DB08133">
    <property type="generic name" value="N-(4-sulfamoylphenyl)-1H-indazole-3-carboxamide"/>
</dbReference>
<dbReference type="DrugBank" id="DB07936">
    <property type="generic name" value="N-(4-{[(3S)-3-(dimethylamino)pyrrolidin-1-yl]carbonyl}phenyl)-5-fluoro-4-[2-methyl-1-(1-methylethyl)-1H-imidazol-5-yl]pyrimidin-2-amine"/>
</dbReference>
<dbReference type="DrugBank" id="DB02647">
    <property type="generic name" value="N-(5-Cyclopropyl-1h-Pyrazol-3-Yl)Benzamide"/>
</dbReference>
<dbReference type="DrugBank" id="DB08677">
    <property type="generic name" value="N-(5-Isopropyl-thiazol-2-YL)-2-pyridin-3-YL-acetamide"/>
</dbReference>
<dbReference type="DrugBank" id="DB08066">
    <property type="generic name" value="N-[3-(1H-BENZIMIDAZOL-2-YL)-1H-PYRAZOL-4-YL]BENZAMIDE"/>
</dbReference>
<dbReference type="DrugBank" id="DB07562">
    <property type="generic name" value="N-[4-(2,4-DIMETHYL-THIAZOL-5-YL)-PYRIMIDIN-2-YL]-N',N'-DIMETHYL-BENZENE-1,4-DIAMINE"/>
</dbReference>
<dbReference type="DrugBank" id="DB02538">
    <property type="generic name" value="N-[4-(2-Methylimidazo[1,2-a]Pyridin-3-Yl)-2-Pyrimidinyl]Acetamide"/>
</dbReference>
<dbReference type="DrugBank" id="DB07220">
    <property type="generic name" value="N-[5-(1,1-DIOXIDOISOTHIAZOLIDIN-2-YL)-1H-INDAZOL-3-YL]-2-(4-PIPERIDIN-1-YLPHENYL)ACETAMIDE"/>
</dbReference>
<dbReference type="DrugBank" id="DB07164">
    <property type="generic name" value="N-cyclopropyl-4-pyrazolo[1,5-b]pyridazin-3-ylpyrimidin-2-amine"/>
</dbReference>
<dbReference type="DrugBank" id="DB08122">
    <property type="generic name" value="N-Methyl-4-{[(2-oxo-1,2-dihydro-3H-indol-3-ylidene)methyl]amino}benzenesulfonamide"/>
</dbReference>
<dbReference type="DrugBank" id="DB08123">
    <property type="generic name" value="N-methyl-{4-[2-(7-oxo-6,7-dihydro-8H-[1,3]thiazolo[5,4-e]indol-8-ylidene)hydrazino]phenyl}methanesulfonamide"/>
</dbReference>
<dbReference type="DrugBank" id="DB08135">
    <property type="generic name" value="N-phenyl-1H-pyrazole-3-carboxamide"/>
</dbReference>
<dbReference type="DrugBank" id="DB07126">
    <property type="generic name" value="O6-CYCLOHEXYLMETHOXY-2-(4'-SULPHAMOYLANILINO) PURINE"/>
</dbReference>
<dbReference type="DrugBank" id="DB02116">
    <property type="generic name" value="Olomoucine"/>
</dbReference>
<dbReference type="DrugBank" id="DB04662">
    <property type="generic name" value="OLOMOUCINE II"/>
</dbReference>
<dbReference type="DrugBank" id="DB12686">
    <property type="generic name" value="PHA-793887"/>
</dbReference>
<dbReference type="DrugBank" id="DB04607">
    <property type="generic name" value="PHENYLAMINOIMIDAZO(1,2-ALPHA)PYRIDINE"/>
</dbReference>
<dbReference type="DrugBank" id="DB02733">
    <property type="generic name" value="Purvalanol"/>
</dbReference>
<dbReference type="DrugBank" id="DB04751">
    <property type="generic name" value="Purvalanol A"/>
</dbReference>
<dbReference type="DrugBank" id="DB08094">
    <property type="generic name" value="RO-4584820"/>
</dbReference>
<dbReference type="DrugBank" id="DB06195">
    <property type="generic name" value="Seliciclib"/>
</dbReference>
<dbReference type="DrugBank" id="DB05969">
    <property type="generic name" value="SNS-032"/>
</dbReference>
<dbReference type="DrugBank" id="DB02010">
    <property type="generic name" value="Staurosporine"/>
</dbReference>
<dbReference type="DrugBank" id="DB03428">
    <property type="generic name" value="SU9516"/>
</dbReference>
<dbReference type="DrugBank" id="DB04669">
    <property type="generic name" value="TRIAZOLOPYRIMIDINE"/>
</dbReference>
<dbReference type="DrugBank" id="DB15442">
    <property type="generic name" value="Trilaciclib"/>
</dbReference>
<dbReference type="DrugBank" id="DB08694">
    <property type="generic name" value="Variolin B"/>
</dbReference>
<dbReference type="DrugBank" id="DB16656">
    <property type="generic name" value="Zotiraciclib"/>
</dbReference>
<dbReference type="DrugBank" id="DB08138">
    <property type="generic name" value="{[(2,6-difluorophenyl)carbonyl]amino}-N-(4-fluorophenyl)-1H-pyrazole-3-carboxamide"/>
</dbReference>
<dbReference type="DrugCentral" id="P24941"/>
<dbReference type="GuidetoPHARMACOLOGY" id="1973"/>
<dbReference type="GlyGen" id="P24941">
    <property type="glycosylation" value="2 sites, 1 O-linked glycan (1 site)"/>
</dbReference>
<dbReference type="iPTMnet" id="P24941"/>
<dbReference type="PhosphoSitePlus" id="P24941"/>
<dbReference type="SwissPalm" id="P24941"/>
<dbReference type="BioMuta" id="CDK2"/>
<dbReference type="DMDM" id="116051"/>
<dbReference type="CPTAC" id="CPTAC-3191"/>
<dbReference type="CPTAC" id="CPTAC-3192"/>
<dbReference type="CPTAC" id="CPTAC-3193"/>
<dbReference type="CPTAC" id="CPTAC-3194"/>
<dbReference type="jPOST" id="P24941"/>
<dbReference type="MassIVE" id="P24941"/>
<dbReference type="PaxDb" id="9606-ENSP00000266970"/>
<dbReference type="PeptideAtlas" id="P24941"/>
<dbReference type="ProteomicsDB" id="54241">
    <molecule id="P24941-1"/>
</dbReference>
<dbReference type="ProteomicsDB" id="54242">
    <molecule id="P24941-2"/>
</dbReference>
<dbReference type="Pumba" id="P24941"/>
<dbReference type="Antibodypedia" id="3404">
    <property type="antibodies" value="1759 antibodies from 51 providers"/>
</dbReference>
<dbReference type="DNASU" id="1017"/>
<dbReference type="Ensembl" id="ENST00000266970.9">
    <molecule id="P24941-1"/>
    <property type="protein sequence ID" value="ENSP00000266970.4"/>
    <property type="gene ID" value="ENSG00000123374.11"/>
</dbReference>
<dbReference type="Ensembl" id="ENST00000354056.4">
    <molecule id="P24941-2"/>
    <property type="protein sequence ID" value="ENSP00000243067.4"/>
    <property type="gene ID" value="ENSG00000123374.11"/>
</dbReference>
<dbReference type="GeneID" id="1017"/>
<dbReference type="KEGG" id="hsa:1017"/>
<dbReference type="MANE-Select" id="ENST00000266970.9">
    <property type="protein sequence ID" value="ENSP00000266970.4"/>
    <property type="RefSeq nucleotide sequence ID" value="NM_001798.5"/>
    <property type="RefSeq protein sequence ID" value="NP_001789.2"/>
</dbReference>
<dbReference type="UCSC" id="uc001sit.5">
    <molecule id="P24941-1"/>
    <property type="organism name" value="human"/>
</dbReference>
<dbReference type="AGR" id="HGNC:1771"/>
<dbReference type="CTD" id="1017"/>
<dbReference type="DisGeNET" id="1017"/>
<dbReference type="GeneCards" id="CDK2"/>
<dbReference type="HGNC" id="HGNC:1771">
    <property type="gene designation" value="CDK2"/>
</dbReference>
<dbReference type="HPA" id="ENSG00000123374">
    <property type="expression patterns" value="Low tissue specificity"/>
</dbReference>
<dbReference type="MIM" id="116953">
    <property type="type" value="gene"/>
</dbReference>
<dbReference type="neXtProt" id="NX_P24941"/>
<dbReference type="OpenTargets" id="ENSG00000123374"/>
<dbReference type="PharmGKB" id="PA101"/>
<dbReference type="VEuPathDB" id="HostDB:ENSG00000123374"/>
<dbReference type="eggNOG" id="KOG0594">
    <property type="taxonomic scope" value="Eukaryota"/>
</dbReference>
<dbReference type="GeneTree" id="ENSGT00940000159517"/>
<dbReference type="HOGENOM" id="CLU_000288_181_1_1"/>
<dbReference type="InParanoid" id="P24941"/>
<dbReference type="OMA" id="WSLACIY"/>
<dbReference type="OrthoDB" id="1732493at2759"/>
<dbReference type="PAN-GO" id="P24941">
    <property type="GO annotations" value="11 GO annotations based on evolutionary models"/>
</dbReference>
<dbReference type="PhylomeDB" id="P24941"/>
<dbReference type="TreeFam" id="TF101021"/>
<dbReference type="BRENDA" id="2.7.11.22">
    <property type="organism ID" value="2681"/>
</dbReference>
<dbReference type="PathwayCommons" id="P24941"/>
<dbReference type="Reactome" id="R-HSA-1538133">
    <property type="pathway name" value="G0 and Early G1"/>
</dbReference>
<dbReference type="Reactome" id="R-HSA-171319">
    <property type="pathway name" value="Telomere Extension By Telomerase"/>
</dbReference>
<dbReference type="Reactome" id="R-HSA-176187">
    <property type="pathway name" value="Activation of ATR in response to replication stress"/>
</dbReference>
<dbReference type="Reactome" id="R-HSA-176408">
    <property type="pathway name" value="Regulation of APC/C activators between G1/S and early anaphase"/>
</dbReference>
<dbReference type="Reactome" id="R-HSA-187577">
    <property type="pathway name" value="SCF(Skp2)-mediated degradation of p27/p21"/>
</dbReference>
<dbReference type="Reactome" id="R-HSA-2559582">
    <property type="pathway name" value="Senescence-Associated Secretory Phenotype (SASP)"/>
</dbReference>
<dbReference type="Reactome" id="R-HSA-2559586">
    <property type="pathway name" value="DNA Damage/Telomere Stress Induced Senescence"/>
</dbReference>
<dbReference type="Reactome" id="R-HSA-5693607">
    <property type="pathway name" value="Processing of DNA double-strand break ends"/>
</dbReference>
<dbReference type="Reactome" id="R-HSA-6804116">
    <property type="pathway name" value="TP53 Regulates Transcription of Genes Involved in G1 Cell Cycle Arrest"/>
</dbReference>
<dbReference type="Reactome" id="R-HSA-6804756">
    <property type="pathway name" value="Regulation of TP53 Activity through Phosphorylation"/>
</dbReference>
<dbReference type="Reactome" id="R-HSA-6804757">
    <property type="pathway name" value="Regulation of TP53 Degradation"/>
</dbReference>
<dbReference type="Reactome" id="R-HSA-68911">
    <property type="pathway name" value="G2 Phase"/>
</dbReference>
<dbReference type="Reactome" id="R-HSA-68949">
    <property type="pathway name" value="Orc1 removal from chromatin"/>
</dbReference>
<dbReference type="Reactome" id="R-HSA-68962">
    <property type="pathway name" value="Activation of the pre-replicative complex"/>
</dbReference>
<dbReference type="Reactome" id="R-HSA-69017">
    <property type="pathway name" value="CDK-mediated phosphorylation and removal of Cdc6"/>
</dbReference>
<dbReference type="Reactome" id="R-HSA-69200">
    <property type="pathway name" value="Phosphorylation of proteins involved in G1/S transition by active Cyclin E:Cdk2 complexes"/>
</dbReference>
<dbReference type="Reactome" id="R-HSA-69202">
    <property type="pathway name" value="Cyclin E associated events during G1/S transition"/>
</dbReference>
<dbReference type="Reactome" id="R-HSA-69231">
    <property type="pathway name" value="Cyclin D associated events in G1"/>
</dbReference>
<dbReference type="Reactome" id="R-HSA-69273">
    <property type="pathway name" value="Cyclin A/B1/B2 associated events during G2/M transition"/>
</dbReference>
<dbReference type="Reactome" id="R-HSA-69563">
    <property type="pathway name" value="p53-Dependent G1 DNA Damage Response"/>
</dbReference>
<dbReference type="Reactome" id="R-HSA-69656">
    <property type="pathway name" value="Cyclin A:Cdk2-associated events at S phase entry"/>
</dbReference>
<dbReference type="Reactome" id="R-HSA-8849470">
    <property type="pathway name" value="PTK6 Regulates Cell Cycle"/>
</dbReference>
<dbReference type="Reactome" id="R-HSA-912446">
    <property type="pathway name" value="Meiotic recombination"/>
</dbReference>
<dbReference type="Reactome" id="R-HSA-9616222">
    <property type="pathway name" value="Transcriptional regulation of granulopoiesis"/>
</dbReference>
<dbReference type="Reactome" id="R-HSA-9661069">
    <property type="pathway name" value="Defective binding of RB1 mutants to E2F1,(E2F2, E2F3)"/>
</dbReference>
<dbReference type="Reactome" id="R-HSA-9825892">
    <property type="pathway name" value="Regulation of MITF-M-dependent genes involved in cell cycle and proliferation"/>
</dbReference>
<dbReference type="Reactome" id="R-HSA-983231">
    <property type="pathway name" value="Factors involved in megakaryocyte development and platelet production"/>
</dbReference>
<dbReference type="SignaLink" id="P24941"/>
<dbReference type="SIGNOR" id="P24941"/>
<dbReference type="BioGRID-ORCS" id="1017">
    <property type="hits" value="558 hits in 1210 CRISPR screens"/>
</dbReference>
<dbReference type="CD-CODE" id="8C2F96ED">
    <property type="entry name" value="Centrosome"/>
</dbReference>
<dbReference type="CD-CODE" id="91857CE7">
    <property type="entry name" value="Nucleolus"/>
</dbReference>
<dbReference type="CD-CODE" id="DEE660B4">
    <property type="entry name" value="Stress granule"/>
</dbReference>
<dbReference type="ChiTaRS" id="CDK2">
    <property type="organism name" value="human"/>
</dbReference>
<dbReference type="EvolutionaryTrace" id="P24941"/>
<dbReference type="GeneWiki" id="Cyclin-dependent_kinase_2"/>
<dbReference type="GenomeRNAi" id="1017"/>
<dbReference type="Pharos" id="P24941">
    <property type="development level" value="Tchem"/>
</dbReference>
<dbReference type="PRO" id="PR:P24941"/>
<dbReference type="Proteomes" id="UP000005640">
    <property type="component" value="Chromosome 12"/>
</dbReference>
<dbReference type="RNAct" id="P24941">
    <property type="molecule type" value="protein"/>
</dbReference>
<dbReference type="Bgee" id="ENSG00000123374">
    <property type="expression patterns" value="Expressed in ventricular zone and 171 other cell types or tissues"/>
</dbReference>
<dbReference type="ExpressionAtlas" id="P24941">
    <property type="expression patterns" value="baseline and differential"/>
</dbReference>
<dbReference type="GO" id="GO:0015030">
    <property type="term" value="C:Cajal body"/>
    <property type="evidence" value="ECO:0000314"/>
    <property type="project" value="UniProtKB"/>
</dbReference>
<dbReference type="GO" id="GO:0005813">
    <property type="term" value="C:centrosome"/>
    <property type="evidence" value="ECO:0000314"/>
    <property type="project" value="HPA"/>
</dbReference>
<dbReference type="GO" id="GO:0000781">
    <property type="term" value="C:chromosome, telomeric region"/>
    <property type="evidence" value="ECO:0007669"/>
    <property type="project" value="Ensembl"/>
</dbReference>
<dbReference type="GO" id="GO:0000793">
    <property type="term" value="C:condensed chromosome"/>
    <property type="evidence" value="ECO:0007669"/>
    <property type="project" value="Ensembl"/>
</dbReference>
<dbReference type="GO" id="GO:0097123">
    <property type="term" value="C:cyclin A1-CDK2 complex"/>
    <property type="evidence" value="ECO:0000303"/>
    <property type="project" value="ComplexPortal"/>
</dbReference>
<dbReference type="GO" id="GO:0097124">
    <property type="term" value="C:cyclin A2-CDK2 complex"/>
    <property type="evidence" value="ECO:0000314"/>
    <property type="project" value="UniProtKB"/>
</dbReference>
<dbReference type="GO" id="GO:0097134">
    <property type="term" value="C:cyclin E1-CDK2 complex"/>
    <property type="evidence" value="ECO:0000353"/>
    <property type="project" value="ComplexPortal"/>
</dbReference>
<dbReference type="GO" id="GO:0097135">
    <property type="term" value="C:cyclin E2-CDK2 complex"/>
    <property type="evidence" value="ECO:0000353"/>
    <property type="project" value="ComplexPortal"/>
</dbReference>
<dbReference type="GO" id="GO:0000307">
    <property type="term" value="C:cyclin-dependent protein kinase holoenzyme complex"/>
    <property type="evidence" value="ECO:0000314"/>
    <property type="project" value="UniProtKB"/>
</dbReference>
<dbReference type="GO" id="GO:0005737">
    <property type="term" value="C:cytoplasm"/>
    <property type="evidence" value="ECO:0000314"/>
    <property type="project" value="UniProtKB"/>
</dbReference>
<dbReference type="GO" id="GO:0005829">
    <property type="term" value="C:cytosol"/>
    <property type="evidence" value="ECO:0000304"/>
    <property type="project" value="Reactome"/>
</dbReference>
<dbReference type="GO" id="GO:0005768">
    <property type="term" value="C:endosome"/>
    <property type="evidence" value="ECO:0000314"/>
    <property type="project" value="UniProtKB"/>
</dbReference>
<dbReference type="GO" id="GO:0001673">
    <property type="term" value="C:male germ cell nucleus"/>
    <property type="evidence" value="ECO:0007669"/>
    <property type="project" value="Ensembl"/>
</dbReference>
<dbReference type="GO" id="GO:0005635">
    <property type="term" value="C:nuclear envelope"/>
    <property type="evidence" value="ECO:0007669"/>
    <property type="project" value="Ensembl"/>
</dbReference>
<dbReference type="GO" id="GO:0005654">
    <property type="term" value="C:nucleoplasm"/>
    <property type="evidence" value="ECO:0000314"/>
    <property type="project" value="CAFA"/>
</dbReference>
<dbReference type="GO" id="GO:0005634">
    <property type="term" value="C:nucleus"/>
    <property type="evidence" value="ECO:0000314"/>
    <property type="project" value="UniProtKB"/>
</dbReference>
<dbReference type="GO" id="GO:0005667">
    <property type="term" value="C:transcription regulator complex"/>
    <property type="evidence" value="ECO:0007669"/>
    <property type="project" value="Ensembl"/>
</dbReference>
<dbReference type="GO" id="GO:0000805">
    <property type="term" value="C:X chromosome"/>
    <property type="evidence" value="ECO:0007669"/>
    <property type="project" value="Ensembl"/>
</dbReference>
<dbReference type="GO" id="GO:0000806">
    <property type="term" value="C:Y chromosome"/>
    <property type="evidence" value="ECO:0007669"/>
    <property type="project" value="Ensembl"/>
</dbReference>
<dbReference type="GO" id="GO:0005524">
    <property type="term" value="F:ATP binding"/>
    <property type="evidence" value="ECO:0007669"/>
    <property type="project" value="UniProtKB-KW"/>
</dbReference>
<dbReference type="GO" id="GO:0030332">
    <property type="term" value="F:cyclin binding"/>
    <property type="evidence" value="ECO:0000314"/>
    <property type="project" value="UniProtKB"/>
</dbReference>
<dbReference type="GO" id="GO:0097472">
    <property type="term" value="F:cyclin-dependent protein kinase activity"/>
    <property type="evidence" value="ECO:0000314"/>
    <property type="project" value="UniProtKB"/>
</dbReference>
<dbReference type="GO" id="GO:0004693">
    <property type="term" value="F:cyclin-dependent protein serine/threonine kinase activity"/>
    <property type="evidence" value="ECO:0000314"/>
    <property type="project" value="UniProtKB"/>
</dbReference>
<dbReference type="GO" id="GO:0000287">
    <property type="term" value="F:magnesium ion binding"/>
    <property type="evidence" value="ECO:0007669"/>
    <property type="project" value="Ensembl"/>
</dbReference>
<dbReference type="GO" id="GO:0019904">
    <property type="term" value="F:protein domain specific binding"/>
    <property type="evidence" value="ECO:0000353"/>
    <property type="project" value="CAFA"/>
</dbReference>
<dbReference type="GO" id="GO:0106310">
    <property type="term" value="F:protein serine kinase activity"/>
    <property type="evidence" value="ECO:0007669"/>
    <property type="project" value="RHEA"/>
</dbReference>
<dbReference type="GO" id="GO:0004674">
    <property type="term" value="F:protein serine/threonine kinase activity"/>
    <property type="evidence" value="ECO:0000314"/>
    <property type="project" value="UniProtKB"/>
</dbReference>
<dbReference type="GO" id="GO:0051301">
    <property type="term" value="P:cell division"/>
    <property type="evidence" value="ECO:0007669"/>
    <property type="project" value="UniProtKB-KW"/>
</dbReference>
<dbReference type="GO" id="GO:0071732">
    <property type="term" value="P:cellular response to nitric oxide"/>
    <property type="evidence" value="ECO:0000304"/>
    <property type="project" value="UniProtKB"/>
</dbReference>
<dbReference type="GO" id="GO:0090398">
    <property type="term" value="P:cellular senescence"/>
    <property type="evidence" value="ECO:0000304"/>
    <property type="project" value="Reactome"/>
</dbReference>
<dbReference type="GO" id="GO:0007099">
    <property type="term" value="P:centriole replication"/>
    <property type="evidence" value="ECO:0000315"/>
    <property type="project" value="UniProtKB"/>
</dbReference>
<dbReference type="GO" id="GO:0051298">
    <property type="term" value="P:centrosome duplication"/>
    <property type="evidence" value="ECO:0000304"/>
    <property type="project" value="UniProtKB"/>
</dbReference>
<dbReference type="GO" id="GO:0006338">
    <property type="term" value="P:chromatin remodeling"/>
    <property type="evidence" value="ECO:0007669"/>
    <property type="project" value="GOC"/>
</dbReference>
<dbReference type="GO" id="GO:0006281">
    <property type="term" value="P:DNA repair"/>
    <property type="evidence" value="ECO:0007669"/>
    <property type="project" value="UniProtKB-KW"/>
</dbReference>
<dbReference type="GO" id="GO:0006260">
    <property type="term" value="P:DNA replication"/>
    <property type="evidence" value="ECO:0000304"/>
    <property type="project" value="UniProtKB"/>
</dbReference>
<dbReference type="GO" id="GO:0006351">
    <property type="term" value="P:DNA-templated transcription"/>
    <property type="evidence" value="ECO:0007669"/>
    <property type="project" value="Ensembl"/>
</dbReference>
<dbReference type="GO" id="GO:0000082">
    <property type="term" value="P:G1/S transition of mitotic cell cycle"/>
    <property type="evidence" value="ECO:0000318"/>
    <property type="project" value="GO_Central"/>
</dbReference>
<dbReference type="GO" id="GO:0000086">
    <property type="term" value="P:G2/M transition of mitotic cell cycle"/>
    <property type="evidence" value="ECO:0000303"/>
    <property type="project" value="UniProtKB"/>
</dbReference>
<dbReference type="GO" id="GO:0051321">
    <property type="term" value="P:meiotic cell cycle"/>
    <property type="evidence" value="ECO:0000304"/>
    <property type="project" value="UniProtKB"/>
</dbReference>
<dbReference type="GO" id="GO:0031571">
    <property type="term" value="P:mitotic G1 DNA damage checkpoint signaling"/>
    <property type="evidence" value="ECO:0000304"/>
    <property type="project" value="UniProtKB"/>
</dbReference>
<dbReference type="GO" id="GO:0000122">
    <property type="term" value="P:negative regulation of transcription by RNA polymerase II"/>
    <property type="evidence" value="ECO:0007669"/>
    <property type="project" value="Ensembl"/>
</dbReference>
<dbReference type="GO" id="GO:0018105">
    <property type="term" value="P:peptidyl-serine phosphorylation"/>
    <property type="evidence" value="ECO:0000314"/>
    <property type="project" value="UniProtKB"/>
</dbReference>
<dbReference type="GO" id="GO:0008284">
    <property type="term" value="P:positive regulation of cell population proliferation"/>
    <property type="evidence" value="ECO:0000314"/>
    <property type="project" value="UniProtKB"/>
</dbReference>
<dbReference type="GO" id="GO:0045740">
    <property type="term" value="P:positive regulation of DNA replication"/>
    <property type="evidence" value="ECO:0000304"/>
    <property type="project" value="Reactome"/>
</dbReference>
<dbReference type="GO" id="GO:0032298">
    <property type="term" value="P:positive regulation of DNA-templated DNA replication initiation"/>
    <property type="evidence" value="ECO:0007669"/>
    <property type="project" value="Ensembl"/>
</dbReference>
<dbReference type="GO" id="GO:0045893">
    <property type="term" value="P:positive regulation of DNA-templated transcription"/>
    <property type="evidence" value="ECO:0007669"/>
    <property type="project" value="Ensembl"/>
</dbReference>
<dbReference type="GO" id="GO:0031453">
    <property type="term" value="P:positive regulation of heterochromatin formation"/>
    <property type="evidence" value="ECO:0000314"/>
    <property type="project" value="UniProtKB"/>
</dbReference>
<dbReference type="GO" id="GO:0043687">
    <property type="term" value="P:post-translational protein modification"/>
    <property type="evidence" value="ECO:0000314"/>
    <property type="project" value="CAFA"/>
</dbReference>
<dbReference type="GO" id="GO:0006813">
    <property type="term" value="P:potassium ion transport"/>
    <property type="evidence" value="ECO:0007669"/>
    <property type="project" value="Ensembl"/>
</dbReference>
<dbReference type="GO" id="GO:0006468">
    <property type="term" value="P:protein phosphorylation"/>
    <property type="evidence" value="ECO:0000314"/>
    <property type="project" value="UniProtKB"/>
</dbReference>
<dbReference type="GO" id="GO:0007265">
    <property type="term" value="P:Ras protein signal transduction"/>
    <property type="evidence" value="ECO:0000270"/>
    <property type="project" value="BHF-UCL"/>
</dbReference>
<dbReference type="GO" id="GO:1905784">
    <property type="term" value="P:regulation of anaphase-promoting complex-dependent catabolic process"/>
    <property type="evidence" value="ECO:0000304"/>
    <property type="project" value="Reactome"/>
</dbReference>
<dbReference type="GO" id="GO:0010389">
    <property type="term" value="P:regulation of G2/M transition of mitotic cell cycle"/>
    <property type="evidence" value="ECO:0000318"/>
    <property type="project" value="GO_Central"/>
</dbReference>
<dbReference type="GO" id="GO:0010468">
    <property type="term" value="P:regulation of gene expression"/>
    <property type="evidence" value="ECO:0000318"/>
    <property type="project" value="GO_Central"/>
</dbReference>
<dbReference type="GO" id="GO:0007346">
    <property type="term" value="P:regulation of mitotic cell cycle"/>
    <property type="evidence" value="ECO:0000304"/>
    <property type="project" value="Reactome"/>
</dbReference>
<dbReference type="GO" id="GO:0007165">
    <property type="term" value="P:signal transduction"/>
    <property type="evidence" value="ECO:0000318"/>
    <property type="project" value="GO_Central"/>
</dbReference>
<dbReference type="GO" id="GO:0043247">
    <property type="term" value="P:telomere maintenance in response to DNA damage"/>
    <property type="evidence" value="ECO:0000314"/>
    <property type="project" value="UniProt"/>
</dbReference>
<dbReference type="CDD" id="cd07860">
    <property type="entry name" value="STKc_CDK2_3"/>
    <property type="match status" value="1"/>
</dbReference>
<dbReference type="FunFam" id="1.10.510.10:FF:000144">
    <property type="entry name" value="Cyclin-dependent kinase 2"/>
    <property type="match status" value="1"/>
</dbReference>
<dbReference type="FunFam" id="3.30.200.20:FF:000599">
    <property type="entry name" value="Cyclin-dependent kinase 2"/>
    <property type="match status" value="1"/>
</dbReference>
<dbReference type="Gene3D" id="3.30.200.20">
    <property type="entry name" value="Phosphorylase Kinase, domain 1"/>
    <property type="match status" value="1"/>
</dbReference>
<dbReference type="Gene3D" id="1.10.510.10">
    <property type="entry name" value="Transferase(Phosphotransferase) domain 1"/>
    <property type="match status" value="1"/>
</dbReference>
<dbReference type="IDEAL" id="IID00034"/>
<dbReference type="InterPro" id="IPR050108">
    <property type="entry name" value="CDK"/>
</dbReference>
<dbReference type="InterPro" id="IPR011009">
    <property type="entry name" value="Kinase-like_dom_sf"/>
</dbReference>
<dbReference type="InterPro" id="IPR000719">
    <property type="entry name" value="Prot_kinase_dom"/>
</dbReference>
<dbReference type="InterPro" id="IPR017441">
    <property type="entry name" value="Protein_kinase_ATP_BS"/>
</dbReference>
<dbReference type="InterPro" id="IPR008271">
    <property type="entry name" value="Ser/Thr_kinase_AS"/>
</dbReference>
<dbReference type="PANTHER" id="PTHR24056">
    <property type="entry name" value="CELL DIVISION PROTEIN KINASE"/>
    <property type="match status" value="1"/>
</dbReference>
<dbReference type="PANTHER" id="PTHR24056:SF521">
    <property type="entry name" value="CYCLIN-DEPENDENT KINASE 2"/>
    <property type="match status" value="1"/>
</dbReference>
<dbReference type="Pfam" id="PF00069">
    <property type="entry name" value="Pkinase"/>
    <property type="match status" value="1"/>
</dbReference>
<dbReference type="SMART" id="SM00220">
    <property type="entry name" value="S_TKc"/>
    <property type="match status" value="1"/>
</dbReference>
<dbReference type="SUPFAM" id="SSF56112">
    <property type="entry name" value="Protein kinase-like (PK-like)"/>
    <property type="match status" value="1"/>
</dbReference>
<dbReference type="PROSITE" id="PS00107">
    <property type="entry name" value="PROTEIN_KINASE_ATP"/>
    <property type="match status" value="1"/>
</dbReference>
<dbReference type="PROSITE" id="PS50011">
    <property type="entry name" value="PROTEIN_KINASE_DOM"/>
    <property type="match status" value="1"/>
</dbReference>
<dbReference type="PROSITE" id="PS00108">
    <property type="entry name" value="PROTEIN_KINASE_ST"/>
    <property type="match status" value="1"/>
</dbReference>